<gene>
    <name type="primary">GNAI1</name>
</gene>
<proteinExistence type="evidence at protein level"/>
<organism>
    <name type="scientific">Homo sapiens</name>
    <name type="common">Human</name>
    <dbReference type="NCBI Taxonomy" id="9606"/>
    <lineage>
        <taxon>Eukaryota</taxon>
        <taxon>Metazoa</taxon>
        <taxon>Chordata</taxon>
        <taxon>Craniata</taxon>
        <taxon>Vertebrata</taxon>
        <taxon>Euteleostomi</taxon>
        <taxon>Mammalia</taxon>
        <taxon>Eutheria</taxon>
        <taxon>Euarchontoglires</taxon>
        <taxon>Primates</taxon>
        <taxon>Haplorrhini</taxon>
        <taxon>Catarrhini</taxon>
        <taxon>Hominidae</taxon>
        <taxon>Homo</taxon>
    </lineage>
</organism>
<evidence type="ECO:0000250" key="1"/>
<evidence type="ECO:0000250" key="2">
    <source>
        <dbReference type="UniProtKB" id="P10824"/>
    </source>
</evidence>
<evidence type="ECO:0000255" key="3">
    <source>
        <dbReference type="PROSITE-ProRule" id="PRU01230"/>
    </source>
</evidence>
<evidence type="ECO:0000269" key="4">
    <source>
    </source>
</evidence>
<evidence type="ECO:0000269" key="5">
    <source>
    </source>
</evidence>
<evidence type="ECO:0000269" key="6">
    <source>
    </source>
</evidence>
<evidence type="ECO:0000269" key="7">
    <source>
    </source>
</evidence>
<evidence type="ECO:0000269" key="8">
    <source>
    </source>
</evidence>
<evidence type="ECO:0000269" key="9">
    <source>
    </source>
</evidence>
<evidence type="ECO:0000269" key="10">
    <source>
    </source>
</evidence>
<evidence type="ECO:0000269" key="11">
    <source>
    </source>
</evidence>
<evidence type="ECO:0000269" key="12">
    <source>
    </source>
</evidence>
<evidence type="ECO:0000269" key="13">
    <source>
    </source>
</evidence>
<evidence type="ECO:0000269" key="14">
    <source>
    </source>
</evidence>
<evidence type="ECO:0000269" key="15">
    <source>
    </source>
</evidence>
<evidence type="ECO:0000269" key="16">
    <source>
    </source>
</evidence>
<evidence type="ECO:0000269" key="17">
    <source>
    </source>
</evidence>
<evidence type="ECO:0000269" key="18">
    <source>
    </source>
</evidence>
<evidence type="ECO:0000269" key="19">
    <source>
    </source>
</evidence>
<evidence type="ECO:0000269" key="20">
    <source>
    </source>
</evidence>
<evidence type="ECO:0000269" key="21">
    <source>
    </source>
</evidence>
<evidence type="ECO:0000269" key="22">
    <source>
    </source>
</evidence>
<evidence type="ECO:0000269" key="23">
    <source>
    </source>
</evidence>
<evidence type="ECO:0000269" key="24">
    <source>
    </source>
</evidence>
<evidence type="ECO:0000269" key="25">
    <source>
    </source>
</evidence>
<evidence type="ECO:0000269" key="26">
    <source>
    </source>
</evidence>
<evidence type="ECO:0000269" key="27">
    <source>
    </source>
</evidence>
<evidence type="ECO:0000269" key="28">
    <source>
    </source>
</evidence>
<evidence type="ECO:0000269" key="29">
    <source>
    </source>
</evidence>
<evidence type="ECO:0000269" key="30">
    <source>
    </source>
</evidence>
<evidence type="ECO:0000269" key="31">
    <source>
    </source>
</evidence>
<evidence type="ECO:0000269" key="32">
    <source>
    </source>
</evidence>
<evidence type="ECO:0000269" key="33">
    <source>
    </source>
</evidence>
<evidence type="ECO:0000269" key="34">
    <source>
    </source>
</evidence>
<evidence type="ECO:0000269" key="35">
    <source>
    </source>
</evidence>
<evidence type="ECO:0000269" key="36">
    <source>
    </source>
</evidence>
<evidence type="ECO:0000303" key="37">
    <source>
    </source>
</evidence>
<evidence type="ECO:0000305" key="38"/>
<evidence type="ECO:0000312" key="39">
    <source>
        <dbReference type="PDB" id="8JSP"/>
    </source>
</evidence>
<evidence type="ECO:0007744" key="40">
    <source>
        <dbReference type="PDB" id="1KJY"/>
    </source>
</evidence>
<evidence type="ECO:0007744" key="41">
    <source>
        <dbReference type="PDB" id="1Y3A"/>
    </source>
</evidence>
<evidence type="ECO:0007744" key="42">
    <source>
        <dbReference type="PDB" id="2G83"/>
    </source>
</evidence>
<evidence type="ECO:0007744" key="43">
    <source>
        <dbReference type="PDB" id="2GTP"/>
    </source>
</evidence>
<evidence type="ECO:0007744" key="44">
    <source>
        <dbReference type="PDB" id="2IK8"/>
    </source>
</evidence>
<evidence type="ECO:0007744" key="45">
    <source>
        <dbReference type="PDB" id="2OM2"/>
    </source>
</evidence>
<evidence type="ECO:0007744" key="46">
    <source>
        <dbReference type="PDB" id="2XNS"/>
    </source>
</evidence>
<evidence type="ECO:0007744" key="47">
    <source>
        <dbReference type="PDB" id="3ONW"/>
    </source>
</evidence>
<evidence type="ECO:0007744" key="48">
    <source>
        <dbReference type="PDB" id="3QE0"/>
    </source>
</evidence>
<evidence type="ECO:0007744" key="49">
    <source>
        <dbReference type="PDB" id="3QI2"/>
    </source>
</evidence>
<evidence type="ECO:0007744" key="50">
    <source>
        <dbReference type="PDB" id="3UMR"/>
    </source>
</evidence>
<evidence type="ECO:0007744" key="51">
    <source>
        <dbReference type="PDB" id="3UMS"/>
    </source>
</evidence>
<evidence type="ECO:0007744" key="52">
    <source>
        <dbReference type="PDB" id="4G5Q"/>
    </source>
</evidence>
<evidence type="ECO:0007744" key="53">
    <source>
        <dbReference type="PDB" id="6VU8"/>
    </source>
</evidence>
<evidence type="ECO:0007744" key="54">
    <source>
        <dbReference type="PDB" id="7E2X"/>
    </source>
</evidence>
<evidence type="ECO:0007744" key="55">
    <source>
        <dbReference type="PDB" id="7E2Y"/>
    </source>
</evidence>
<evidence type="ECO:0007744" key="56">
    <source>
        <dbReference type="PDB" id="7E2Z"/>
    </source>
</evidence>
<evidence type="ECO:0007744" key="57">
    <source>
        <dbReference type="PDB" id="7E32"/>
    </source>
</evidence>
<evidence type="ECO:0007744" key="58">
    <source>
        <dbReference type="PDB" id="7E33"/>
    </source>
</evidence>
<evidence type="ECO:0007744" key="59">
    <source>
        <dbReference type="PDB" id="7EJX"/>
    </source>
</evidence>
<evidence type="ECO:0007744" key="60">
    <source>
        <dbReference type="PDB" id="7EXD"/>
    </source>
</evidence>
<evidence type="ECO:0007744" key="61">
    <source>
        <dbReference type="PDB" id="7WZ4"/>
    </source>
</evidence>
<evidence type="ECO:0007744" key="62">
    <source>
        <dbReference type="PDB" id="7X5H"/>
    </source>
</evidence>
<evidence type="ECO:0007744" key="63">
    <source>
        <dbReference type="PDB" id="8JLR"/>
    </source>
</evidence>
<evidence type="ECO:0007744" key="64">
    <source>
        <dbReference type="PDB" id="8JSO"/>
    </source>
</evidence>
<evidence type="ECO:0007744" key="65">
    <source>
        <dbReference type="PDB" id="8JT6"/>
    </source>
</evidence>
<evidence type="ECO:0007744" key="66">
    <source>
        <dbReference type="PDB" id="8VY7"/>
    </source>
</evidence>
<evidence type="ECO:0007744" key="67">
    <source>
        <dbReference type="PDB" id="8W8B"/>
    </source>
</evidence>
<evidence type="ECO:0007744" key="68">
    <source>
        <dbReference type="PDB" id="8WC8"/>
    </source>
</evidence>
<evidence type="ECO:0007744" key="69">
    <source>
        <dbReference type="PDB" id="8WCA"/>
    </source>
</evidence>
<evidence type="ECO:0007744" key="70">
    <source>
        <dbReference type="PDB" id="8XQN"/>
    </source>
</evidence>
<evidence type="ECO:0007744" key="71">
    <source>
        <dbReference type="PDB" id="8XQO"/>
    </source>
</evidence>
<evidence type="ECO:0007744" key="72">
    <source>
        <dbReference type="PDB" id="8XQS"/>
    </source>
</evidence>
<evidence type="ECO:0007744" key="73">
    <source>
        <dbReference type="PDB" id="8XQT"/>
    </source>
</evidence>
<evidence type="ECO:0007829" key="74">
    <source>
        <dbReference type="PDB" id="2G83"/>
    </source>
</evidence>
<evidence type="ECO:0007829" key="75">
    <source>
        <dbReference type="PDB" id="3UMR"/>
    </source>
</evidence>
<evidence type="ECO:0007829" key="76">
    <source>
        <dbReference type="PDB" id="4G5Q"/>
    </source>
</evidence>
<evidence type="ECO:0007829" key="77">
    <source>
        <dbReference type="PDB" id="6CRK"/>
    </source>
</evidence>
<evidence type="ECO:0007829" key="78">
    <source>
        <dbReference type="PDB" id="7F1S"/>
    </source>
</evidence>
<evidence type="ECO:0007829" key="79">
    <source>
        <dbReference type="PDB" id="7S8M"/>
    </source>
</evidence>
<evidence type="ECO:0007829" key="80">
    <source>
        <dbReference type="PDB" id="7TRQ"/>
    </source>
</evidence>
<evidence type="ECO:0007829" key="81">
    <source>
        <dbReference type="PDB" id="8J18"/>
    </source>
</evidence>
<evidence type="ECO:0007829" key="82">
    <source>
        <dbReference type="PDB" id="8YN9"/>
    </source>
</evidence>
<feature type="initiator methionine" description="Removed" evidence="11 17">
    <location>
        <position position="1"/>
    </location>
</feature>
<feature type="chain" id="PRO_0000203671" description="Guanine nucleotide-binding protein G(i) subunit alpha-1">
    <location>
        <begin position="2"/>
        <end position="354"/>
    </location>
</feature>
<feature type="domain" description="G-alpha" evidence="3">
    <location>
        <begin position="32"/>
        <end position="354"/>
    </location>
</feature>
<feature type="region of interest" description="G1 motif" evidence="3">
    <location>
        <begin position="35"/>
        <end position="48"/>
    </location>
</feature>
<feature type="region of interest" description="G2 motif" evidence="3">
    <location>
        <begin position="173"/>
        <end position="181"/>
    </location>
</feature>
<feature type="region of interest" description="G3 motif" evidence="3">
    <location>
        <begin position="196"/>
        <end position="205"/>
    </location>
</feature>
<feature type="region of interest" description="G4 motif" evidence="3">
    <location>
        <begin position="265"/>
        <end position="272"/>
    </location>
</feature>
<feature type="region of interest" description="G5 motif" evidence="3">
    <location>
        <begin position="324"/>
        <end position="329"/>
    </location>
</feature>
<feature type="binding site" evidence="12 40 41 42 43 44 45 46 47 48 49 50 51 52">
    <location>
        <begin position="43"/>
        <end position="48"/>
    </location>
    <ligand>
        <name>GTP</name>
        <dbReference type="ChEBI" id="CHEBI:37565"/>
    </ligand>
</feature>
<feature type="binding site" evidence="9 14 48">
    <location>
        <position position="47"/>
    </location>
    <ligand>
        <name>Mg(2+)</name>
        <dbReference type="ChEBI" id="CHEBI:18420"/>
    </ligand>
</feature>
<feature type="binding site" evidence="40 45 46 47 48 49 52">
    <location>
        <position position="151"/>
    </location>
    <ligand>
        <name>GTP</name>
        <dbReference type="ChEBI" id="CHEBI:37565"/>
    </ligand>
</feature>
<feature type="binding site" evidence="40 41 42 43 44 45 46 47 48 49 50 51 52">
    <location>
        <begin position="175"/>
        <end position="181"/>
    </location>
    <ligand>
        <name>GTP</name>
        <dbReference type="ChEBI" id="CHEBI:37565"/>
    </ligand>
</feature>
<feature type="binding site" evidence="9 14 48">
    <location>
        <position position="181"/>
    </location>
    <ligand>
        <name>Mg(2+)</name>
        <dbReference type="ChEBI" id="CHEBI:18420"/>
    </ligand>
</feature>
<feature type="binding site" evidence="12">
    <location>
        <begin position="200"/>
        <end position="204"/>
    </location>
    <ligand>
        <name>GTP</name>
        <dbReference type="ChEBI" id="CHEBI:37565"/>
    </ligand>
</feature>
<feature type="binding site" evidence="12 40 41 42 43 44 45 46 47 48 49 50 51 52">
    <location>
        <begin position="269"/>
        <end position="272"/>
    </location>
    <ligand>
        <name>GTP</name>
        <dbReference type="ChEBI" id="CHEBI:37565"/>
    </ligand>
</feature>
<feature type="binding site" evidence="41 42 43 44 45 47 48 49 50 51 52">
    <location>
        <position position="326"/>
    </location>
    <ligand>
        <name>GTP</name>
        <dbReference type="ChEBI" id="CHEBI:37565"/>
    </ligand>
</feature>
<feature type="modified residue" description="ADP-ribosylarginine; by cholera toxin" evidence="1">
    <location>
        <position position="178"/>
    </location>
</feature>
<feature type="modified residue" description="Deamidated glutamine; by Photorhabdus PAU_02230" evidence="16">
    <location>
        <position position="204"/>
    </location>
</feature>
<feature type="modified residue" description="ADP-ribosylcysteine; by pertussis toxin" evidence="1">
    <location>
        <position position="351"/>
    </location>
</feature>
<feature type="lipid moiety-binding region" description="N-myristoyl glycine" evidence="11 17">
    <location>
        <position position="2"/>
    </location>
</feature>
<feature type="lipid moiety-binding region" description="S-palmitoyl cysteine" evidence="2">
    <location>
        <position position="3"/>
    </location>
</feature>
<feature type="splice variant" id="VSP_045215" description="In isoform 2." evidence="37">
    <location>
        <begin position="1"/>
        <end position="52"/>
    </location>
</feature>
<feature type="sequence variant" id="VAR_087204" description="In NEDHISB." evidence="21">
    <original>G</original>
    <variation>C</variation>
    <location>
        <position position="40"/>
    </location>
</feature>
<feature type="sequence variant" id="VAR_087205" description="In NEDHISB." evidence="21">
    <original>G</original>
    <variation>R</variation>
    <location>
        <position position="40"/>
    </location>
</feature>
<feature type="sequence variant" id="VAR_087206" description="In NEDHISB." evidence="21">
    <original>G</original>
    <variation>D</variation>
    <location>
        <position position="45"/>
    </location>
</feature>
<feature type="sequence variant" id="VAR_087207" description="In NEDHISB." evidence="21">
    <original>T</original>
    <variation>I</variation>
    <location>
        <position position="48"/>
    </location>
</feature>
<feature type="sequence variant" id="VAR_087208" description="In NEDHISB." evidence="21">
    <original>T</original>
    <variation>K</variation>
    <location>
        <position position="48"/>
    </location>
</feature>
<feature type="sequence variant" id="VAR_087209" description="In NEDHISB; loss of GTP binding." evidence="21 24">
    <original>Q</original>
    <variation>P</variation>
    <location>
        <position position="52"/>
    </location>
</feature>
<feature type="sequence variant" id="VAR_087210" description="In NEDHISB; uncertain significance." evidence="21">
    <location>
        <position position="75"/>
    </location>
</feature>
<feature type="sequence variant" id="VAR_087211" description="In NEDHISB." evidence="21">
    <location>
        <position position="172"/>
    </location>
</feature>
<feature type="sequence variant" id="VAR_087212" description="In NEDHISB." evidence="21">
    <original>D</original>
    <variation>V</variation>
    <location>
        <position position="173"/>
    </location>
</feature>
<feature type="sequence variant" id="VAR_087213" description="In NEDHISB; uncertain significance." evidence="21">
    <location>
        <begin position="186"/>
        <end position="189"/>
    </location>
</feature>
<feature type="sequence variant" id="VAR_087214" description="In NEDHISB." evidence="21">
    <original>C</original>
    <variation>Y</variation>
    <location>
        <position position="224"/>
    </location>
</feature>
<feature type="sequence variant" id="VAR_087215" description="In NEDHISB." evidence="21">
    <original>K</original>
    <variation>N</variation>
    <location>
        <position position="270"/>
    </location>
</feature>
<feature type="sequence variant" id="VAR_087216" description="In NEDHISB." evidence="21">
    <original>K</original>
    <variation>R</variation>
    <location>
        <position position="270"/>
    </location>
</feature>
<feature type="sequence variant" id="VAR_087217" description="In NEDHISB." evidence="25">
    <original>D</original>
    <variation>G</variation>
    <location>
        <position position="272"/>
    </location>
</feature>
<feature type="sequence variant" id="VAR_087218" description="In NEDHISB." evidence="21">
    <original>A</original>
    <variation>P</variation>
    <location>
        <position position="326"/>
    </location>
</feature>
<feature type="sequence variant" id="VAR_087219" description="In NEDHISB; uncertain significance." evidence="21">
    <original>V</original>
    <variation>E</variation>
    <location>
        <position position="332"/>
    </location>
</feature>
<feature type="mutagenesis site" description="Abolishes switch to an activated conformation and dissociation from beta and gamma subunits upon GTP binding. Abolishes interaction with RGS family members." evidence="14">
    <original>G</original>
    <variation>R</variation>
    <location>
        <position position="42"/>
    </location>
</feature>
<feature type="mutagenesis site" description="Enhances interaction (inactive GDP-bound) with RGS14." evidence="7 12">
    <original>E</original>
    <variation>L</variation>
    <location>
        <position position="116"/>
    </location>
</feature>
<feature type="mutagenesis site" description="Enhances interaction (inactive GDP-bound) with RGS14." evidence="7 12">
    <original>Q</original>
    <variation>L</variation>
    <location>
        <position position="147"/>
    </location>
</feature>
<feature type="mutagenesis site" description="Enhances interaction (inactive GDP-bound) with RGS14." evidence="12">
    <original>E</original>
    <variation>L</variation>
    <location>
        <position position="245"/>
    </location>
</feature>
<feature type="sequence conflict" description="In Ref. 3; CAB43212." evidence="38" ref="3">
    <original>A</original>
    <variation>G</variation>
    <location>
        <position position="138"/>
    </location>
</feature>
<feature type="sequence conflict" description="In Ref. 8; AAH26326." evidence="38" ref="8">
    <original>T</original>
    <variation>A</variation>
    <location>
        <position position="219"/>
    </location>
</feature>
<feature type="sequence conflict" description="In Ref. 4; AAV38580." evidence="38" ref="4">
    <original>H</original>
    <variation>Y</variation>
    <location>
        <position position="244"/>
    </location>
</feature>
<feature type="sequence conflict" description="In Ref. 4; AAV38580." evidence="38" ref="4">
    <original>L</original>
    <variation>M</variation>
    <location>
        <position position="249"/>
    </location>
</feature>
<feature type="sequence conflict" description="In Ref. 8; AAH26326." evidence="38" ref="8">
    <original>P</original>
    <variation>Q</variation>
    <location>
        <position position="288"/>
    </location>
</feature>
<feature type="helix" evidence="77">
    <location>
        <begin position="7"/>
        <end position="31"/>
    </location>
</feature>
<feature type="strand" evidence="77">
    <location>
        <begin position="33"/>
        <end position="41"/>
    </location>
</feature>
<feature type="turn" evidence="79">
    <location>
        <begin position="42"/>
        <end position="44"/>
    </location>
</feature>
<feature type="helix" evidence="77">
    <location>
        <begin position="46"/>
        <end position="57"/>
    </location>
</feature>
<feature type="helix" evidence="77">
    <location>
        <begin position="63"/>
        <end position="67"/>
    </location>
</feature>
<feature type="helix" evidence="77">
    <location>
        <begin position="70"/>
        <end position="91"/>
    </location>
</feature>
<feature type="helix" evidence="77">
    <location>
        <begin position="100"/>
        <end position="110"/>
    </location>
</feature>
<feature type="turn" evidence="76">
    <location>
        <begin position="111"/>
        <end position="114"/>
    </location>
</feature>
<feature type="strand" evidence="77">
    <location>
        <begin position="115"/>
        <end position="117"/>
    </location>
</feature>
<feature type="helix" evidence="77">
    <location>
        <begin position="121"/>
        <end position="132"/>
    </location>
</feature>
<feature type="helix" evidence="77">
    <location>
        <begin position="134"/>
        <end position="140"/>
    </location>
</feature>
<feature type="helix" evidence="77">
    <location>
        <begin position="141"/>
        <end position="145"/>
    </location>
</feature>
<feature type="helix" evidence="77">
    <location>
        <begin position="152"/>
        <end position="156"/>
    </location>
</feature>
<feature type="helix" evidence="77">
    <location>
        <begin position="159"/>
        <end position="163"/>
    </location>
</feature>
<feature type="strand" evidence="74">
    <location>
        <begin position="164"/>
        <end position="166"/>
    </location>
</feature>
<feature type="helix" evidence="77">
    <location>
        <begin position="171"/>
        <end position="175"/>
    </location>
</feature>
<feature type="strand" evidence="77">
    <location>
        <begin position="183"/>
        <end position="191"/>
    </location>
</feature>
<feature type="strand" evidence="77">
    <location>
        <begin position="194"/>
        <end position="203"/>
    </location>
</feature>
<feature type="helix" evidence="77">
    <location>
        <begin position="208"/>
        <end position="211"/>
    </location>
</feature>
<feature type="helix" evidence="77">
    <location>
        <begin position="212"/>
        <end position="215"/>
    </location>
</feature>
<feature type="strand" evidence="77">
    <location>
        <begin position="219"/>
        <end position="226"/>
    </location>
</feature>
<feature type="helix" evidence="77">
    <location>
        <begin position="227"/>
        <end position="231"/>
    </location>
</feature>
<feature type="turn" evidence="82">
    <location>
        <begin position="235"/>
        <end position="237"/>
    </location>
</feature>
<feature type="strand" evidence="82">
    <location>
        <begin position="238"/>
        <end position="241"/>
    </location>
</feature>
<feature type="helix" evidence="77">
    <location>
        <begin position="242"/>
        <end position="254"/>
    </location>
</feature>
<feature type="helix" evidence="77">
    <location>
        <begin position="257"/>
        <end position="259"/>
    </location>
</feature>
<feature type="strand" evidence="77">
    <location>
        <begin position="262"/>
        <end position="269"/>
    </location>
</feature>
<feature type="helix" evidence="77">
    <location>
        <begin position="271"/>
        <end position="277"/>
    </location>
</feature>
<feature type="turn" evidence="77">
    <location>
        <begin position="278"/>
        <end position="280"/>
    </location>
</feature>
<feature type="helix" evidence="77">
    <location>
        <begin position="283"/>
        <end position="285"/>
    </location>
</feature>
<feature type="strand" evidence="81">
    <location>
        <begin position="287"/>
        <end position="289"/>
    </location>
</feature>
<feature type="turn" evidence="78">
    <location>
        <begin position="292"/>
        <end position="294"/>
    </location>
</feature>
<feature type="helix" evidence="77">
    <location>
        <begin position="296"/>
        <end position="308"/>
    </location>
</feature>
<feature type="turn" evidence="77">
    <location>
        <begin position="312"/>
        <end position="316"/>
    </location>
</feature>
<feature type="strand" evidence="77">
    <location>
        <begin position="319"/>
        <end position="323"/>
    </location>
</feature>
<feature type="strand" evidence="80">
    <location>
        <begin position="326"/>
        <end position="328"/>
    </location>
</feature>
<feature type="helix" evidence="77">
    <location>
        <begin position="329"/>
        <end position="346"/>
    </location>
</feature>
<feature type="helix" evidence="75">
    <location>
        <begin position="348"/>
        <end position="350"/>
    </location>
</feature>
<keyword id="KW-0002">3D-structure</keyword>
<keyword id="KW-0013">ADP-ribosylation</keyword>
<keyword id="KW-0025">Alternative splicing</keyword>
<keyword id="KW-0131">Cell cycle</keyword>
<keyword id="KW-0132">Cell division</keyword>
<keyword id="KW-1003">Cell membrane</keyword>
<keyword id="KW-0963">Cytoplasm</keyword>
<keyword id="KW-0206">Cytoskeleton</keyword>
<keyword id="KW-0903">Direct protein sequencing</keyword>
<keyword id="KW-0225">Disease variant</keyword>
<keyword id="KW-0887">Epilepsy</keyword>
<keyword id="KW-0342">GTP-binding</keyword>
<keyword id="KW-0945">Host-virus interaction</keyword>
<keyword id="KW-0378">Hydrolase</keyword>
<keyword id="KW-0991">Intellectual disability</keyword>
<keyword id="KW-0449">Lipoprotein</keyword>
<keyword id="KW-0460">Magnesium</keyword>
<keyword id="KW-0472">Membrane</keyword>
<keyword id="KW-0479">Metal-binding</keyword>
<keyword id="KW-0498">Mitosis</keyword>
<keyword id="KW-0519">Myristate</keyword>
<keyword id="KW-0547">Nucleotide-binding</keyword>
<keyword id="KW-0539">Nucleus</keyword>
<keyword id="KW-0564">Palmitate</keyword>
<keyword id="KW-1267">Proteomics identification</keyword>
<keyword id="KW-1185">Reference proteome</keyword>
<keyword id="KW-0807">Transducer</keyword>
<keyword id="KW-0813">Transport</keyword>
<sequence>MGCTLSAEDKAAVERSKMIDRNLREDGEKAAREVKLLLLGAGESGKSTIVKQMKIIHEAGYSEEECKQYKAVVYSNTIQSIIAIIRAMGRLKIDFGDSARADDARQLFVLAGAAEEGFMTAELAGVIKRLWKDSGVQACFNRSREYQLNDSAAYYLNDLDRIAQPNYIPTQQDVLRTRVKTTGIVETHFTFKDLHFKMFDVGGQRSERKKWIHCFEGVTAIIFCVALSDYDLVLAEDEEMNRMHESMKLFDSICNNKWFTDTSIILFLNKKDLFEEKIKKSPLTICYPEYAGSNTYEEAAAYIQCQFEDLNKRKDTKEIYTHFTCATDTKNVQFVFDAVTDVIIKNNLKDCGLF</sequence>
<comment type="function">
    <text evidence="2 8 9 13 22 23 27 28 29 30 31 34 35 36">Guanine nucleotide-binding proteins (G proteins) function as transducers downstream of G protein-coupled receptors (GPCRs) in numerous signaling cascades (PubMed:18434541, PubMed:33762731, PubMed:34239069, PubMed:35610220, PubMed:37935376, PubMed:37935377, PubMed:37963465, PubMed:38552625, PubMed:8774883, PubMed:38918398). The alpha chain contains the guanine nucleotide binding site and alternates between an active, GTP-bound state and an inactive, GDP-bound state (PubMed:18434541, PubMed:8774883). Signaling by an activated GPCR promotes GDP release and GTP binding (PubMed:18434541, PubMed:8774883). The alpha subunit has a low GTPase activity that converts bound GTP to GDP, thereby terminating the signal (PubMed:18434541, PubMed:8774883). Both GDP release and GTP hydrolysis are modulated by numerous regulatory proteins (PubMed:18434541, PubMed:8774883). Signaling is mediated via effector proteins, such as adenylate cyclase: inhibits adenylate cyclase activity of ADCY1, ADCY5 and ADCY6, leading to decreased intracellular cAMP levels (PubMed:8119955). The inactive GDP-bound form prevents the association of RGS14 with centrosomes and is required for the translocation of RGS14 from the cytoplasm to the plasma membrane. Required for normal cytokinesis during mitosis (PubMed:17635935). Required for cortical dynein-dynactin complex recruitment during metaphase (PubMed:22327364).</text>
</comment>
<comment type="catalytic activity">
    <reaction evidence="22">
        <text>GTP + H2O = GDP + phosphate + H(+)</text>
        <dbReference type="Rhea" id="RHEA:19669"/>
        <dbReference type="ChEBI" id="CHEBI:15377"/>
        <dbReference type="ChEBI" id="CHEBI:15378"/>
        <dbReference type="ChEBI" id="CHEBI:37565"/>
        <dbReference type="ChEBI" id="CHEBI:43474"/>
        <dbReference type="ChEBI" id="CHEBI:58189"/>
    </reaction>
    <physiologicalReaction direction="left-to-right" evidence="22">
        <dbReference type="Rhea" id="RHEA:19670"/>
    </physiologicalReaction>
</comment>
<comment type="subunit">
    <text evidence="2 4 5 6 9 10 12 14 15 18 19 20 22 23 27 28 29 30 31 32 33 34 36">Heterotrimeric G proteins are composed of 3 units; alpha, beta and gamma (PubMed:33762731, PubMed:34239069, PubMed:35610220, PubMed:37935376, PubMed:37935377, PubMed:37963465, PubMed:38552625). Part of a spindle orientation complex at least composed of GNAI1, GPSM2 and NUMA1 (PubMed:26766442). The alpha chain contains the guanine nucleotide binding site. Identified in complex with the beta subunit GNB1 and the gamma subunit GNG1 (PubMed:22383884). Identified in complex with the beta subunit GNB1 and the gamma subunit GNG2 (PubMed:18434541). Component of the TAS2R14-GNAI1 complex, consisting of TAS2R14, GNAI1, GNB1 and GNG2; within the complex interacts with TAS2R14; this complex plays a role in the perception of bitterness (PubMed:38600377, PubMed:38776963). GTP binding causes dissociation of the heterotrimer, liberating the individual subunits so that they can interact with downstream effector proteins (PubMed:22383884). Interacts (GDP-bound form) with GPSM1; this inhibits guanine nucleotide exchange and GTP binding (By similarity). Interacts (GDP-bound form) with GPSM2 (via GoLoco domains); this inhibits guanine nucleotide exchange (PubMed:22952234). Interacts with RGS10; this strongly enhances GTP hydrolysis (PubMed:18434541, PubMed:8774883). Interacts with RGS1 and RGS16; this strongly enhances GTPase activity (PubMed:18434541). Interacts with RGS4 (PubMed:18434541). Interacts with RGS12 (PubMed:18434541). Interacts (via active GTP- or inactive GDP-bound forms) with RGS14 (via RGS and GoLoco domains) (PubMed:11976690, PubMed:18434541, PubMed:21115486, PubMed:22383884). Interacts with RGS3, RGS6, RGS7, RGS8, RGS17, RGS18 and RGS20 (in vitro) (PubMed:18434541). Interacts (GDP-bound form) with RIC8A (via C-terminus); promoting GNAI1 folding and association with the plasma membrane (PubMed:32126208). Interacts (inactive GDP-bound form) with NUCB1 (via GBA motif); the interaction leads to activation of GNAI1 (By similarity). Interacts (inactive GDP-bound form) with CCDC88C/DAPLE (via GBA motif); the interaction leads to activation of GNAI1 (PubMed:26126266). Interacts (inactive GDP-bound form) with CCDC8A/GIV (via GBA motif) (PubMed:19211784). Interacts with GPR15 (PubMed:38918398).</text>
</comment>
<comment type="subunit">
    <text evidence="26">(Microbial infection) Interacts with human cytomegalovirus (HHV-5) US27; this interaction this interaction does not lead to the catalytic activation of Gi complex and probably interferes with the chemokine-Gi signaling.</text>
</comment>
<comment type="subunit">
    <text evidence="26">(Microbial infection) Interacts with human cytomegalovirus (HHV-5) US28; this interaction does not lead to the catalytic activation of Gi complex and probably interferes with the chemokine-Gi signaling.</text>
</comment>
<comment type="interaction">
    <interactant intactId="EBI-618639">
        <id>P63096</id>
    </interactant>
    <interactant intactId="EBI-618655">
        <id>P81274</id>
        <label>GPSM2</label>
    </interactant>
    <organismsDiffer>false</organismsDiffer>
    <experiments>3</experiments>
</comment>
<comment type="interaction">
    <interactant intactId="EBI-618639">
        <id>P63096</id>
    </interactant>
    <interactant intactId="EBI-347538">
        <id>Q9Y4H4</id>
        <label>GPSM3</label>
    </interactant>
    <organismsDiffer>false</organismsDiffer>
    <experiments>10</experiments>
</comment>
<comment type="interaction">
    <interactant intactId="EBI-618639">
        <id>P63096</id>
    </interactant>
    <interactant intactId="EBI-521611">
        <id>Q14980</id>
        <label>NUMA1</label>
    </interactant>
    <organismsDiffer>false</organismsDiffer>
    <experiments>4</experiments>
</comment>
<comment type="interaction">
    <interactant intactId="EBI-618639">
        <id>P63096</id>
    </interactant>
    <interactant intactId="EBI-12250122">
        <id>Q8IVA1</id>
        <label>PCP2</label>
    </interactant>
    <organismsDiffer>false</organismsDiffer>
    <experiments>6</experiments>
</comment>
<comment type="interaction">
    <interactant intactId="EBI-618639">
        <id>P63096</id>
    </interactant>
    <interactant intactId="EBI-750603">
        <id>O43566</id>
        <label>RGS14</label>
    </interactant>
    <organismsDiffer>false</organismsDiffer>
    <experiments>3</experiments>
</comment>
<comment type="interaction">
    <interactant intactId="EBI-618639">
        <id>P63096</id>
    </interactant>
    <interactant intactId="EBI-3918154">
        <id>Q9UGC6</id>
        <label>RGS17</label>
    </interactant>
    <organismsDiffer>false</organismsDiffer>
    <experiments>3</experiments>
</comment>
<comment type="interaction">
    <interactant intactId="EBI-618639">
        <id>P63096</id>
    </interactant>
    <interactant intactId="EBI-717509">
        <id>Q9NPQ8</id>
        <label>RIC8A</label>
    </interactant>
    <organismsDiffer>false</organismsDiffer>
    <experiments>3</experiments>
</comment>
<comment type="subcellular location">
    <subcellularLocation>
        <location evidence="2">Nucleus</location>
    </subcellularLocation>
    <subcellularLocation>
        <location evidence="8">Cytoplasm</location>
    </subcellularLocation>
    <subcellularLocation>
        <location evidence="8 19">Cell membrane</location>
        <topology evidence="2">Peripheral membrane protein</topology>
        <orientation evidence="2">Cytoplasmic side</orientation>
    </subcellularLocation>
    <subcellularLocation>
        <location evidence="8">Cytoplasm</location>
        <location evidence="8">Cytoskeleton</location>
        <location evidence="8">Microtubule organizing center</location>
        <location evidence="8">Centrosome</location>
    </subcellularLocation>
    <subcellularLocation>
        <location evidence="13">Cytoplasm</location>
        <location evidence="13">Cell cortex</location>
    </subcellularLocation>
    <subcellularLocation>
        <location evidence="2">Membrane</location>
        <topology evidence="11 17">Lipid-anchor</topology>
    </subcellularLocation>
    <text evidence="2 8">Localizes in the centrosomes of interphase and mitotic cells, but not in centrosomes during cytokinesis. Detected at the cleavage furrow or the midbody (PubMed:17635935). Localized at the plasma membrane throughout mitosis. Colocalizes with RIC8A and RGS14 at the plasma membrane.</text>
</comment>
<comment type="alternative products">
    <event type="alternative splicing"/>
    <isoform>
        <id>P63096-1</id>
        <name>1</name>
        <sequence type="displayed"/>
    </isoform>
    <isoform>
        <id>P63096-2</id>
        <name>2</name>
        <sequence type="described" ref="VSP_045215"/>
    </isoform>
</comment>
<comment type="PTM">
    <text evidence="2">Myristoylation at Gly-2 is required for membrane anchoring before palmitoylation.</text>
</comment>
<comment type="PTM">
    <text evidence="2">Palmitoylation at Cys-3 varies with membrane lipid composition.</text>
</comment>
<comment type="PTM">
    <text evidence="16">(Microbial infection) Deamidated at Gln-204 by Photorhabdus asymbiotica toxin PAU_02230, blocking GTP hydrolysis of heterotrimeric GNAQ or GNA11 and G-alphai (GNAI1, GNAI2 or GNAI3) proteins, thereby activating RhoA.</text>
</comment>
<comment type="disease" evidence="21 24 25">
    <disease id="DI-06412">
        <name>Neurodevelopmental disorder with hypotonia, impaired speech, and behavioral abnormalities</name>
        <acronym>NEDHISB</acronym>
        <description>An autosomal dominant disorder characterized by global developmental delay, impaired intellectual development, delayed or absent speech, hypotonia, behavioral abnormalities, and epilepsy that ranges from self-limiting to intractable. More variable features include non-specific dysmorphic facial features, distal skeletal anomalies, and brain imaging abnormalities.</description>
        <dbReference type="MIM" id="619854"/>
    </disease>
    <text>The disease is caused by variants affecting the gene represented in this entry.</text>
</comment>
<comment type="similarity">
    <text evidence="38">Belongs to the G-alpha family. G(i/o/t/z) subfamily.</text>
</comment>
<name>GNAI1_HUMAN</name>
<accession>P63096</accession>
<accession>A8KA88</accession>
<accession>B4E2V1</accession>
<accession>C9J3A4</accession>
<accession>P04898</accession>
<accession>P11015</accession>
<accession>P31871</accession>
<accession>Q5U074</accession>
<accession>Q8TAN5</accession>
<accession>Q9UGA4</accession>
<reference key="1">
    <citation type="submission" date="2002-03" db="EMBL/GenBank/DDBJ databases">
        <title>cDNA clones of human proteins involved in signal transduction sequenced by the Guthrie cDNA resource center (www.cdna.org).</title>
        <authorList>
            <person name="Puhl H.L. III"/>
            <person name="Ikeda S.R."/>
            <person name="Aronstam R.S."/>
        </authorList>
    </citation>
    <scope>NUCLEOTIDE SEQUENCE [LARGE SCALE MRNA] (ISOFORM 1)</scope>
</reference>
<reference key="2">
    <citation type="submission" date="1998-03" db="EMBL/GenBank/DDBJ databases">
        <authorList>
            <person name="Yu W."/>
            <person name="Gibbs R.A."/>
        </authorList>
    </citation>
    <scope>NUCLEOTIDE SEQUENCE [LARGE SCALE MRNA] (ISOFORM 1)</scope>
    <source>
        <tissue>Brain</tissue>
    </source>
</reference>
<reference key="3">
    <citation type="journal article" date="2001" name="Genome Res.">
        <title>Towards a catalog of human genes and proteins: sequencing and analysis of 500 novel complete protein coding human cDNAs.</title>
        <authorList>
            <person name="Wiemann S."/>
            <person name="Weil B."/>
            <person name="Wellenreuther R."/>
            <person name="Gassenhuber J."/>
            <person name="Glassl S."/>
            <person name="Ansorge W."/>
            <person name="Boecher M."/>
            <person name="Bloecker H."/>
            <person name="Bauersachs S."/>
            <person name="Blum H."/>
            <person name="Lauber J."/>
            <person name="Duesterhoeft A."/>
            <person name="Beyer A."/>
            <person name="Koehrer K."/>
            <person name="Strack N."/>
            <person name="Mewes H.-W."/>
            <person name="Ottenwaelder B."/>
            <person name="Obermaier B."/>
            <person name="Tampe J."/>
            <person name="Heubner D."/>
            <person name="Wambutt R."/>
            <person name="Korn B."/>
            <person name="Klein M."/>
            <person name="Poustka A."/>
        </authorList>
    </citation>
    <scope>NUCLEOTIDE SEQUENCE [LARGE SCALE MRNA] (ISOFORM 1)</scope>
    <source>
        <tissue>Brain</tissue>
    </source>
</reference>
<reference key="4">
    <citation type="submission" date="2004-10" db="EMBL/GenBank/DDBJ databases">
        <title>Cloning of human full-length CDSs in BD Creator(TM) system donor vector.</title>
        <authorList>
            <person name="Kalnine N."/>
            <person name="Chen X."/>
            <person name="Rolfs A."/>
            <person name="Halleck A."/>
            <person name="Hines L."/>
            <person name="Eisenstein S."/>
            <person name="Koundinya M."/>
            <person name="Raphael J."/>
            <person name="Moreira D."/>
            <person name="Kelley T."/>
            <person name="LaBaer J."/>
            <person name="Lin Y."/>
            <person name="Phelan M."/>
            <person name="Farmer A."/>
        </authorList>
    </citation>
    <scope>NUCLEOTIDE SEQUENCE [LARGE SCALE MRNA] (ISOFORM 1)</scope>
</reference>
<reference key="5">
    <citation type="journal article" date="2004" name="Nat. Genet.">
        <title>Complete sequencing and characterization of 21,243 full-length human cDNAs.</title>
        <authorList>
            <person name="Ota T."/>
            <person name="Suzuki Y."/>
            <person name="Nishikawa T."/>
            <person name="Otsuki T."/>
            <person name="Sugiyama T."/>
            <person name="Irie R."/>
            <person name="Wakamatsu A."/>
            <person name="Hayashi K."/>
            <person name="Sato H."/>
            <person name="Nagai K."/>
            <person name="Kimura K."/>
            <person name="Makita H."/>
            <person name="Sekine M."/>
            <person name="Obayashi M."/>
            <person name="Nishi T."/>
            <person name="Shibahara T."/>
            <person name="Tanaka T."/>
            <person name="Ishii S."/>
            <person name="Yamamoto J."/>
            <person name="Saito K."/>
            <person name="Kawai Y."/>
            <person name="Isono Y."/>
            <person name="Nakamura Y."/>
            <person name="Nagahari K."/>
            <person name="Murakami K."/>
            <person name="Yasuda T."/>
            <person name="Iwayanagi T."/>
            <person name="Wagatsuma M."/>
            <person name="Shiratori A."/>
            <person name="Sudo H."/>
            <person name="Hosoiri T."/>
            <person name="Kaku Y."/>
            <person name="Kodaira H."/>
            <person name="Kondo H."/>
            <person name="Sugawara M."/>
            <person name="Takahashi M."/>
            <person name="Kanda K."/>
            <person name="Yokoi T."/>
            <person name="Furuya T."/>
            <person name="Kikkawa E."/>
            <person name="Omura Y."/>
            <person name="Abe K."/>
            <person name="Kamihara K."/>
            <person name="Katsuta N."/>
            <person name="Sato K."/>
            <person name="Tanikawa M."/>
            <person name="Yamazaki M."/>
            <person name="Ninomiya K."/>
            <person name="Ishibashi T."/>
            <person name="Yamashita H."/>
            <person name="Murakawa K."/>
            <person name="Fujimori K."/>
            <person name="Tanai H."/>
            <person name="Kimata M."/>
            <person name="Watanabe M."/>
            <person name="Hiraoka S."/>
            <person name="Chiba Y."/>
            <person name="Ishida S."/>
            <person name="Ono Y."/>
            <person name="Takiguchi S."/>
            <person name="Watanabe S."/>
            <person name="Yosida M."/>
            <person name="Hotuta T."/>
            <person name="Kusano J."/>
            <person name="Kanehori K."/>
            <person name="Takahashi-Fujii A."/>
            <person name="Hara H."/>
            <person name="Tanase T.-O."/>
            <person name="Nomura Y."/>
            <person name="Togiya S."/>
            <person name="Komai F."/>
            <person name="Hara R."/>
            <person name="Takeuchi K."/>
            <person name="Arita M."/>
            <person name="Imose N."/>
            <person name="Musashino K."/>
            <person name="Yuuki H."/>
            <person name="Oshima A."/>
            <person name="Sasaki N."/>
            <person name="Aotsuka S."/>
            <person name="Yoshikawa Y."/>
            <person name="Matsunawa H."/>
            <person name="Ichihara T."/>
            <person name="Shiohata N."/>
            <person name="Sano S."/>
            <person name="Moriya S."/>
            <person name="Momiyama H."/>
            <person name="Satoh N."/>
            <person name="Takami S."/>
            <person name="Terashima Y."/>
            <person name="Suzuki O."/>
            <person name="Nakagawa S."/>
            <person name="Senoh A."/>
            <person name="Mizoguchi H."/>
            <person name="Goto Y."/>
            <person name="Shimizu F."/>
            <person name="Wakebe H."/>
            <person name="Hishigaki H."/>
            <person name="Watanabe T."/>
            <person name="Sugiyama A."/>
            <person name="Takemoto M."/>
            <person name="Kawakami B."/>
            <person name="Yamazaki M."/>
            <person name="Watanabe K."/>
            <person name="Kumagai A."/>
            <person name="Itakura S."/>
            <person name="Fukuzumi Y."/>
            <person name="Fujimori Y."/>
            <person name="Komiyama M."/>
            <person name="Tashiro H."/>
            <person name="Tanigami A."/>
            <person name="Fujiwara T."/>
            <person name="Ono T."/>
            <person name="Yamada K."/>
            <person name="Fujii Y."/>
            <person name="Ozaki K."/>
            <person name="Hirao M."/>
            <person name="Ohmori Y."/>
            <person name="Kawabata A."/>
            <person name="Hikiji T."/>
            <person name="Kobatake N."/>
            <person name="Inagaki H."/>
            <person name="Ikema Y."/>
            <person name="Okamoto S."/>
            <person name="Okitani R."/>
            <person name="Kawakami T."/>
            <person name="Noguchi S."/>
            <person name="Itoh T."/>
            <person name="Shigeta K."/>
            <person name="Senba T."/>
            <person name="Matsumura K."/>
            <person name="Nakajima Y."/>
            <person name="Mizuno T."/>
            <person name="Morinaga M."/>
            <person name="Sasaki M."/>
            <person name="Togashi T."/>
            <person name="Oyama M."/>
            <person name="Hata H."/>
            <person name="Watanabe M."/>
            <person name="Komatsu T."/>
            <person name="Mizushima-Sugano J."/>
            <person name="Satoh T."/>
            <person name="Shirai Y."/>
            <person name="Takahashi Y."/>
            <person name="Nakagawa K."/>
            <person name="Okumura K."/>
            <person name="Nagase T."/>
            <person name="Nomura N."/>
            <person name="Kikuchi H."/>
            <person name="Masuho Y."/>
            <person name="Yamashita R."/>
            <person name="Nakai K."/>
            <person name="Yada T."/>
            <person name="Nakamura Y."/>
            <person name="Ohara O."/>
            <person name="Isogai T."/>
            <person name="Sugano S."/>
        </authorList>
    </citation>
    <scope>NUCLEOTIDE SEQUENCE [LARGE SCALE MRNA] (ISOFORMS 1 AND 2)</scope>
    <source>
        <tissue>Trachea</tissue>
    </source>
</reference>
<reference key="6">
    <citation type="journal article" date="2003" name="Nature">
        <title>The DNA sequence of human chromosome 7.</title>
        <authorList>
            <person name="Hillier L.W."/>
            <person name="Fulton R.S."/>
            <person name="Fulton L.A."/>
            <person name="Graves T.A."/>
            <person name="Pepin K.H."/>
            <person name="Wagner-McPherson C."/>
            <person name="Layman D."/>
            <person name="Maas J."/>
            <person name="Jaeger S."/>
            <person name="Walker R."/>
            <person name="Wylie K."/>
            <person name="Sekhon M."/>
            <person name="Becker M.C."/>
            <person name="O'Laughlin M.D."/>
            <person name="Schaller M.E."/>
            <person name="Fewell G.A."/>
            <person name="Delehaunty K.D."/>
            <person name="Miner T.L."/>
            <person name="Nash W.E."/>
            <person name="Cordes M."/>
            <person name="Du H."/>
            <person name="Sun H."/>
            <person name="Edwards J."/>
            <person name="Bradshaw-Cordum H."/>
            <person name="Ali J."/>
            <person name="Andrews S."/>
            <person name="Isak A."/>
            <person name="Vanbrunt A."/>
            <person name="Nguyen C."/>
            <person name="Du F."/>
            <person name="Lamar B."/>
            <person name="Courtney L."/>
            <person name="Kalicki J."/>
            <person name="Ozersky P."/>
            <person name="Bielicki L."/>
            <person name="Scott K."/>
            <person name="Holmes A."/>
            <person name="Harkins R."/>
            <person name="Harris A."/>
            <person name="Strong C.M."/>
            <person name="Hou S."/>
            <person name="Tomlinson C."/>
            <person name="Dauphin-Kohlberg S."/>
            <person name="Kozlowicz-Reilly A."/>
            <person name="Leonard S."/>
            <person name="Rohlfing T."/>
            <person name="Rock S.M."/>
            <person name="Tin-Wollam A.-M."/>
            <person name="Abbott A."/>
            <person name="Minx P."/>
            <person name="Maupin R."/>
            <person name="Strowmatt C."/>
            <person name="Latreille P."/>
            <person name="Miller N."/>
            <person name="Johnson D."/>
            <person name="Murray J."/>
            <person name="Woessner J.P."/>
            <person name="Wendl M.C."/>
            <person name="Yang S.-P."/>
            <person name="Schultz B.R."/>
            <person name="Wallis J.W."/>
            <person name="Spieth J."/>
            <person name="Bieri T.A."/>
            <person name="Nelson J.O."/>
            <person name="Berkowicz N."/>
            <person name="Wohldmann P.E."/>
            <person name="Cook L.L."/>
            <person name="Hickenbotham M.T."/>
            <person name="Eldred J."/>
            <person name="Williams D."/>
            <person name="Bedell J.A."/>
            <person name="Mardis E.R."/>
            <person name="Clifton S.W."/>
            <person name="Chissoe S.L."/>
            <person name="Marra M.A."/>
            <person name="Raymond C."/>
            <person name="Haugen E."/>
            <person name="Gillett W."/>
            <person name="Zhou Y."/>
            <person name="James R."/>
            <person name="Phelps K."/>
            <person name="Iadanoto S."/>
            <person name="Bubb K."/>
            <person name="Simms E."/>
            <person name="Levy R."/>
            <person name="Clendenning J."/>
            <person name="Kaul R."/>
            <person name="Kent W.J."/>
            <person name="Furey T.S."/>
            <person name="Baertsch R.A."/>
            <person name="Brent M.R."/>
            <person name="Keibler E."/>
            <person name="Flicek P."/>
            <person name="Bork P."/>
            <person name="Suyama M."/>
            <person name="Bailey J.A."/>
            <person name="Portnoy M.E."/>
            <person name="Torrents D."/>
            <person name="Chinwalla A.T."/>
            <person name="Gish W.R."/>
            <person name="Eddy S.R."/>
            <person name="McPherson J.D."/>
            <person name="Olson M.V."/>
            <person name="Eichler E.E."/>
            <person name="Green E.D."/>
            <person name="Waterston R.H."/>
            <person name="Wilson R.K."/>
        </authorList>
    </citation>
    <scope>NUCLEOTIDE SEQUENCE [LARGE SCALE GENOMIC DNA]</scope>
</reference>
<reference key="7">
    <citation type="submission" date="2005-09" db="EMBL/GenBank/DDBJ databases">
        <authorList>
            <person name="Mural R.J."/>
            <person name="Istrail S."/>
            <person name="Sutton G.G."/>
            <person name="Florea L."/>
            <person name="Halpern A.L."/>
            <person name="Mobarry C.M."/>
            <person name="Lippert R."/>
            <person name="Walenz B."/>
            <person name="Shatkay H."/>
            <person name="Dew I."/>
            <person name="Miller J.R."/>
            <person name="Flanigan M.J."/>
            <person name="Edwards N.J."/>
            <person name="Bolanos R."/>
            <person name="Fasulo D."/>
            <person name="Halldorsson B.V."/>
            <person name="Hannenhalli S."/>
            <person name="Turner R."/>
            <person name="Yooseph S."/>
            <person name="Lu F."/>
            <person name="Nusskern D.R."/>
            <person name="Shue B.C."/>
            <person name="Zheng X.H."/>
            <person name="Zhong F."/>
            <person name="Delcher A.L."/>
            <person name="Huson D.H."/>
            <person name="Kravitz S.A."/>
            <person name="Mouchard L."/>
            <person name="Reinert K."/>
            <person name="Remington K.A."/>
            <person name="Clark A.G."/>
            <person name="Waterman M.S."/>
            <person name="Eichler E.E."/>
            <person name="Adams M.D."/>
            <person name="Hunkapiller M.W."/>
            <person name="Myers E.W."/>
            <person name="Venter J.C."/>
        </authorList>
    </citation>
    <scope>NUCLEOTIDE SEQUENCE [LARGE SCALE GENOMIC DNA]</scope>
</reference>
<reference key="8">
    <citation type="journal article" date="2004" name="Genome Res.">
        <title>The status, quality, and expansion of the NIH full-length cDNA project: the Mammalian Gene Collection (MGC).</title>
        <authorList>
            <consortium name="The MGC Project Team"/>
        </authorList>
    </citation>
    <scope>NUCLEOTIDE SEQUENCE [LARGE SCALE MRNA] (ISOFORM 1)</scope>
    <source>
        <tissue>Brain</tissue>
    </source>
</reference>
<reference key="9">
    <citation type="journal article" date="1988" name="J. Biol. Chem.">
        <title>Presence of three distinct molecular species of Gi protein alpha subunit. Structure of rat cDNAs and human genomic DNAs.</title>
        <authorList>
            <person name="Itoh H."/>
            <person name="Toyama R."/>
            <person name="Kozasa T."/>
            <person name="Tsukamoto T."/>
            <person name="Matsuoka M."/>
            <person name="Kaziro Y."/>
        </authorList>
    </citation>
    <scope>NUCLEOTIDE SEQUENCE [GENOMIC DNA] OF 1-101</scope>
</reference>
<reference key="10">
    <citation type="journal article" date="1987" name="Proc. Natl. Acad. Sci. U.S.A.">
        <title>Human cDNA clones for an alpha subunit of Gi signal-transduction protein.</title>
        <authorList>
            <person name="Bray P."/>
            <person name="Carter A."/>
            <person name="Guo V."/>
            <person name="Puckett C."/>
            <person name="Kamholz J."/>
            <person name="Spiegel A."/>
            <person name="Nirenberg M."/>
        </authorList>
    </citation>
    <scope>NUCLEOTIDE SEQUENCE [MRNA] OF 6-354</scope>
</reference>
<reference key="11">
    <citation type="journal article" date="2004" name="Biochem. J.">
        <title>Vectorial proteomics reveal targeting, phosphorylation and specific fragmentation of polymerase I and transcript release factor (PTRF) at the surface of caveolae in human adipocytes.</title>
        <authorList>
            <person name="Aboulaich N."/>
            <person name="Vainonen J.P."/>
            <person name="Stralfors P."/>
            <person name="Vener A.V."/>
        </authorList>
    </citation>
    <scope>PROTEIN SEQUENCE OF 91-100 AND 162-176</scope>
    <source>
        <tissue>Adipocyte</tissue>
    </source>
</reference>
<reference key="12">
    <citation type="journal article" date="1994" name="J. Biol. Chem.">
        <title>Distinct patterns of bidirectional regulation of mammalian adenylyl cyclases.</title>
        <authorList>
            <person name="Taussig R."/>
            <person name="Tang W.J."/>
            <person name="Hepler J.R."/>
            <person name="Gilman A.G."/>
        </authorList>
    </citation>
    <scope>FUNCTION</scope>
</reference>
<reference key="13">
    <citation type="journal article" date="1996" name="Nature">
        <title>RGS10 is a selective activator of G alpha i GTPase activity.</title>
        <authorList>
            <person name="Hunt T.W."/>
            <person name="Fields T.A."/>
            <person name="Casey P.J."/>
            <person name="Peralta E.G."/>
        </authorList>
    </citation>
    <scope>FUNCTION</scope>
    <scope>INTERACTION WITH RGS10</scope>
</reference>
<reference key="14">
    <citation type="journal article" date="2007" name="J. Cell Biol.">
        <title>Localization of Gi alpha proteins in the centrosomes and at the midbody: implication for their role in cell division.</title>
        <authorList>
            <person name="Cho H."/>
            <person name="Kehrl J.H."/>
        </authorList>
    </citation>
    <scope>FUNCTION</scope>
    <scope>SUBCELLULAR LOCATION</scope>
</reference>
<reference key="15">
    <citation type="journal article" date="2009" name="Proc. Natl. Acad. Sci. U.S.A.">
        <title>GIV is a nonreceptor GEF for G alpha i with a unique motif that regulates Akt signaling.</title>
        <authorList>
            <person name="Garcia-Marcos M."/>
            <person name="Ghosh P."/>
            <person name="Farquhar M.G."/>
        </authorList>
    </citation>
    <scope>INTERACTION WITH CCDC88A</scope>
</reference>
<reference key="16">
    <citation type="journal article" date="2010" name="Proteomics">
        <title>Strategy for comprehensive identification of human N-myristoylated proteins using an insect cell-free protein synthesis system.</title>
        <authorList>
            <person name="Suzuki T."/>
            <person name="Moriya K."/>
            <person name="Nagatoshi K."/>
            <person name="Ota Y."/>
            <person name="Ezure T."/>
            <person name="Ando E."/>
            <person name="Tsunasawa S."/>
            <person name="Utsumi T."/>
        </authorList>
    </citation>
    <scope>MYRISTOYLATION AT GLY-2</scope>
</reference>
<reference key="17">
    <citation type="journal article" date="2011" name="BMC Syst. Biol.">
        <title>Initial characterization of the human central proteome.</title>
        <authorList>
            <person name="Burkard T.R."/>
            <person name="Planyavsky M."/>
            <person name="Kaupe I."/>
            <person name="Breitwieser F.P."/>
            <person name="Buerckstuemmer T."/>
            <person name="Bennett K.L."/>
            <person name="Superti-Furga G."/>
            <person name="Colinge J."/>
        </authorList>
    </citation>
    <scope>IDENTIFICATION BY MASS SPECTROMETRY [LARGE SCALE ANALYSIS]</scope>
</reference>
<reference key="18">
    <citation type="journal article" date="2012" name="Nat. Cell Biol.">
        <title>Chromosome- and spindle-pole-derived signals generate an intrinsic code for spindle position and orientation.</title>
        <authorList>
            <person name="Kiyomitsu T."/>
            <person name="Cheeseman I.M."/>
        </authorList>
    </citation>
    <scope>FUNCTION</scope>
    <scope>SUBCELLULAR LOCATION</scope>
</reference>
<reference key="19">
    <citation type="journal article" date="2013" name="Nat. Struct. Mol. Biol.">
        <title>A bacterial toxin catalyzing tyrosine glycosylation of Rho and deamidation of Gq and Gi proteins.</title>
        <authorList>
            <person name="Jank T."/>
            <person name="Bogdanovic X."/>
            <person name="Wirth C."/>
            <person name="Haaf E."/>
            <person name="Spoerner M."/>
            <person name="Boehmer K.E."/>
            <person name="Steinemann M."/>
            <person name="Orth J.H."/>
            <person name="Kalbitzer H.R."/>
            <person name="Warscheid B."/>
            <person name="Hunte C."/>
            <person name="Aktories K."/>
        </authorList>
    </citation>
    <scope>DEAMIDATION AT GLN-204 (MICROBIAL INFECTION)</scope>
</reference>
<reference key="20">
    <citation type="journal article" date="2014" name="Nat. Commun.">
        <title>Global profiling of co- and post-translationally N-myristoylated proteomes in human cells.</title>
        <authorList>
            <person name="Thinon E."/>
            <person name="Serwa R.A."/>
            <person name="Broncel M."/>
            <person name="Brannigan J.A."/>
            <person name="Brassat U."/>
            <person name="Wright M.H."/>
            <person name="Heal W.P."/>
            <person name="Wilkinson A.J."/>
            <person name="Mann D.J."/>
            <person name="Tate E.W."/>
        </authorList>
    </citation>
    <scope>MYRISTOYLATION AT GLY-2</scope>
    <scope>CLEAVAGE OF INITIATOR METHIONINE</scope>
    <scope>IDENTIFICATION BY MASS SPECTROMETRY</scope>
</reference>
<reference key="21">
    <citation type="journal article" date="2015" name="Elife">
        <title>Daple is a novel non-receptor GEF required for trimeric G protein activation in Wnt signaling.</title>
        <authorList>
            <person name="Aznar N."/>
            <person name="Midde K.K."/>
            <person name="Dunkel Y."/>
            <person name="Lopez-Sanchez I."/>
            <person name="Pavlova Y."/>
            <person name="Marivin A."/>
            <person name="Barbazan J."/>
            <person name="Murray F."/>
            <person name="Nitsche U."/>
            <person name="Janssen K.P."/>
            <person name="Willert K."/>
            <person name="Goel A."/>
            <person name="Abal M."/>
            <person name="Garcia-Marcos M."/>
            <person name="Ghosh P."/>
        </authorList>
    </citation>
    <scope>INTERACTION WITH CCDC88C</scope>
</reference>
<reference key="22">
    <citation type="journal article" date="2016" name="Dev. Cell">
        <title>SAPCD2 controls spindle orientation and asymmetric divisions by negatively regulating the Galphai-LGN-NuMA ternary complex.</title>
        <authorList>
            <person name="Chiu C.W."/>
            <person name="Monat C."/>
            <person name="Robitaille M."/>
            <person name="Lacomme M."/>
            <person name="Daulat A.M."/>
            <person name="Macleod G."/>
            <person name="McNeill H."/>
            <person name="Cayouette M."/>
            <person name="Angers S."/>
        </authorList>
    </citation>
    <scope>IDENTIFICATION IN A SPINDLE ORIENTATION COMPLEX</scope>
    <scope>SUBCELLULAR LOCATION</scope>
</reference>
<reference key="23">
    <citation type="journal article" date="2024" name="Cell Discov.">
        <title>Molecular recognition of the atypical chemokine-like peptide GPR15L by its cognate receptor GPR15.</title>
        <authorList>
            <person name="Zhang Z."/>
            <person name="Zheng Y."/>
            <person name="Xu L."/>
            <person name="Yue Y."/>
            <person name="Xu K."/>
            <person name="Li F."/>
            <person name="Xu F."/>
        </authorList>
    </citation>
    <scope>FUNCTION</scope>
    <scope>INTERACTION WITH GPR15</scope>
</reference>
<reference key="24">
    <citation type="journal article" date="2002" name="Nature">
        <title>Structural determinants for GoLoco-induced inhibition of nucleotide release by Galpha subunits.</title>
        <authorList>
            <person name="Kimple R.J."/>
            <person name="Kimple M.E."/>
            <person name="Betts L."/>
            <person name="Sondek J."/>
            <person name="Siderovski D.P."/>
        </authorList>
    </citation>
    <scope>X-RAY CRYSTALLOGRAPHY (2.7 ANGSTROMS) OF 31-349 IN COMPLEX WITH RGS14 AND GDP</scope>
    <scope>INTERACTION WITH RGS14</scope>
</reference>
<reference key="25">
    <citation type="journal article" date="2005" name="Structure">
        <title>Structure of Galpha(i1) bound to a GDP-selective peptide provides insight into guanine nucleotide exchange.</title>
        <authorList>
            <person name="Johnston C.A."/>
            <person name="Willard F.S."/>
            <person name="Jezyk M.R."/>
            <person name="Fredericks Z."/>
            <person name="Bodor E.T."/>
            <person name="Jones M.B."/>
            <person name="Blaesius R."/>
            <person name="Watts V.J."/>
            <person name="Harden T.K."/>
            <person name="Sondek J."/>
            <person name="Ramer J.K."/>
            <person name="Siderovski D.P."/>
        </authorList>
    </citation>
    <scope>X-RAY CRYSTALLOGRAPHY (2.5 ANGSTROMS) OF 26-354 IN COMPLEX WITH GDP</scope>
</reference>
<reference key="26">
    <citation type="journal article" date="2007" name="J. Mol. Biol.">
        <title>Structure-based protocol for identifying mutations that enhance protein-protein binding affinities.</title>
        <authorList>
            <person name="Sammond D.W."/>
            <person name="Eletr Z.M."/>
            <person name="Purbeck C."/>
            <person name="Kimple R.J."/>
            <person name="Siderovski D.P."/>
            <person name="Kuhlman B."/>
        </authorList>
    </citation>
    <scope>X-RAY CRYSTALLOGRAPHY (2.2 ANGSTROMS) OF 31-354</scope>
    <scope>MUTAGENESIS OF GLU-116 AND GLN-147</scope>
</reference>
<reference key="27">
    <citation type="journal article" date="2007" name="Proc. Natl. Acad. Sci. U.S.A.">
        <title>Structural basis for nucleotide exchange on G alpha i subunits and receptor coupling specificity.</title>
        <authorList>
            <person name="Johnston C.A."/>
            <person name="Siderovski D.P."/>
        </authorList>
    </citation>
    <scope>X-RAY CRYSTALLOGRAPHY (2.2 ANGSTROMS)</scope>
    <scope>RETRACTED PAPER</scope>
</reference>
<reference key="28">
    <citation type="journal article" date="2012" name="Proc. Natl. Acad. Sci. U.S.A.">
        <authorList>
            <person name="Johnston C.A."/>
            <person name="Siderovski D.P."/>
        </authorList>
    </citation>
    <scope>ERRATUM OF PUBMED:17264214</scope>
    <scope>RETRACTION NOTICE OF PUBMED:17264214</scope>
</reference>
<reference key="29">
    <citation type="journal article" date="2008" name="Proc. Natl. Acad. Sci. U.S.A.">
        <title>Structural diversity in the RGS domain and its interaction with heterotrimeric G protein alpha-subunits.</title>
        <authorList>
            <person name="Soundararajan M."/>
            <person name="Willard F.S."/>
            <person name="Kimple A.J."/>
            <person name="Turnbull A.P."/>
            <person name="Ball L.J."/>
            <person name="Schoch G.A."/>
            <person name="Gileadi C."/>
            <person name="Fedorov O.Y."/>
            <person name="Dowler E.F."/>
            <person name="Higman V.A."/>
            <person name="Hutsell S.Q."/>
            <person name="Sundstroem M."/>
            <person name="Doyle D.A."/>
            <person name="Siderovski D.P."/>
        </authorList>
    </citation>
    <scope>X-RAY CRYSTALLOGRAPHY (2.55 ANGSTROMS) OF 32-354 IN COMPLEX WITH RGS1; RGS16; GDP; MAGNESIUM AND TRANSITION STATE ANALOG</scope>
    <scope>FUNCTION</scope>
    <scope>INTERACTION WITH GNB1; GNG2; RGS1; RGS3; RGS4; RGS6; RGS7; RGS8; RGS10; RGS12; RGS14; RGS16; RGS17; RGS18 AND RGS20</scope>
    <scope>SUBUNIT</scope>
</reference>
<reference key="30">
    <citation type="journal article" date="2011" name="J. Biol. Chem.">
        <title>Structural determinants of affinity enhancement between GoLoco motifs and G-protein alpha subunit mutants.</title>
        <authorList>
            <person name="Bosch D.E."/>
            <person name="Kimple A.J."/>
            <person name="Sammond D.W."/>
            <person name="Muller R.E."/>
            <person name="Miley M.J."/>
            <person name="Machius M."/>
            <person name="Kuhlman B."/>
            <person name="Willard F.S."/>
            <person name="Siderovski D.P."/>
        </authorList>
    </citation>
    <scope>X-RAY CRYSTALLOGRAPHY (2.38 ANGSTROMS) OF 31-354 IN COMPLEX WITH RGS14 AND GDP</scope>
    <scope>MUTAGENESIS OF GLU-116; GLN-147 AND GLU-245</scope>
</reference>
<reference key="31">
    <citation type="journal article" date="2012" name="J. Biol. Chem.">
        <title>Crystal structures of the scaffolding protein LGN reveal the general mechanism by which GoLoco binding motifs inhibit the release of GDP from Galphai.</title>
        <authorList>
            <person name="Jia M."/>
            <person name="Li J."/>
            <person name="Zhu J."/>
            <person name="Wen W."/>
            <person name="Zhang M."/>
            <person name="Wang W."/>
        </authorList>
    </citation>
    <scope>X-RAY CRYSTALLOGRAPHY (2.90 ANGSTROMS) OF 25-354 IN COMPLEX WITH GPSM2 AND GDP</scope>
    <scope>INTERACTION WITH GPSM2</scope>
</reference>
<reference key="32">
    <citation type="journal article" date="2012" name="PLoS Pathog.">
        <title>A P-loop mutation in Galpha subunits prevents transition to the active state: implications for G-protein signaling in fungal pathogenesis.</title>
        <authorList>
            <person name="Bosch D.E."/>
            <person name="Willard F.S."/>
            <person name="Ramanujam R."/>
            <person name="Kimple A.J."/>
            <person name="Willard M.D."/>
            <person name="Naqvi N.I."/>
            <person name="Siderovski D.P."/>
        </authorList>
    </citation>
    <scope>X-RAY CRYSTALLOGRAPHY (2.80 ANGSTROMS) OF 31-354 IN COMPLEX WITH GDP AND MAGNESIUM</scope>
    <scope>SUBUNIT</scope>
    <scope>INTERACTION WITH GNB1; GNG1 AND RGS14</scope>
    <scope>MUTAGENESIS OF GLY-42</scope>
</reference>
<reference evidence="53" key="33">
    <citation type="journal article" date="2020" name="Cell Rep.">
        <title>Structures of Galpha proteins in complex with their chaperone reveal quality control mechanisms.</title>
        <authorList>
            <person name="Seven A.B."/>
            <person name="Hilger D."/>
            <person name="Papasergi-Scott M.M."/>
            <person name="Zhang L."/>
            <person name="Qu Q."/>
            <person name="Kobilka B.K."/>
            <person name="Tall G.G."/>
            <person name="Skiniotis G."/>
        </authorList>
    </citation>
    <scope>STRUCTURE BY ELECTRON MICROSCOPY (4.14 ANGSTROMS) IN COMPLEX WITH RIC8A</scope>
    <scope>INTERACTION WITH RIC8A</scope>
</reference>
<reference evidence="60" key="34">
    <citation type="journal article" date="2021" name="Cell Res.">
        <title>Structural basis for recognition of anti-migraine drug lasmiditan by the serotonin receptor 5-HT1F-G protein complex.</title>
        <authorList>
            <person name="Huang S."/>
            <person name="Xu P."/>
            <person name="Tan Y."/>
            <person name="You C."/>
            <person name="Zhang Y."/>
            <person name="Jiang Y."/>
            <person name="Xu H.E."/>
        </authorList>
    </citation>
    <scope>STRUCTURE BY ELECTRON MICROSCOPY (3.4 ANGSTROMS) IN COMPLEX WITH HTR1F; GNB1 AND GNG2</scope>
    <scope>FUNCTION</scope>
</reference>
<reference evidence="54 55 56 57 58" key="35">
    <citation type="journal article" date="2021" name="Nature">
        <title>Structural insights into the lipid and ligand regulation of serotonin receptors.</title>
        <authorList>
            <person name="Xu P."/>
            <person name="Huang S."/>
            <person name="Zhang H."/>
            <person name="Mao C."/>
            <person name="Zhou X.E."/>
            <person name="Cheng X."/>
            <person name="Simon I.A."/>
            <person name="Shen D.D."/>
            <person name="Yen H.Y."/>
            <person name="Robinson C.V."/>
            <person name="Harpsoee K."/>
            <person name="Svensson B."/>
            <person name="Guo J."/>
            <person name="Jiang H."/>
            <person name="Gloriam D.E."/>
            <person name="Melcher K."/>
            <person name="Jiang Y."/>
            <person name="Zhang Y."/>
            <person name="Xu H.E."/>
        </authorList>
    </citation>
    <scope>STRUCTURE BY ELECTRON MICROSCOPY (3.0 ANGSTROMS) IN COMPLEX WITH GNB1; GNG2; HTR1A; HTR1D AND HTR1E</scope>
    <scope>FUNCTION</scope>
    <scope>CATALYTIC ACTIVITY</scope>
</reference>
<reference evidence="62" key="36">
    <citation type="journal article" date="2022" name="Cell Discov.">
        <title>Structural insights into the ligand binding and Gi coupling of serotonin receptor 5-HT5A.</title>
        <authorList>
            <person name="Tan Y."/>
            <person name="Xu P."/>
            <person name="Huang S."/>
            <person name="Yang G."/>
            <person name="Zhou F."/>
            <person name="He X."/>
            <person name="Ma H."/>
            <person name="Xu H.E."/>
            <person name="Jiang Y."/>
        </authorList>
    </citation>
    <scope>STRUCTURE BY ELECTRON MICROSCOPY (3.1 ANGSTROMS) IN COMPLEX WITH HTR5A; GNB1 AND GNG2</scope>
    <scope>FUNCTION</scope>
</reference>
<reference key="37">
    <citation type="journal article" date="2022" name="Sci. Adv.">
        <title>Atypical structural snapshots of human cytomegalovirus GPCR interactions with host G proteins.</title>
        <authorList>
            <person name="Tsutsumi N."/>
            <person name="Maeda S."/>
            <person name="Qu Q."/>
            <person name="Voegele M."/>
            <person name="Jude K.M."/>
            <person name="Suomivuori C.M."/>
            <person name="Panova O."/>
            <person name="Waghray D."/>
            <person name="Kato H.E."/>
            <person name="Velasco A."/>
            <person name="Dror R.O."/>
            <person name="Skiniotis G."/>
            <person name="Kobilka B.K."/>
            <person name="Garcia K.C."/>
        </authorList>
    </citation>
    <scope>STRUCTURE BY ELECTRON MICROSCOPY (3.10 ANGSTROMS) OF 2-354 IN COMPLEX WITH GNB1; GNG2 AND HHV-5 US27</scope>
    <scope>INTERACTION WITH HHV-5 US27 (MICROBIAL INFECTION)</scope>
    <scope>STRUCTURE BY ELECTRON MICROSCOPY (3.50 ANGSTROMS) IN COMPLEX WITH HOST GNB1; CX3CL1; GNG2 AND HHV-5 US28</scope>
    <scope>INTERACTION WITH HHV-5 US28 (MICROBIAL INFECTION)</scope>
</reference>
<reference evidence="59 61" key="38">
    <citation type="journal article" date="2022" name="Nat. Commun.">
        <title>Activation and allosteric regulation of the orphan GPR88-Gi1 signaling complex.</title>
        <authorList>
            <person name="Chen G."/>
            <person name="Xu J."/>
            <person name="Inoue A."/>
            <person name="Schmidt M.F."/>
            <person name="Bai C."/>
            <person name="Lu Q."/>
            <person name="Gmeiner P."/>
            <person name="Liu Z."/>
            <person name="Du Y."/>
        </authorList>
    </citation>
    <scope>STRUCTURE BY ELECTRON MICROSCOPY (2.40 ANGSTROMS) IN COMPLEX WITH GPR88; GNB1; GNG2; GI-STABILIZING ANTIBODY SCFV16 AND SYNTHETIC AGONIST 2-PCCA</scope>
</reference>
<reference evidence="68 69" key="39">
    <citation type="journal article" date="2023" name="Cell">
        <title>Structural and signaling mechanisms of TAAR1 enabled preferential agonist design.</title>
        <authorList>
            <person name="Shang P."/>
            <person name="Rong N."/>
            <person name="Jiang J.J."/>
            <person name="Cheng J."/>
            <person name="Zhang M.H."/>
            <person name="Kang D."/>
            <person name="Qi L."/>
            <person name="Guo L."/>
            <person name="Yang G.M."/>
            <person name="Liu Q."/>
            <person name="Zhou Z."/>
            <person name="Li X.B."/>
            <person name="Zhu K.K."/>
            <person name="Meng Q.B."/>
            <person name="Han X."/>
            <person name="Yan W."/>
            <person name="Kong Y."/>
            <person name="Yang L."/>
            <person name="Wang X."/>
            <person name="Lei D."/>
            <person name="Feng X."/>
            <person name="Liu X."/>
            <person name="Yu X."/>
            <person name="Wang Y."/>
            <person name="Li Q."/>
            <person name="Shao Z.H."/>
            <person name="Yang F."/>
            <person name="Sun J.P."/>
        </authorList>
    </citation>
    <scope>STRUCTURE BY ELECTRON MICROSCOPY (2.9 ANGSTROMS) IN COMPLEX WITH TAAR1; GNB1 AND GNG2</scope>
    <scope>FUNCTION</scope>
</reference>
<reference evidence="67" key="40">
    <citation type="journal article" date="2023" name="Nature">
        <title>Recognition of methamphetamine and other amines by trace amine receptor TAAR1.</title>
        <authorList>
            <person name="Liu H."/>
            <person name="Zheng Y."/>
            <person name="Wang Y."/>
            <person name="Wang Y."/>
            <person name="He X."/>
            <person name="Xu P."/>
            <person name="Huang S."/>
            <person name="Yuan Q."/>
            <person name="Zhang X."/>
            <person name="Wang L."/>
            <person name="Jiang K."/>
            <person name="Chen H."/>
            <person name="Li Z."/>
            <person name="Liu W."/>
            <person name="Wang S."/>
            <person name="Xu H.E."/>
            <person name="Xu F."/>
        </authorList>
    </citation>
    <scope>STRUCTURE BY ELECTRON MICROSCOPY (2.6 ANGSTROMS) IN COMPLEX WITH TAAR1; HTR1A; GNB1 AND GNG2</scope>
    <scope>FUNCTION</scope>
</reference>
<reference evidence="39 63 64" key="41">
    <citation type="journal article" date="2023" name="Nature">
        <title>Ligand recognition and G-protein coupling of trace amine receptor TAAR1.</title>
        <authorList>
            <person name="Xu Z."/>
            <person name="Guo L."/>
            <person name="Yu J."/>
            <person name="Shen S."/>
            <person name="Wu C."/>
            <person name="Zhang W."/>
            <person name="Zhao C."/>
            <person name="Deng Y."/>
            <person name="Tian X."/>
            <person name="Feng Y."/>
            <person name="Hou H."/>
            <person name="Su L."/>
            <person name="Wang H."/>
            <person name="Guo S."/>
            <person name="Wang H."/>
            <person name="Wang K."/>
            <person name="Chen P."/>
            <person name="Zhao J."/>
            <person name="Zhang X."/>
            <person name="Yong X."/>
            <person name="Cheng L."/>
            <person name="Liu L."/>
            <person name="Yang S."/>
            <person name="Yang F."/>
            <person name="Wang X."/>
            <person name="Yu X."/>
            <person name="Xu Y."/>
            <person name="Sun J.P."/>
            <person name="Yan W."/>
            <person name="Shao Z."/>
        </authorList>
    </citation>
    <scope>STRUCTURE BY ELECTRON MICROSCOPY (2.84 ANGSTROMS) IN COMPLEX WITH TAAR1; HTR1A; GNB1 AND GNG2</scope>
    <scope>FUNCTION</scope>
</reference>
<reference evidence="65" key="42">
    <citation type="journal article" date="2024" name="Cell">
        <title>Flexible scaffold-based cheminformatics approach for polypharmacological drug design.</title>
        <authorList>
            <person name="Chen Z."/>
            <person name="Yu J."/>
            <person name="Wang H."/>
            <person name="Xu P."/>
            <person name="Fan L."/>
            <person name="Sun F."/>
            <person name="Huang S."/>
            <person name="Zhang P."/>
            <person name="Huang H."/>
            <person name="Gu S."/>
            <person name="Zhang B."/>
            <person name="Zhou Y."/>
            <person name="Wan X."/>
            <person name="Pei G."/>
            <person name="Xu H.E."/>
            <person name="Cheng J."/>
            <person name="Wang S."/>
        </authorList>
    </citation>
    <scope>STRUCTURE BY ELECTRON MICROSCOPY (3.0 ANGSTROMS) IN COMPLEX WITH HTR1A; GNB1 AND GNG2</scope>
    <scope>FUNCTION</scope>
</reference>
<reference evidence="66" key="43">
    <citation type="journal article" date="2024" name="Nature">
        <title>Bitter taste receptor activation by cholesterol and an intracellular tastant.</title>
        <authorList>
            <person name="Kim Y."/>
            <person name="Gumpper R.H."/>
            <person name="Liu Y."/>
            <person name="Kocak D.D."/>
            <person name="Xiong Y."/>
            <person name="Cao C."/>
            <person name="Deng Z."/>
            <person name="Krumm B.E."/>
            <person name="Jain M.K."/>
            <person name="Zhang S."/>
            <person name="Jin J."/>
            <person name="Roth B.L."/>
        </authorList>
    </citation>
    <scope>STRUCTURE BY ELECTRON MICROSCOPY (2.68 ANGSTROMS) OF MUTANT ALA-203 AND SER-326 IN COMPLEXES WITH TAS2R14; G-PROTEINS; CHOLESTEROL AND AGONIST CMPD28.1</scope>
    <scope>SUBUNIT</scope>
</reference>
<reference evidence="70 71 72 73" key="44">
    <citation type="journal article" date="2024" name="Nature">
        <title>Bitter taste TAS2R14 activation by intracellular tastants and cholesterol.</title>
        <authorList>
            <person name="Hu X."/>
            <person name="Ao W."/>
            <person name="Gao M."/>
            <person name="Wu L."/>
            <person name="Pei Y."/>
            <person name="Liu S."/>
            <person name="Wu Y."/>
            <person name="Zhao F."/>
            <person name="Sun Q."/>
            <person name="Liu J."/>
            <person name="Jiang L."/>
            <person name="Wang X."/>
            <person name="Li Y."/>
            <person name="Tan Q."/>
            <person name="Cheng J."/>
            <person name="Yang F."/>
            <person name="Yang C."/>
            <person name="Sun J."/>
            <person name="Hua T."/>
            <person name="Liu Z.J."/>
        </authorList>
    </citation>
    <scope>STRUCTURE BY ELECTRON MICROSCOPY (2.77 ANGSTROMS) OF MUTANT ALA-47; ALA-203; ALA-245 AND SER-326 IN COMPLEXES WITH TAS2R14; G-PROTEINS; ARISTOLOCHIC ACID; FLUFENAMIC ACID AND AGONIST CMPD28.1</scope>
    <scope>SUBUNIT</scope>
</reference>
<reference key="45">
    <citation type="journal article" date="2021" name="Cells">
        <title>Pediatric Encephalopathy: Clinical, Biochemical and Cellular Insights into the Role of Gln52 of GNAO1 and GNAI1 for the Dominant Disease.</title>
        <authorList>
            <person name="Solis G.P."/>
            <person name="Kozhanova T.V."/>
            <person name="Koval A."/>
            <person name="Zhilina S.S."/>
            <person name="Mescheryakova T.I."/>
            <person name="Abramov A.A."/>
            <person name="Ishmuratov E.V."/>
            <person name="Bolshakova E.S."/>
            <person name="Osipova K.V."/>
            <person name="Ayvazyan S.O."/>
            <person name="Lebon S."/>
            <person name="Kanivets I.V."/>
            <person name="Pyankov D.V."/>
            <person name="Troccaz S."/>
            <person name="Silachev D.N."/>
            <person name="Zavadenko N.N."/>
            <person name="Prityko A.G."/>
            <person name="Katanaev V.L."/>
        </authorList>
    </citation>
    <scope>CHARACTERIZATION OF VARIANT NEDHISB PRO-52</scope>
</reference>
<reference key="46">
    <citation type="journal article" date="2021" name="Genet. Med.">
        <title>Variants in GNAI1 cause a syndrome associated with variable features including developmental delay, seizures, and hypotonia.</title>
        <authorList>
            <person name="Muir A.M."/>
            <person name="Gardner J.F."/>
            <person name="van Jaarsveld R.H."/>
            <person name="de Lange I.M."/>
            <person name="van der Smagt J.J."/>
            <person name="Wilson G.N."/>
            <person name="Dubbs H."/>
            <person name="Goldberg E.M."/>
            <person name="Zitano L."/>
            <person name="Bupp C."/>
            <person name="Martinez J."/>
            <person name="Srour M."/>
            <person name="Accogli A."/>
            <person name="Alhakeem A."/>
            <person name="Meltzer M."/>
            <person name="Gropman A."/>
            <person name="Brewer C."/>
            <person name="Caswell R.C."/>
            <person name="Montgomery T."/>
            <person name="McKenna C."/>
            <person name="McKee S."/>
            <person name="Powell C."/>
            <person name="Vasudevan P.C."/>
            <person name="Brady A.F."/>
            <person name="Joss S."/>
            <person name="Tysoe C."/>
            <person name="Noh G."/>
            <person name="Tarnopolsky M."/>
            <person name="Brady L."/>
            <person name="Zafar M."/>
            <person name="Schrier Vergano S.A."/>
            <person name="Murray B."/>
            <person name="Sawyer L."/>
            <person name="Hainline B.E."/>
            <person name="Sapp K."/>
            <person name="DeMarzo D."/>
            <person name="Huismann D.J."/>
            <person name="Wentzensen I.M."/>
            <person name="Schnur R.E."/>
            <person name="Monaghan K.G."/>
            <person name="Juusola J."/>
            <person name="Rhodes L."/>
            <person name="Dobyns W.B."/>
            <person name="Lecoquierre F."/>
            <person name="Goldenberg A."/>
            <person name="Polster T."/>
            <person name="Axer-Schaefer S."/>
            <person name="Platzer K."/>
            <person name="Kloeckner C."/>
            <person name="Hoffman T.L."/>
            <person name="MacArthur D.G."/>
            <person name="O'Leary M.C."/>
            <person name="VanNoy G.E."/>
            <person name="England E."/>
            <person name="Varghese V.C."/>
            <person name="Mefford H.C."/>
        </authorList>
    </citation>
    <scope>VARIANTS NEDHISB ARG-40; CYS-40; ASP-45; ILE-48; LYS-48; PRO-52; SER-75 DEL; GLN-172 DEL; VAL-173; 186-GLU--PHE-189 DEL; TYR-224; ARG-270; ASN-270; PRO-326 AND GLU-332</scope>
    <scope>INVOLVEMENT IN NEDHISB</scope>
</reference>
<reference key="47">
    <citation type="journal article" date="2022" name="J. Hum. Genet.">
        <title>Novel de novo pathogenic variant in the GNAI1 gene as a cause of severe disorders of intellectual development.</title>
        <authorList>
            <person name="Wayhelova M."/>
            <person name="Vallova V."/>
            <person name="Broz P."/>
            <person name="Mikulasova A."/>
            <person name="Loubalova D."/>
            <person name="Filkova H."/>
            <person name="Smetana J."/>
            <person name="Drabova K."/>
            <person name="Gaillyova R."/>
            <person name="Kuglik P."/>
        </authorList>
    </citation>
    <scope>VARIANT NEDHISB GLY-272</scope>
    <scope>INVOLVEMENT IN NEDHISB</scope>
</reference>
<protein>
    <recommendedName>
        <fullName>Guanine nucleotide-binding protein G(i) subunit alpha-1</fullName>
        <ecNumber evidence="22">3.6.5.-</ecNumber>
    </recommendedName>
    <alternativeName>
        <fullName>Adenylate cyclase-inhibiting G alpha protein</fullName>
    </alternativeName>
</protein>
<dbReference type="EC" id="3.6.5.-" evidence="22"/>
<dbReference type="EMBL" id="AF493905">
    <property type="protein sequence ID" value="AAM12619.1"/>
    <property type="molecule type" value="mRNA"/>
</dbReference>
<dbReference type="EMBL" id="AF055013">
    <property type="protein sequence ID" value="AAC09361.1"/>
    <property type="molecule type" value="mRNA"/>
</dbReference>
<dbReference type="EMBL" id="AL049933">
    <property type="protein sequence ID" value="CAB43212.2"/>
    <property type="molecule type" value="mRNA"/>
</dbReference>
<dbReference type="EMBL" id="BT019775">
    <property type="protein sequence ID" value="AAV38580.1"/>
    <property type="molecule type" value="mRNA"/>
</dbReference>
<dbReference type="EMBL" id="AK292953">
    <property type="protein sequence ID" value="BAF85642.1"/>
    <property type="molecule type" value="mRNA"/>
</dbReference>
<dbReference type="EMBL" id="AK304442">
    <property type="protein sequence ID" value="BAG65263.1"/>
    <property type="molecule type" value="mRNA"/>
</dbReference>
<dbReference type="EMBL" id="AC004159">
    <property type="status" value="NOT_ANNOTATED_CDS"/>
    <property type="molecule type" value="Genomic_DNA"/>
</dbReference>
<dbReference type="EMBL" id="AC080066">
    <property type="status" value="NOT_ANNOTATED_CDS"/>
    <property type="molecule type" value="Genomic_DNA"/>
</dbReference>
<dbReference type="EMBL" id="CH471091">
    <property type="protein sequence ID" value="EAW77011.1"/>
    <property type="molecule type" value="Genomic_DNA"/>
</dbReference>
<dbReference type="EMBL" id="BC026326">
    <property type="protein sequence ID" value="AAH26326.1"/>
    <property type="molecule type" value="mRNA"/>
</dbReference>
<dbReference type="EMBL" id="M20596">
    <property type="protein sequence ID" value="AAA35893.1"/>
    <property type="molecule type" value="Genomic_DNA"/>
</dbReference>
<dbReference type="EMBL" id="M20594">
    <property type="protein sequence ID" value="AAA35893.1"/>
    <property type="status" value="JOINED"/>
    <property type="molecule type" value="Genomic_DNA"/>
</dbReference>
<dbReference type="EMBL" id="M20595">
    <property type="protein sequence ID" value="AAA35893.1"/>
    <property type="status" value="JOINED"/>
    <property type="molecule type" value="Genomic_DNA"/>
</dbReference>
<dbReference type="EMBL" id="M17219">
    <property type="protein sequence ID" value="AAA52581.1"/>
    <property type="molecule type" value="mRNA"/>
</dbReference>
<dbReference type="CCDS" id="CCDS5595.1">
    <molecule id="P63096-1"/>
</dbReference>
<dbReference type="CCDS" id="CCDS59061.1">
    <molecule id="P63096-2"/>
</dbReference>
<dbReference type="PIR" id="A28318">
    <property type="entry name" value="RGHUI1"/>
</dbReference>
<dbReference type="RefSeq" id="NP_001243343.1">
    <molecule id="P63096-2"/>
    <property type="nucleotide sequence ID" value="NM_001256414.2"/>
</dbReference>
<dbReference type="RefSeq" id="NP_002060.4">
    <molecule id="P63096-1"/>
    <property type="nucleotide sequence ID" value="NM_002069.5"/>
</dbReference>
<dbReference type="PDB" id="1KJY">
    <property type="method" value="X-ray"/>
    <property type="resolution" value="2.70 A"/>
    <property type="chains" value="A/C=30-354"/>
</dbReference>
<dbReference type="PDB" id="1Y3A">
    <property type="method" value="X-ray"/>
    <property type="resolution" value="2.50 A"/>
    <property type="chains" value="A/B/C/D=26-354"/>
</dbReference>
<dbReference type="PDB" id="2G83">
    <property type="method" value="X-ray"/>
    <property type="resolution" value="2.80 A"/>
    <property type="chains" value="A/B=33-345"/>
</dbReference>
<dbReference type="PDB" id="2GTP">
    <property type="method" value="X-ray"/>
    <property type="resolution" value="2.55 A"/>
    <property type="chains" value="A/B=32-354"/>
</dbReference>
<dbReference type="PDB" id="2IK8">
    <property type="method" value="X-ray"/>
    <property type="resolution" value="2.71 A"/>
    <property type="chains" value="A/C=31-354"/>
</dbReference>
<dbReference type="PDB" id="2OM2">
    <property type="method" value="X-ray"/>
    <property type="resolution" value="2.20 A"/>
    <property type="chains" value="A/C=31-354"/>
</dbReference>
<dbReference type="PDB" id="2XNS">
    <property type="method" value="X-ray"/>
    <property type="resolution" value="3.41 A"/>
    <property type="chains" value="A/B=30-354"/>
</dbReference>
<dbReference type="PDB" id="3ONW">
    <property type="method" value="X-ray"/>
    <property type="resolution" value="2.38 A"/>
    <property type="chains" value="A/B=31-354"/>
</dbReference>
<dbReference type="PDB" id="3QE0">
    <property type="method" value="X-ray"/>
    <property type="resolution" value="3.00 A"/>
    <property type="chains" value="A/B/C=33-354"/>
</dbReference>
<dbReference type="PDB" id="3QI2">
    <property type="method" value="X-ray"/>
    <property type="resolution" value="2.80 A"/>
    <property type="chains" value="A/B=31-354"/>
</dbReference>
<dbReference type="PDB" id="3UMR">
    <property type="method" value="X-ray"/>
    <property type="resolution" value="2.24 A"/>
    <property type="chains" value="A=1-354"/>
</dbReference>
<dbReference type="PDB" id="3UMS">
    <property type="method" value="X-ray"/>
    <property type="resolution" value="2.60 A"/>
    <property type="chains" value="A=1-354"/>
</dbReference>
<dbReference type="PDB" id="4G5Q">
    <property type="method" value="X-ray"/>
    <property type="resolution" value="2.90 A"/>
    <property type="chains" value="A/B/C/D=25-354"/>
</dbReference>
<dbReference type="PDB" id="5JS7">
    <property type="method" value="NMR"/>
    <property type="chains" value="A=30-354"/>
</dbReference>
<dbReference type="PDB" id="5JS8">
    <property type="method" value="NMR"/>
    <property type="chains" value="A=30-354"/>
</dbReference>
<dbReference type="PDB" id="5TDH">
    <property type="method" value="X-ray"/>
    <property type="resolution" value="3.00 A"/>
    <property type="chains" value="A/H=1-354"/>
</dbReference>
<dbReference type="PDB" id="6CMO">
    <property type="method" value="EM"/>
    <property type="resolution" value="4.50 A"/>
    <property type="chains" value="A=1-354"/>
</dbReference>
<dbReference type="PDB" id="6CRK">
    <property type="method" value="X-ray"/>
    <property type="resolution" value="2.00 A"/>
    <property type="chains" value="A=2-354"/>
</dbReference>
<dbReference type="PDB" id="6DDE">
    <property type="method" value="EM"/>
    <property type="resolution" value="3.50 A"/>
    <property type="chains" value="A=1-354"/>
</dbReference>
<dbReference type="PDB" id="6DDF">
    <property type="method" value="EM"/>
    <property type="resolution" value="3.50 A"/>
    <property type="chains" value="A=1-354"/>
</dbReference>
<dbReference type="PDB" id="6KPF">
    <property type="method" value="EM"/>
    <property type="resolution" value="2.90 A"/>
    <property type="chains" value="A=1-354"/>
</dbReference>
<dbReference type="PDB" id="6KPG">
    <property type="method" value="EM"/>
    <property type="resolution" value="3.00 A"/>
    <property type="chains" value="A=2-354"/>
</dbReference>
<dbReference type="PDB" id="6LFM">
    <property type="method" value="EM"/>
    <property type="resolution" value="3.50 A"/>
    <property type="chains" value="A=2-354"/>
</dbReference>
<dbReference type="PDB" id="6LFO">
    <property type="method" value="EM"/>
    <property type="resolution" value="3.40 A"/>
    <property type="chains" value="A=2-354"/>
</dbReference>
<dbReference type="PDB" id="6LML">
    <property type="method" value="EM"/>
    <property type="resolution" value="3.90 A"/>
    <property type="chains" value="A=1-354"/>
</dbReference>
<dbReference type="PDB" id="6N4B">
    <property type="method" value="EM"/>
    <property type="resolution" value="3.00 A"/>
    <property type="chains" value="A=1-354"/>
</dbReference>
<dbReference type="PDB" id="6OMM">
    <property type="method" value="EM"/>
    <property type="resolution" value="3.17 A"/>
    <property type="chains" value="A=2-354"/>
</dbReference>
<dbReference type="PDB" id="6OS9">
    <property type="method" value="EM"/>
    <property type="resolution" value="3.00 A"/>
    <property type="chains" value="A=1-354"/>
</dbReference>
<dbReference type="PDB" id="6OSA">
    <property type="method" value="EM"/>
    <property type="resolution" value="3.00 A"/>
    <property type="chains" value="A=1-354"/>
</dbReference>
<dbReference type="PDB" id="6OT0">
    <property type="method" value="EM"/>
    <property type="resolution" value="3.90 A"/>
    <property type="chains" value="A=1-354"/>
</dbReference>
<dbReference type="PDB" id="6PB0">
    <property type="method" value="EM"/>
    <property type="resolution" value="3.00 A"/>
    <property type="chains" value="A=61-184"/>
</dbReference>
<dbReference type="PDB" id="6PB1">
    <property type="method" value="EM"/>
    <property type="resolution" value="2.80 A"/>
    <property type="chains" value="A=61-184"/>
</dbReference>
<dbReference type="PDB" id="6PT0">
    <property type="method" value="EM"/>
    <property type="resolution" value="3.20 A"/>
    <property type="chains" value="A=1-354"/>
</dbReference>
<dbReference type="PDB" id="6QNO">
    <property type="method" value="EM"/>
    <property type="resolution" value="4.38 A"/>
    <property type="chains" value="A=1-354"/>
</dbReference>
<dbReference type="PDB" id="6VU8">
    <property type="method" value="EM"/>
    <property type="resolution" value="4.14 A"/>
    <property type="chains" value="B=2-354"/>
</dbReference>
<dbReference type="PDB" id="6XBJ">
    <property type="method" value="EM"/>
    <property type="resolution" value="3.88 A"/>
    <property type="chains" value="A=1-354"/>
</dbReference>
<dbReference type="PDB" id="6XBK">
    <property type="method" value="EM"/>
    <property type="resolution" value="3.24 A"/>
    <property type="chains" value="A=1-354"/>
</dbReference>
<dbReference type="PDB" id="6XBL">
    <property type="method" value="EM"/>
    <property type="resolution" value="3.90 A"/>
    <property type="chains" value="A=1-354"/>
</dbReference>
<dbReference type="PDB" id="6XBM">
    <property type="method" value="EM"/>
    <property type="resolution" value="3.15 A"/>
    <property type="chains" value="A=1-354"/>
</dbReference>
<dbReference type="PDB" id="7CMU">
    <property type="method" value="EM"/>
    <property type="resolution" value="3.00 A"/>
    <property type="chains" value="A=1-354"/>
</dbReference>
<dbReference type="PDB" id="7CMV">
    <property type="method" value="EM"/>
    <property type="resolution" value="2.70 A"/>
    <property type="chains" value="A=1-354"/>
</dbReference>
<dbReference type="PDB" id="7DB6">
    <property type="method" value="EM"/>
    <property type="resolution" value="3.30 A"/>
    <property type="chains" value="A=1-354"/>
</dbReference>
<dbReference type="PDB" id="7DW9">
    <property type="method" value="EM"/>
    <property type="resolution" value="2.60 A"/>
    <property type="chains" value="A=1-19, A=61-181, A=229-242"/>
</dbReference>
<dbReference type="PDB" id="7E2X">
    <property type="method" value="EM"/>
    <property type="resolution" value="3.00 A"/>
    <property type="chains" value="A=1-354"/>
</dbReference>
<dbReference type="PDB" id="7E2Y">
    <property type="method" value="EM"/>
    <property type="resolution" value="3.00 A"/>
    <property type="chains" value="A=1-354"/>
</dbReference>
<dbReference type="PDB" id="7E2Z">
    <property type="method" value="EM"/>
    <property type="resolution" value="3.10 A"/>
    <property type="chains" value="A=1-354"/>
</dbReference>
<dbReference type="PDB" id="7E32">
    <property type="method" value="EM"/>
    <property type="resolution" value="2.90 A"/>
    <property type="chains" value="A=1-354"/>
</dbReference>
<dbReference type="PDB" id="7E33">
    <property type="method" value="EM"/>
    <property type="resolution" value="2.90 A"/>
    <property type="chains" value="A=1-354"/>
</dbReference>
<dbReference type="PDB" id="7E9G">
    <property type="method" value="EM"/>
    <property type="resolution" value="3.50 A"/>
    <property type="chains" value="A=1-354"/>
</dbReference>
<dbReference type="PDB" id="7EB2">
    <property type="method" value="EM"/>
    <property type="resolution" value="3.50 A"/>
    <property type="chains" value="A=1-354"/>
</dbReference>
<dbReference type="PDB" id="7EJX">
    <property type="method" value="EM"/>
    <property type="resolution" value="2.40 A"/>
    <property type="chains" value="A=1-354"/>
</dbReference>
<dbReference type="PDB" id="7EO2">
    <property type="method" value="EM"/>
    <property type="resolution" value="2.89 A"/>
    <property type="chains" value="B=1-354"/>
</dbReference>
<dbReference type="PDB" id="7EO4">
    <property type="method" value="EM"/>
    <property type="resolution" value="2.86 A"/>
    <property type="chains" value="B=1-354"/>
</dbReference>
<dbReference type="PDB" id="7EUO">
    <property type="method" value="EM"/>
    <property type="resolution" value="2.90 A"/>
    <property type="chains" value="A=1-354"/>
</dbReference>
<dbReference type="PDB" id="7EVY">
    <property type="method" value="EM"/>
    <property type="resolution" value="2.98 A"/>
    <property type="chains" value="A=1-354"/>
</dbReference>
<dbReference type="PDB" id="7EVZ">
    <property type="method" value="EM"/>
    <property type="resolution" value="3.07 A"/>
    <property type="chains" value="A=1-354"/>
</dbReference>
<dbReference type="PDB" id="7EW0">
    <property type="method" value="EM"/>
    <property type="resolution" value="3.42 A"/>
    <property type="chains" value="A=1-354"/>
</dbReference>
<dbReference type="PDB" id="7EW1">
    <property type="method" value="EM"/>
    <property type="resolution" value="3.40 A"/>
    <property type="chains" value="D=1-354"/>
</dbReference>
<dbReference type="PDB" id="7EW2">
    <property type="method" value="EM"/>
    <property type="resolution" value="3.10 A"/>
    <property type="chains" value="A=1-354"/>
</dbReference>
<dbReference type="PDB" id="7EW3">
    <property type="method" value="EM"/>
    <property type="resolution" value="3.10 A"/>
    <property type="chains" value="A=1-354"/>
</dbReference>
<dbReference type="PDB" id="7EW4">
    <property type="method" value="EM"/>
    <property type="resolution" value="3.20 A"/>
    <property type="chains" value="A=1-354"/>
</dbReference>
<dbReference type="PDB" id="7EW7">
    <property type="method" value="EM"/>
    <property type="resolution" value="3.27 A"/>
    <property type="chains" value="A=1-354"/>
</dbReference>
<dbReference type="PDB" id="7EXD">
    <property type="method" value="EM"/>
    <property type="resolution" value="3.40 A"/>
    <property type="chains" value="A=1-354"/>
</dbReference>
<dbReference type="PDB" id="7EZH">
    <property type="method" value="EM"/>
    <property type="resolution" value="3.20 A"/>
    <property type="chains" value="A=1-354"/>
</dbReference>
<dbReference type="PDB" id="7EZK">
    <property type="method" value="EM"/>
    <property type="resolution" value="3.10 A"/>
    <property type="chains" value="A=4-19, A=61-181, A=229-242"/>
</dbReference>
<dbReference type="PDB" id="7EZM">
    <property type="method" value="EM"/>
    <property type="resolution" value="2.90 A"/>
    <property type="chains" value="A=2-30"/>
</dbReference>
<dbReference type="PDB" id="7F1Q">
    <property type="method" value="EM"/>
    <property type="resolution" value="2.90 A"/>
    <property type="chains" value="A=1-354"/>
</dbReference>
<dbReference type="PDB" id="7F1R">
    <property type="method" value="EM"/>
    <property type="resolution" value="3.00 A"/>
    <property type="chains" value="A=1-354"/>
</dbReference>
<dbReference type="PDB" id="7F1S">
    <property type="method" value="EM"/>
    <property type="resolution" value="2.80 A"/>
    <property type="chains" value="A=1-354"/>
</dbReference>
<dbReference type="PDB" id="7F4D">
    <property type="method" value="EM"/>
    <property type="resolution" value="3.00 A"/>
    <property type="chains" value="A=4-19, A=61-181, A=229-242"/>
</dbReference>
<dbReference type="PDB" id="7F4F">
    <property type="method" value="EM"/>
    <property type="resolution" value="2.90 A"/>
    <property type="chains" value="A=1-19, A=61-181, A=229-242"/>
</dbReference>
<dbReference type="PDB" id="7F4H">
    <property type="method" value="EM"/>
    <property type="resolution" value="2.70 A"/>
    <property type="chains" value="A=4-19, A=61-181, A=229-242"/>
</dbReference>
<dbReference type="PDB" id="7F4I">
    <property type="method" value="EM"/>
    <property type="resolution" value="3.10 A"/>
    <property type="chains" value="A=1-19, A=61-181, A=229-242"/>
</dbReference>
<dbReference type="PDB" id="7JHJ">
    <property type="method" value="EM"/>
    <property type="resolution" value="3.20 A"/>
    <property type="chains" value="A=2-354"/>
</dbReference>
<dbReference type="PDB" id="7JVR">
    <property type="method" value="EM"/>
    <property type="resolution" value="2.80 A"/>
    <property type="chains" value="A=1-354"/>
</dbReference>
<dbReference type="PDB" id="7L0P">
    <property type="method" value="EM"/>
    <property type="resolution" value="4.10 A"/>
    <property type="chains" value="A=1-354"/>
</dbReference>
<dbReference type="PDB" id="7L0Q">
    <property type="method" value="EM"/>
    <property type="resolution" value="4.30 A"/>
    <property type="chains" value="A=1-354"/>
</dbReference>
<dbReference type="PDB" id="7L0R">
    <property type="method" value="EM"/>
    <property type="resolution" value="4.20 A"/>
    <property type="chains" value="A=1-354"/>
</dbReference>
<dbReference type="PDB" id="7L0S">
    <property type="method" value="EM"/>
    <property type="resolution" value="4.50 A"/>
    <property type="chains" value="A=1-354"/>
</dbReference>
<dbReference type="PDB" id="7MTS">
    <property type="method" value="EM"/>
    <property type="resolution" value="3.20 A"/>
    <property type="chains" value="C=1-354"/>
</dbReference>
<dbReference type="PDB" id="7NA7">
    <property type="method" value="EM"/>
    <property type="resolution" value="2.70 A"/>
    <property type="chains" value="A=1-354"/>
</dbReference>
<dbReference type="PDB" id="7NA8">
    <property type="method" value="EM"/>
    <property type="resolution" value="2.70 A"/>
    <property type="chains" value="A=1-354"/>
</dbReference>
<dbReference type="PDB" id="7O7F">
    <property type="method" value="EM"/>
    <property type="resolution" value="3.15 A"/>
    <property type="chains" value="A=1-354"/>
</dbReference>
<dbReference type="PDB" id="7P02">
    <property type="method" value="EM"/>
    <property type="resolution" value="2.87 A"/>
    <property type="chains" value="A=229-242"/>
</dbReference>
<dbReference type="PDB" id="7RKM">
    <property type="method" value="EM"/>
    <property type="resolution" value="3.50 A"/>
    <property type="chains" value="A=2-354"/>
</dbReference>
<dbReference type="PDB" id="7RKN">
    <property type="method" value="EM"/>
    <property type="resolution" value="3.60 A"/>
    <property type="chains" value="A=2-354"/>
</dbReference>
<dbReference type="PDB" id="7RKX">
    <property type="method" value="EM"/>
    <property type="resolution" value="3.10 A"/>
    <property type="chains" value="A=2-354"/>
</dbReference>
<dbReference type="PDB" id="7RKY">
    <property type="method" value="EM"/>
    <property type="resolution" value="3.80 A"/>
    <property type="chains" value="A=2-354"/>
</dbReference>
<dbReference type="PDB" id="7S8M">
    <property type="method" value="EM"/>
    <property type="resolution" value="2.54 A"/>
    <property type="chains" value="B=1-354"/>
</dbReference>
<dbReference type="PDB" id="7S8O">
    <property type="method" value="EM"/>
    <property type="resolution" value="2.58 A"/>
    <property type="chains" value="B=1-354"/>
</dbReference>
<dbReference type="PDB" id="7SBF">
    <property type="method" value="EM"/>
    <property type="resolution" value="2.90 A"/>
    <property type="chains" value="A=1-354"/>
</dbReference>
<dbReference type="PDB" id="7SCG">
    <property type="method" value="EM"/>
    <property type="resolution" value="3.00 A"/>
    <property type="chains" value="A=1-354"/>
</dbReference>
<dbReference type="PDB" id="7SQO">
    <property type="method" value="EM"/>
    <property type="resolution" value="3.17 A"/>
    <property type="chains" value="A=1-354"/>
</dbReference>
<dbReference type="PDB" id="7T2G">
    <property type="method" value="EM"/>
    <property type="resolution" value="2.50 A"/>
    <property type="chains" value="A=1-354"/>
</dbReference>
<dbReference type="PDB" id="7T2H">
    <property type="method" value="EM"/>
    <property type="resolution" value="3.20 A"/>
    <property type="chains" value="A=1-354"/>
</dbReference>
<dbReference type="PDB" id="7T6B">
    <property type="method" value="EM"/>
    <property type="resolution" value="3.19 A"/>
    <property type="chains" value="A=1-32"/>
</dbReference>
<dbReference type="PDB" id="7T6S">
    <property type="method" value="EM"/>
    <property type="resolution" value="3.00 A"/>
    <property type="chains" value="A=2-354"/>
</dbReference>
<dbReference type="PDB" id="7T6T">
    <property type="method" value="EM"/>
    <property type="resolution" value="3.20 A"/>
    <property type="chains" value="A=2-354"/>
</dbReference>
<dbReference type="PDB" id="7T6U">
    <property type="method" value="EM"/>
    <property type="resolution" value="2.90 A"/>
    <property type="chains" value="A=2-354"/>
</dbReference>
<dbReference type="PDB" id="7T6V">
    <property type="method" value="EM"/>
    <property type="resolution" value="3.10 A"/>
    <property type="chains" value="A=2-354"/>
</dbReference>
<dbReference type="PDB" id="7TRK">
    <property type="method" value="EM"/>
    <property type="resolution" value="2.80 A"/>
    <property type="chains" value="A=1-354"/>
</dbReference>
<dbReference type="PDB" id="7TRP">
    <property type="method" value="EM"/>
    <property type="resolution" value="2.40 A"/>
    <property type="chains" value="A=1-354"/>
</dbReference>
<dbReference type="PDB" id="7TRQ">
    <property type="method" value="EM"/>
    <property type="resolution" value="2.50 A"/>
    <property type="chains" value="A=1-354"/>
</dbReference>
<dbReference type="PDB" id="7TRS">
    <property type="method" value="EM"/>
    <property type="resolution" value="2.80 A"/>
    <property type="chains" value="A=1-354"/>
</dbReference>
<dbReference type="PDB" id="7TUZ">
    <property type="method" value="EM"/>
    <property type="resolution" value="3.12 A"/>
    <property type="chains" value="A=1-354"/>
</dbReference>
<dbReference type="PDB" id="7U2K">
    <property type="method" value="EM"/>
    <property type="resolution" value="3.30 A"/>
    <property type="chains" value="A=1-354"/>
</dbReference>
<dbReference type="PDB" id="7U2L">
    <property type="method" value="EM"/>
    <property type="resolution" value="3.20 A"/>
    <property type="chains" value="A=1-354"/>
</dbReference>
<dbReference type="PDB" id="7V68">
    <property type="method" value="EM"/>
    <property type="resolution" value="3.40 A"/>
    <property type="chains" value="A=1-354"/>
</dbReference>
<dbReference type="PDB" id="7V69">
    <property type="method" value="EM"/>
    <property type="resolution" value="3.40 A"/>
    <property type="chains" value="A=1-354"/>
</dbReference>
<dbReference type="PDB" id="7V6A">
    <property type="method" value="EM"/>
    <property type="resolution" value="3.60 A"/>
    <property type="chains" value="A=1-354"/>
</dbReference>
<dbReference type="PDB" id="7V9L">
    <property type="method" value="EM"/>
    <property type="resolution" value="2.60 A"/>
    <property type="chains" value="A=4-19, A=61-181, A=229-242"/>
</dbReference>
<dbReference type="PDB" id="7VAB">
    <property type="method" value="EM"/>
    <property type="resolution" value="3.20 A"/>
    <property type="chains" value="A=1-19, A=61-181, A=229-242"/>
</dbReference>
<dbReference type="PDB" id="7VDH">
    <property type="method" value="EM"/>
    <property type="resolution" value="2.90 A"/>
    <property type="chains" value="A=1-354"/>
</dbReference>
<dbReference type="PDB" id="7VDL">
    <property type="method" value="EM"/>
    <property type="resolution" value="3.22 A"/>
    <property type="chains" value="A=1-354"/>
</dbReference>
<dbReference type="PDB" id="7VDM">
    <property type="method" value="EM"/>
    <property type="resolution" value="2.98 A"/>
    <property type="chains" value="A=1-354"/>
</dbReference>
<dbReference type="PDB" id="7VFX">
    <property type="method" value="EM"/>
    <property type="resolution" value="2.80 A"/>
    <property type="chains" value="A=1-354"/>
</dbReference>
<dbReference type="PDB" id="7VGX">
    <property type="method" value="EM"/>
    <property type="resolution" value="3.20 A"/>
    <property type="chains" value="A=2-354"/>
</dbReference>
<dbReference type="PDB" id="7VGY">
    <property type="method" value="EM"/>
    <property type="resolution" value="3.10 A"/>
    <property type="chains" value="B=2-354"/>
</dbReference>
<dbReference type="PDB" id="7VGZ">
    <property type="method" value="EM"/>
    <property type="resolution" value="3.30 A"/>
    <property type="chains" value="C=2-354"/>
</dbReference>
<dbReference type="PDB" id="7VH0">
    <property type="method" value="EM"/>
    <property type="resolution" value="3.46 A"/>
    <property type="chains" value="B=2-354"/>
</dbReference>
<dbReference type="PDB" id="7VIE">
    <property type="method" value="EM"/>
    <property type="resolution" value="2.86 A"/>
    <property type="chains" value="D=1-354"/>
</dbReference>
<dbReference type="PDB" id="7VIF">
    <property type="method" value="EM"/>
    <property type="resolution" value="2.83 A"/>
    <property type="chains" value="D=1-354"/>
</dbReference>
<dbReference type="PDB" id="7VIG">
    <property type="method" value="EM"/>
    <property type="resolution" value="2.89 A"/>
    <property type="chains" value="D=1-354"/>
</dbReference>
<dbReference type="PDB" id="7VIH">
    <property type="method" value="EM"/>
    <property type="resolution" value="2.98 A"/>
    <property type="chains" value="D=1-354"/>
</dbReference>
<dbReference type="PDB" id="7VKT">
    <property type="method" value="EM"/>
    <property type="resolution" value="2.90 A"/>
    <property type="chains" value="B=1-354"/>
</dbReference>
<dbReference type="PDB" id="7VL8">
    <property type="method" value="EM"/>
    <property type="resolution" value="2.90 A"/>
    <property type="chains" value="A=1-354"/>
</dbReference>
<dbReference type="PDB" id="7VL9">
    <property type="method" value="EM"/>
    <property type="resolution" value="2.60 A"/>
    <property type="chains" value="A=1-354"/>
</dbReference>
<dbReference type="PDB" id="7VLA">
    <property type="method" value="EM"/>
    <property type="resolution" value="2.70 A"/>
    <property type="chains" value="A=1-354"/>
</dbReference>
<dbReference type="PDB" id="7VUG">
    <property type="method" value="EM"/>
    <property type="resolution" value="3.20 A"/>
    <property type="chains" value="A=2-354"/>
</dbReference>
<dbReference type="PDB" id="7VUY">
    <property type="method" value="EM"/>
    <property type="resolution" value="2.84 A"/>
    <property type="chains" value="A=1-354"/>
</dbReference>
<dbReference type="PDB" id="7VUZ">
    <property type="method" value="EM"/>
    <property type="resolution" value="2.89 A"/>
    <property type="chains" value="A=1-354"/>
</dbReference>
<dbReference type="PDB" id="7VV3">
    <property type="method" value="EM"/>
    <property type="resolution" value="2.97 A"/>
    <property type="chains" value="A=1-354"/>
</dbReference>
<dbReference type="PDB" id="7VV5">
    <property type="method" value="EM"/>
    <property type="resolution" value="2.76 A"/>
    <property type="chains" value="A=1-354"/>
</dbReference>
<dbReference type="PDB" id="7W0L">
    <property type="method" value="EM"/>
    <property type="resolution" value="3.57 A"/>
    <property type="chains" value="A=1-354"/>
</dbReference>
<dbReference type="PDB" id="7W0M">
    <property type="method" value="EM"/>
    <property type="resolution" value="3.71 A"/>
    <property type="chains" value="A=1-354"/>
</dbReference>
<dbReference type="PDB" id="7W0N">
    <property type="method" value="EM"/>
    <property type="resolution" value="4.21 A"/>
    <property type="chains" value="A=1-354"/>
</dbReference>
<dbReference type="PDB" id="7W0O">
    <property type="method" value="EM"/>
    <property type="resolution" value="3.78 A"/>
    <property type="chains" value="A=1-354"/>
</dbReference>
<dbReference type="PDB" id="7W0P">
    <property type="method" value="EM"/>
    <property type="resolution" value="3.16 A"/>
    <property type="chains" value="A=1-354"/>
</dbReference>
<dbReference type="PDB" id="7WF7">
    <property type="method" value="EM"/>
    <property type="resolution" value="3.40 A"/>
    <property type="chains" value="B=1-354"/>
</dbReference>
<dbReference type="PDB" id="7WIC">
    <property type="method" value="EM"/>
    <property type="resolution" value="2.80 A"/>
    <property type="chains" value="A=1-354"/>
</dbReference>
<dbReference type="PDB" id="7WIG">
    <property type="method" value="EM"/>
    <property type="resolution" value="2.70 A"/>
    <property type="chains" value="A=1-354"/>
</dbReference>
<dbReference type="PDB" id="7WJ5">
    <property type="method" value="EM"/>
    <property type="resolution" value="3.72 A"/>
    <property type="chains" value="A=1-354"/>
</dbReference>
<dbReference type="PDB" id="7WQ3">
    <property type="method" value="EM"/>
    <property type="resolution" value="2.70 A"/>
    <property type="chains" value="A=1-354"/>
</dbReference>
<dbReference type="PDB" id="7WU4">
    <property type="method" value="EM"/>
    <property type="resolution" value="3.40 A"/>
    <property type="chains" value="A=181-354"/>
</dbReference>
<dbReference type="PDB" id="7WU5">
    <property type="method" value="EM"/>
    <property type="resolution" value="3.00 A"/>
    <property type="chains" value="A=4-57, A=181-354"/>
</dbReference>
<dbReference type="PDB" id="7WU9">
    <property type="method" value="EM"/>
    <property type="resolution" value="3.38 A"/>
    <property type="chains" value="A=2-354"/>
</dbReference>
<dbReference type="PDB" id="7WUI">
    <property type="method" value="EM"/>
    <property type="resolution" value="3.10 A"/>
    <property type="chains" value="A=1-19, A=61-181, A=229-242"/>
</dbReference>
<dbReference type="PDB" id="7WUJ">
    <property type="method" value="EM"/>
    <property type="resolution" value="3.30 A"/>
    <property type="chains" value="A=4-19, A=61-181, A=229-242"/>
</dbReference>
<dbReference type="PDB" id="7WVU">
    <property type="method" value="EM"/>
    <property type="resolution" value="3.30 A"/>
    <property type="chains" value="A=1-354"/>
</dbReference>
<dbReference type="PDB" id="7WYB">
    <property type="method" value="EM"/>
    <property type="resolution" value="2.97 A"/>
    <property type="chains" value="B=1-354"/>
</dbReference>
<dbReference type="PDB" id="7WZ4">
    <property type="method" value="EM"/>
    <property type="resolution" value="3.00 A"/>
    <property type="chains" value="A=1-354"/>
</dbReference>
<dbReference type="PDB" id="7X2V">
    <property type="method" value="EM"/>
    <property type="resolution" value="3.09 A"/>
    <property type="chains" value="B=1-354"/>
</dbReference>
<dbReference type="PDB" id="7X5H">
    <property type="method" value="EM"/>
    <property type="resolution" value="3.10 A"/>
    <property type="chains" value="A=1-354"/>
</dbReference>
<dbReference type="PDB" id="7X9A">
    <property type="method" value="EM"/>
    <property type="resolution" value="3.20 A"/>
    <property type="chains" value="A=1-354"/>
</dbReference>
<dbReference type="PDB" id="7X9B">
    <property type="method" value="EM"/>
    <property type="resolution" value="3.40 A"/>
    <property type="chains" value="A=1-354"/>
</dbReference>
<dbReference type="PDB" id="7X9C">
    <property type="method" value="EM"/>
    <property type="resolution" value="3.00 A"/>
    <property type="chains" value="A=1-354"/>
</dbReference>
<dbReference type="PDB" id="7X9Y">
    <property type="method" value="EM"/>
    <property type="resolution" value="3.10 A"/>
    <property type="chains" value="A=1-354"/>
</dbReference>
<dbReference type="PDB" id="7XA3">
    <property type="method" value="EM"/>
    <property type="resolution" value="2.90 A"/>
    <property type="chains" value="A=1-354"/>
</dbReference>
<dbReference type="PDB" id="7XAT">
    <property type="method" value="EM"/>
    <property type="resolution" value="2.85 A"/>
    <property type="chains" value="B=1-354"/>
</dbReference>
<dbReference type="PDB" id="7XAU">
    <property type="method" value="EM"/>
    <property type="resolution" value="2.97 A"/>
    <property type="chains" value="B=1-354"/>
</dbReference>
<dbReference type="PDB" id="7XAV">
    <property type="method" value="EM"/>
    <property type="resolution" value="2.87 A"/>
    <property type="chains" value="B=1-354"/>
</dbReference>
<dbReference type="PDB" id="7XBW">
    <property type="method" value="EM"/>
    <property type="resolution" value="2.80 A"/>
    <property type="chains" value="C=1-354"/>
</dbReference>
<dbReference type="PDB" id="7XBX">
    <property type="method" value="EM"/>
    <property type="resolution" value="3.40 A"/>
    <property type="chains" value="C=1-354"/>
</dbReference>
<dbReference type="PDB" id="7XK2">
    <property type="method" value="EM"/>
    <property type="resolution" value="3.10 A"/>
    <property type="chains" value="A=1-354"/>
</dbReference>
<dbReference type="PDB" id="7XK8">
    <property type="method" value="EM"/>
    <property type="resolution" value="3.30 A"/>
    <property type="chains" value="A=1-354"/>
</dbReference>
<dbReference type="PDB" id="7XMR">
    <property type="method" value="EM"/>
    <property type="resolution" value="3.10 A"/>
    <property type="chains" value="A=1-354"/>
</dbReference>
<dbReference type="PDB" id="7XMS">
    <property type="method" value="EM"/>
    <property type="resolution" value="2.90 A"/>
    <property type="chains" value="A=1-354"/>
</dbReference>
<dbReference type="PDB" id="7XMT">
    <property type="method" value="EM"/>
    <property type="resolution" value="2.80 A"/>
    <property type="chains" value="A=1-354"/>
</dbReference>
<dbReference type="PDB" id="7XTA">
    <property type="method" value="EM"/>
    <property type="resolution" value="3.20 A"/>
    <property type="chains" value="A=1-354"/>
</dbReference>
<dbReference type="PDB" id="7XXH">
    <property type="method" value="EM"/>
    <property type="resolution" value="2.90 A"/>
    <property type="chains" value="A=2-24"/>
</dbReference>
<dbReference type="PDB" id="7Y12">
    <property type="method" value="EM"/>
    <property type="resolution" value="3.10 A"/>
    <property type="chains" value="A=1-354"/>
</dbReference>
<dbReference type="PDB" id="7Y15">
    <property type="method" value="EM"/>
    <property type="resolution" value="2.90 A"/>
    <property type="chains" value="A=1-354"/>
</dbReference>
<dbReference type="PDB" id="7Y1F">
    <property type="method" value="EM"/>
    <property type="resolution" value="3.30 A"/>
    <property type="chains" value="A=1-354"/>
</dbReference>
<dbReference type="PDB" id="7Y64">
    <property type="method" value="EM"/>
    <property type="resolution" value="2.90 A"/>
    <property type="chains" value="A=1-354"/>
</dbReference>
<dbReference type="PDB" id="7Y65">
    <property type="method" value="EM"/>
    <property type="resolution" value="3.20 A"/>
    <property type="chains" value="A=1-354"/>
</dbReference>
<dbReference type="PDB" id="7Y66">
    <property type="method" value="EM"/>
    <property type="resolution" value="2.90 A"/>
    <property type="chains" value="A=1-354"/>
</dbReference>
<dbReference type="PDB" id="7Y67">
    <property type="method" value="EM"/>
    <property type="resolution" value="2.80 A"/>
    <property type="chains" value="A=1-354"/>
</dbReference>
<dbReference type="PDB" id="7Y89">
    <property type="method" value="EM"/>
    <property type="resolution" value="3.02 A"/>
    <property type="chains" value="C=4-354"/>
</dbReference>
<dbReference type="PDB" id="7YAC">
    <property type="method" value="EM"/>
    <property type="resolution" value="3.24 A"/>
    <property type="chains" value="A=1-354"/>
</dbReference>
<dbReference type="PDB" id="7YAE">
    <property type="method" value="EM"/>
    <property type="resolution" value="3.37 A"/>
    <property type="chains" value="A=1-354"/>
</dbReference>
<dbReference type="PDB" id="7YDJ">
    <property type="method" value="EM"/>
    <property type="resolution" value="3.03 A"/>
    <property type="chains" value="A=1-20, A=60-181, A=229-242"/>
</dbReference>
<dbReference type="PDB" id="7YDP">
    <property type="method" value="EM"/>
    <property type="resolution" value="3.10 A"/>
    <property type="chains" value="A=4-19, A=61-181, A=229-242"/>
</dbReference>
<dbReference type="PDB" id="7YKD">
    <property type="method" value="EM"/>
    <property type="resolution" value="2.81 A"/>
    <property type="chains" value="C=4-354"/>
</dbReference>
<dbReference type="PDB" id="7YON">
    <property type="method" value="EM"/>
    <property type="resolution" value="2.95 A"/>
    <property type="chains" value="A=1-354"/>
</dbReference>
<dbReference type="PDB" id="7YOO">
    <property type="method" value="EM"/>
    <property type="resolution" value="3.11 A"/>
    <property type="chains" value="A=1-354"/>
</dbReference>
<dbReference type="PDB" id="7YU3">
    <property type="method" value="EM"/>
    <property type="resolution" value="3.40 A"/>
    <property type="chains" value="A=1-354"/>
</dbReference>
<dbReference type="PDB" id="7YU5">
    <property type="method" value="EM"/>
    <property type="resolution" value="3.30 A"/>
    <property type="chains" value="A=1-354"/>
</dbReference>
<dbReference type="PDB" id="7YU6">
    <property type="method" value="EM"/>
    <property type="resolution" value="3.50 A"/>
    <property type="chains" value="A=1-354"/>
</dbReference>
<dbReference type="PDB" id="7YU7">
    <property type="method" value="EM"/>
    <property type="resolution" value="3.80 A"/>
    <property type="chains" value="A=1-354"/>
</dbReference>
<dbReference type="PDB" id="7YU8">
    <property type="method" value="EM"/>
    <property type="resolution" value="4.50 A"/>
    <property type="chains" value="A=1-354"/>
</dbReference>
<dbReference type="PDB" id="8DZP">
    <property type="method" value="EM"/>
    <property type="resolution" value="2.71 A"/>
    <property type="chains" value="B=1-354"/>
</dbReference>
<dbReference type="PDB" id="8EF5">
    <property type="method" value="EM"/>
    <property type="resolution" value="3.30 A"/>
    <property type="chains" value="A/F=1-354"/>
</dbReference>
<dbReference type="PDB" id="8EF6">
    <property type="method" value="EM"/>
    <property type="resolution" value="3.20 A"/>
    <property type="chains" value="A/F=1-354"/>
</dbReference>
<dbReference type="PDB" id="8EFB">
    <property type="method" value="EM"/>
    <property type="resolution" value="3.20 A"/>
    <property type="chains" value="A=1-354"/>
</dbReference>
<dbReference type="PDB" id="8EFL">
    <property type="method" value="EM"/>
    <property type="resolution" value="3.20 A"/>
    <property type="chains" value="A/F=1-354"/>
</dbReference>
<dbReference type="PDB" id="8EFO">
    <property type="method" value="EM"/>
    <property type="resolution" value="2.80 A"/>
    <property type="chains" value="A/F=1-354"/>
</dbReference>
<dbReference type="PDB" id="8EFQ">
    <property type="method" value="EM"/>
    <property type="resolution" value="3.30 A"/>
    <property type="chains" value="A=1-354"/>
</dbReference>
<dbReference type="PDB" id="8F7Q">
    <property type="method" value="EM"/>
    <property type="resolution" value="3.22 A"/>
    <property type="chains" value="A/F=1-354"/>
</dbReference>
<dbReference type="PDB" id="8F7R">
    <property type="method" value="EM"/>
    <property type="resolution" value="3.28 A"/>
    <property type="chains" value="A/F=1-354"/>
</dbReference>
<dbReference type="PDB" id="8F7S">
    <property type="method" value="EM"/>
    <property type="resolution" value="3.00 A"/>
    <property type="chains" value="A/F=1-354"/>
</dbReference>
<dbReference type="PDB" id="8F7W">
    <property type="method" value="EM"/>
    <property type="resolution" value="3.19 A"/>
    <property type="chains" value="A=1-354"/>
</dbReference>
<dbReference type="PDB" id="8F7X">
    <property type="method" value="EM"/>
    <property type="resolution" value="3.28 A"/>
    <property type="chains" value="A=1-354"/>
</dbReference>
<dbReference type="PDB" id="8FEG">
    <property type="method" value="EM"/>
    <property type="resolution" value="2.54 A"/>
    <property type="chains" value="C=1-354"/>
</dbReference>
<dbReference type="PDB" id="8FY8">
    <property type="method" value="EM"/>
    <property type="resolution" value="2.79 A"/>
    <property type="chains" value="A=1-354"/>
</dbReference>
<dbReference type="PDB" id="8FYE">
    <property type="method" value="EM"/>
    <property type="resolution" value="2.85 A"/>
    <property type="chains" value="A=1-354"/>
</dbReference>
<dbReference type="PDB" id="8FYL">
    <property type="method" value="EM"/>
    <property type="resolution" value="2.94 A"/>
    <property type="chains" value="A=1-354"/>
</dbReference>
<dbReference type="PDB" id="8FYT">
    <property type="method" value="EM"/>
    <property type="resolution" value="2.64 A"/>
    <property type="chains" value="A=1-354"/>
</dbReference>
<dbReference type="PDB" id="8FYX">
    <property type="method" value="EM"/>
    <property type="resolution" value="2.62 A"/>
    <property type="chains" value="A=1-354"/>
</dbReference>
<dbReference type="PDB" id="8G05">
    <property type="method" value="EM"/>
    <property type="resolution" value="3.00 A"/>
    <property type="chains" value="A=1-354"/>
</dbReference>
<dbReference type="PDB" id="8G59">
    <property type="method" value="EM"/>
    <property type="resolution" value="2.64 A"/>
    <property type="chains" value="A=1-329"/>
</dbReference>
<dbReference type="PDB" id="8G94">
    <property type="method" value="EM"/>
    <property type="resolution" value="3.15 A"/>
    <property type="chains" value="B=1-354"/>
</dbReference>
<dbReference type="PDB" id="8GAG">
    <property type="method" value="EM"/>
    <property type="resolution" value="3.30 A"/>
    <property type="chains" value="A=1-354"/>
</dbReference>
<dbReference type="PDB" id="8GCM">
    <property type="method" value="EM"/>
    <property type="resolution" value="3.50 A"/>
    <property type="chains" value="A=1-354"/>
</dbReference>
<dbReference type="PDB" id="8GCP">
    <property type="method" value="EM"/>
    <property type="resolution" value="3.10 A"/>
    <property type="chains" value="A=1-354"/>
</dbReference>
<dbReference type="PDB" id="8GDC">
    <property type="method" value="EM"/>
    <property type="resolution" value="3.50 A"/>
    <property type="chains" value="A=1-354"/>
</dbReference>
<dbReference type="PDB" id="8GHV">
    <property type="method" value="EM"/>
    <property type="resolution" value="2.80 A"/>
    <property type="chains" value="A=1-354"/>
</dbReference>
<dbReference type="PDB" id="8GUQ">
    <property type="method" value="EM"/>
    <property type="resolution" value="3.08 A"/>
    <property type="chains" value="A=1-354"/>
</dbReference>
<dbReference type="PDB" id="8GUR">
    <property type="method" value="EM"/>
    <property type="resolution" value="2.84 A"/>
    <property type="chains" value="A=1-354"/>
</dbReference>
<dbReference type="PDB" id="8GUS">
    <property type="method" value="EM"/>
    <property type="resolution" value="2.97 A"/>
    <property type="chains" value="A=1-354"/>
</dbReference>
<dbReference type="PDB" id="8GUT">
    <property type="method" value="EM"/>
    <property type="resolution" value="2.98 A"/>
    <property type="chains" value="A=1-354"/>
</dbReference>
<dbReference type="PDB" id="8H2G">
    <property type="method" value="EM"/>
    <property type="resolution" value="3.01 A"/>
    <property type="chains" value="B=1-354"/>
</dbReference>
<dbReference type="PDB" id="8H4I">
    <property type="method" value="EM"/>
    <property type="resolution" value="3.06 A"/>
    <property type="chains" value="A=4-19, A=61-181, A=229-242"/>
</dbReference>
<dbReference type="PDB" id="8HBD">
    <property type="method" value="EM"/>
    <property type="resolution" value="2.99 A"/>
    <property type="chains" value="A=1-354"/>
</dbReference>
<dbReference type="PDB" id="8HK2">
    <property type="method" value="EM"/>
    <property type="resolution" value="2.90 A"/>
    <property type="chains" value="B=2-354"/>
</dbReference>
<dbReference type="PDB" id="8HK3">
    <property type="method" value="EM"/>
    <property type="resolution" value="3.20 A"/>
    <property type="chains" value="A=2-354"/>
</dbReference>
<dbReference type="PDB" id="8HK5">
    <property type="method" value="EM"/>
    <property type="resolution" value="3.00 A"/>
    <property type="chains" value="C=2-354"/>
</dbReference>
<dbReference type="PDB" id="8HN8">
    <property type="method" value="EM"/>
    <property type="resolution" value="3.00 A"/>
    <property type="chains" value="A=1-354"/>
</dbReference>
<dbReference type="PDB" id="8HNK">
    <property type="method" value="EM"/>
    <property type="resolution" value="3.01 A"/>
    <property type="chains" value="A=1-354"/>
</dbReference>
<dbReference type="PDB" id="8HNL">
    <property type="method" value="EM"/>
    <property type="resolution" value="2.98 A"/>
    <property type="chains" value="A=1-354"/>
</dbReference>
<dbReference type="PDB" id="8HNM">
    <property type="method" value="EM"/>
    <property type="resolution" value="2.94 A"/>
    <property type="chains" value="A=1-354"/>
</dbReference>
<dbReference type="PDB" id="8HOC">
    <property type="method" value="EM"/>
    <property type="resolution" value="3.00 A"/>
    <property type="chains" value="A=1-354"/>
</dbReference>
<dbReference type="PDB" id="8HQE">
    <property type="method" value="EM"/>
    <property type="resolution" value="2.97 A"/>
    <property type="chains" value="A=1-354"/>
</dbReference>
<dbReference type="PDB" id="8HQM">
    <property type="method" value="EM"/>
    <property type="resolution" value="2.95 A"/>
    <property type="chains" value="A=1-354"/>
</dbReference>
<dbReference type="PDB" id="8HQN">
    <property type="method" value="EM"/>
    <property type="resolution" value="3.00 A"/>
    <property type="chains" value="A=1-354"/>
</dbReference>
<dbReference type="PDB" id="8HS3">
    <property type="method" value="EM"/>
    <property type="resolution" value="3.14 A"/>
    <property type="chains" value="A=1-354"/>
</dbReference>
<dbReference type="PDB" id="8HSC">
    <property type="method" value="EM"/>
    <property type="resolution" value="3.22 A"/>
    <property type="chains" value="A=1-354"/>
</dbReference>
<dbReference type="PDB" id="8HVI">
    <property type="method" value="EM"/>
    <property type="resolution" value="3.04 A"/>
    <property type="chains" value="B=1-354"/>
</dbReference>
<dbReference type="PDB" id="8I7V">
    <property type="method" value="EM"/>
    <property type="resolution" value="2.77 A"/>
    <property type="chains" value="B=1-354"/>
</dbReference>
<dbReference type="PDB" id="8I7W">
    <property type="method" value="EM"/>
    <property type="resolution" value="3.39 A"/>
    <property type="chains" value="B=1-354"/>
</dbReference>
<dbReference type="PDB" id="8IA8">
    <property type="method" value="EM"/>
    <property type="resolution" value="2.86 A"/>
    <property type="chains" value="C=4-354"/>
</dbReference>
<dbReference type="PDB" id="8IC0">
    <property type="method" value="EM"/>
    <property type="resolution" value="3.41 A"/>
    <property type="chains" value="B=1-354"/>
</dbReference>
<dbReference type="PDB" id="8ID3">
    <property type="method" value="EM"/>
    <property type="resolution" value="3.10 A"/>
    <property type="chains" value="A=1-354"/>
</dbReference>
<dbReference type="PDB" id="8ID4">
    <property type="method" value="EM"/>
    <property type="resolution" value="3.10 A"/>
    <property type="chains" value="A=1-354"/>
</dbReference>
<dbReference type="PDB" id="8ID6">
    <property type="method" value="EM"/>
    <property type="resolution" value="2.80 A"/>
    <property type="chains" value="A=1-354"/>
</dbReference>
<dbReference type="PDB" id="8ID8">
    <property type="method" value="EM"/>
    <property type="resolution" value="3.00 A"/>
    <property type="chains" value="A=1-354"/>
</dbReference>
<dbReference type="PDB" id="8ID9">
    <property type="method" value="EM"/>
    <property type="resolution" value="3.00 A"/>
    <property type="chains" value="A=1-354"/>
</dbReference>
<dbReference type="PDB" id="8IHB">
    <property type="method" value="EM"/>
    <property type="resolution" value="2.85 A"/>
    <property type="chains" value="A=1-354"/>
</dbReference>
<dbReference type="PDB" id="8IHF">
    <property type="method" value="EM"/>
    <property type="resolution" value="2.97 A"/>
    <property type="chains" value="A=1-354"/>
</dbReference>
<dbReference type="PDB" id="8IHH">
    <property type="method" value="EM"/>
    <property type="resolution" value="3.06 A"/>
    <property type="chains" value="A=1-354"/>
</dbReference>
<dbReference type="PDB" id="8IHI">
    <property type="method" value="EM"/>
    <property type="resolution" value="3.11 A"/>
    <property type="chains" value="A=1-354"/>
</dbReference>
<dbReference type="PDB" id="8IHJ">
    <property type="method" value="EM"/>
    <property type="resolution" value="3.07 A"/>
    <property type="chains" value="A=1-354"/>
</dbReference>
<dbReference type="PDB" id="8IJ3">
    <property type="method" value="EM"/>
    <property type="resolution" value="3.28 A"/>
    <property type="chains" value="C=4-354"/>
</dbReference>
<dbReference type="PDB" id="8IJA">
    <property type="method" value="EM"/>
    <property type="resolution" value="2.69 A"/>
    <property type="chains" value="C=4-354"/>
</dbReference>
<dbReference type="PDB" id="8IJB">
    <property type="method" value="EM"/>
    <property type="resolution" value="3.23 A"/>
    <property type="chains" value="C=4-354"/>
</dbReference>
<dbReference type="PDB" id="8IJD">
    <property type="method" value="EM"/>
    <property type="resolution" value="3.25 A"/>
    <property type="chains" value="C=4-354"/>
</dbReference>
<dbReference type="PDB" id="8IKG">
    <property type="method" value="EM"/>
    <property type="resolution" value="3.40 A"/>
    <property type="chains" value="A=1-354"/>
</dbReference>
<dbReference type="PDB" id="8IKH">
    <property type="method" value="EM"/>
    <property type="resolution" value="3.30 A"/>
    <property type="chains" value="A=1-354"/>
</dbReference>
<dbReference type="PDB" id="8INR">
    <property type="method" value="EM"/>
    <property type="resolution" value="2.73 A"/>
    <property type="chains" value="A=1-19, A=61-181, A=229-242"/>
</dbReference>
<dbReference type="PDB" id="8IOC">
    <property type="method" value="EM"/>
    <property type="resolution" value="2.86 A"/>
    <property type="chains" value="A=1-19, A=61-181, A=229-242"/>
</dbReference>
<dbReference type="PDB" id="8IOD">
    <property type="method" value="EM"/>
    <property type="resolution" value="2.59 A"/>
    <property type="chains" value="A=4-19, A=61-181, A=229-242"/>
</dbReference>
<dbReference type="PDB" id="8IRS">
    <property type="method" value="EM"/>
    <property type="resolution" value="3.00 A"/>
    <property type="chains" value="A=1-354"/>
</dbReference>
<dbReference type="PDB" id="8IRT">
    <property type="method" value="EM"/>
    <property type="resolution" value="2.70 A"/>
    <property type="chains" value="A=1-354"/>
</dbReference>
<dbReference type="PDB" id="8IRV">
    <property type="method" value="EM"/>
    <property type="resolution" value="3.10 A"/>
    <property type="chains" value="A=2-19, A=61-181, A=229-242"/>
</dbReference>
<dbReference type="PDB" id="8IU2">
    <property type="method" value="EM"/>
    <property type="resolution" value="3.35 A"/>
    <property type="chains" value="A=1-354"/>
</dbReference>
<dbReference type="PDB" id="8IW4">
    <property type="method" value="EM"/>
    <property type="resolution" value="3.49 A"/>
    <property type="chains" value="A=4-19, A=61-181, A=229-242"/>
</dbReference>
<dbReference type="PDB" id="8IW7">
    <property type="method" value="EM"/>
    <property type="resolution" value="2.97 A"/>
    <property type="chains" value="A=1-19, A=61-181, A=229-242"/>
</dbReference>
<dbReference type="PDB" id="8IW9">
    <property type="method" value="EM"/>
    <property type="resolution" value="3.08 A"/>
    <property type="chains" value="A=1-19, A=61-181, A=229-242"/>
</dbReference>
<dbReference type="PDB" id="8IY5">
    <property type="method" value="EM"/>
    <property type="resolution" value="2.80 A"/>
    <property type="chains" value="A=1-354"/>
</dbReference>
<dbReference type="PDB" id="8IZ4">
    <property type="method" value="EM"/>
    <property type="resolution" value="2.93 A"/>
    <property type="chains" value="A=1-354"/>
</dbReference>
<dbReference type="PDB" id="8J18">
    <property type="method" value="EM"/>
    <property type="resolution" value="2.89 A"/>
    <property type="chains" value="A=1-354"/>
</dbReference>
<dbReference type="PDB" id="8J19">
    <property type="method" value="EM"/>
    <property type="resolution" value="3.23 A"/>
    <property type="chains" value="A=1-354"/>
</dbReference>
<dbReference type="PDB" id="8J1A">
    <property type="method" value="EM"/>
    <property type="resolution" value="3.24 A"/>
    <property type="chains" value="A=1-354"/>
</dbReference>
<dbReference type="PDB" id="8J20">
    <property type="method" value="EM"/>
    <property type="resolution" value="3.20 A"/>
    <property type="chains" value="C=1-354"/>
</dbReference>
<dbReference type="PDB" id="8J21">
    <property type="method" value="EM"/>
    <property type="resolution" value="3.30 A"/>
    <property type="chains" value="C=1-354"/>
</dbReference>
<dbReference type="PDB" id="8J22">
    <property type="method" value="EM"/>
    <property type="resolution" value="3.20 A"/>
    <property type="chains" value="B=1-354"/>
</dbReference>
<dbReference type="PDB" id="8J23">
    <property type="method" value="EM"/>
    <property type="resolution" value="3.20 A"/>
    <property type="chains" value="B=1-354"/>
</dbReference>
<dbReference type="PDB" id="8J24">
    <property type="method" value="EM"/>
    <property type="resolution" value="2.60 A"/>
    <property type="chains" value="C=1-354"/>
</dbReference>
<dbReference type="PDB" id="8J6I">
    <property type="method" value="EM"/>
    <property type="resolution" value="2.92 A"/>
    <property type="chains" value="A=1-354"/>
</dbReference>
<dbReference type="PDB" id="8J6J">
    <property type="method" value="EM"/>
    <property type="resolution" value="2.80 A"/>
    <property type="chains" value="A=1-354"/>
</dbReference>
<dbReference type="PDB" id="8J6L">
    <property type="method" value="EM"/>
    <property type="resolution" value="3.05 A"/>
    <property type="chains" value="A=1-354"/>
</dbReference>
<dbReference type="PDB" id="8J6P">
    <property type="method" value="EM"/>
    <property type="resolution" value="2.55 A"/>
    <property type="chains" value="A=3-354"/>
</dbReference>
<dbReference type="PDB" id="8J6Q">
    <property type="method" value="EM"/>
    <property type="resolution" value="2.60 A"/>
    <property type="chains" value="A=3-354"/>
</dbReference>
<dbReference type="PDB" id="8J6R">
    <property type="method" value="EM"/>
    <property type="resolution" value="2.76 A"/>
    <property type="chains" value="A=3-354"/>
</dbReference>
<dbReference type="PDB" id="8JD3">
    <property type="method" value="EM"/>
    <property type="resolution" value="3.30 A"/>
    <property type="chains" value="A=1-354"/>
</dbReference>
<dbReference type="PDB" id="8JD5">
    <property type="method" value="EM"/>
    <property type="resolution" value="3.60 A"/>
    <property type="chains" value="A=1-354"/>
</dbReference>
<dbReference type="PDB" id="8JEF">
    <property type="method" value="EM"/>
    <property type="resolution" value="2.96 A"/>
    <property type="chains" value="C=4-354"/>
</dbReference>
<dbReference type="PDB" id="8JEI">
    <property type="method" value="EM"/>
    <property type="resolution" value="2.73 A"/>
    <property type="chains" value="C=4-354"/>
</dbReference>
<dbReference type="PDB" id="8JGB">
    <property type="method" value="EM"/>
    <property type="resolution" value="2.84 A"/>
    <property type="chains" value="A=1-354"/>
</dbReference>
<dbReference type="PDB" id="8JGG">
    <property type="method" value="EM"/>
    <property type="resolution" value="3.00 A"/>
    <property type="chains" value="A=1-354"/>
</dbReference>
<dbReference type="PDB" id="8JHY">
    <property type="method" value="EM"/>
    <property type="resolution" value="2.87 A"/>
    <property type="chains" value="D=1-354"/>
</dbReference>
<dbReference type="PDB" id="8JII">
    <property type="method" value="EM"/>
    <property type="resolution" value="3.17 A"/>
    <property type="chains" value="D=1-354"/>
</dbReference>
<dbReference type="PDB" id="8JIL">
    <property type="method" value="EM"/>
    <property type="resolution" value="3.50 A"/>
    <property type="chains" value="D=1-354"/>
</dbReference>
<dbReference type="PDB" id="8JIM">
    <property type="method" value="EM"/>
    <property type="resolution" value="2.98 A"/>
    <property type="chains" value="D=1-354"/>
</dbReference>
<dbReference type="PDB" id="8JIP">
    <property type="method" value="EM"/>
    <property type="resolution" value="2.85 A"/>
    <property type="chains" value="A=4-19, A=61-181, A=229-242"/>
</dbReference>
<dbReference type="PDB" id="8JIR">
    <property type="method" value="EM"/>
    <property type="resolution" value="2.57 A"/>
    <property type="chains" value="A=4-19, A=61-181, A=229-242"/>
</dbReference>
<dbReference type="PDB" id="8JIS">
    <property type="method" value="EM"/>
    <property type="resolution" value="2.46 A"/>
    <property type="chains" value="A=6-19, A=61-181, A=229-242"/>
</dbReference>
<dbReference type="PDB" id="8JJP">
    <property type="method" value="EM"/>
    <property type="resolution" value="2.90 A"/>
    <property type="chains" value="C=1-354"/>
</dbReference>
<dbReference type="PDB" id="8JLJ">
    <property type="method" value="EM"/>
    <property type="resolution" value="3.10 A"/>
    <property type="chains" value="A=1-19, A=61-181, A=229-242"/>
</dbReference>
<dbReference type="PDB" id="8JLK">
    <property type="method" value="EM"/>
    <property type="resolution" value="3.22 A"/>
    <property type="chains" value="A=4-19, A=61-181, A=229-242"/>
</dbReference>
<dbReference type="PDB" id="8JLR">
    <property type="method" value="EM"/>
    <property type="resolution" value="3.00 A"/>
    <property type="chains" value="A=1-19, A=61-181, A=229-242"/>
</dbReference>
<dbReference type="PDB" id="8JPN">
    <property type="method" value="EM"/>
    <property type="resolution" value="2.90 A"/>
    <property type="chains" value="A=1-354"/>
</dbReference>
<dbReference type="PDB" id="8JR9">
    <property type="method" value="EM"/>
    <property type="resolution" value="2.57 A"/>
    <property type="chains" value="A=4-19, A=61-181, A=229-242"/>
</dbReference>
<dbReference type="PDB" id="8JSO">
    <property type="method" value="EM"/>
    <property type="resolution" value="3.40 A"/>
    <property type="chains" value="A=1-19, A=61-181, A=229-242"/>
</dbReference>
<dbReference type="PDB" id="8JSP">
    <property type="method" value="EM"/>
    <property type="resolution" value="3.65 A"/>
    <property type="chains" value="A=4-354"/>
</dbReference>
<dbReference type="PDB" id="8JT6">
    <property type="method" value="EM"/>
    <property type="resolution" value="3.00 A"/>
    <property type="chains" value="A=1-354"/>
</dbReference>
<dbReference type="PDB" id="8JXT">
    <property type="method" value="EM"/>
    <property type="resolution" value="3.07 A"/>
    <property type="chains" value="B=1-354"/>
</dbReference>
<dbReference type="PDB" id="8JXV">
    <property type="method" value="EM"/>
    <property type="resolution" value="3.21 A"/>
    <property type="chains" value="B=1-354"/>
</dbReference>
<dbReference type="PDB" id="8JXW">
    <property type="method" value="EM"/>
    <property type="resolution" value="3.01 A"/>
    <property type="chains" value="B=1-354"/>
</dbReference>
<dbReference type="PDB" id="8JXX">
    <property type="method" value="EM"/>
    <property type="resolution" value="3.06 A"/>
    <property type="chains" value="B=1-354"/>
</dbReference>
<dbReference type="PDB" id="8JZ7">
    <property type="method" value="EM"/>
    <property type="resolution" value="2.60 A"/>
    <property type="chains" value="D=1-354"/>
</dbReference>
<dbReference type="PDB" id="8K2X">
    <property type="method" value="EM"/>
    <property type="resolution" value="3.20 A"/>
    <property type="chains" value="A=1-354"/>
</dbReference>
<dbReference type="PDB" id="8K3Z">
    <property type="method" value="EM"/>
    <property type="resolution" value="2.81 A"/>
    <property type="chains" value="C=1-354"/>
</dbReference>
<dbReference type="PDB" id="8K4N">
    <property type="method" value="EM"/>
    <property type="resolution" value="2.83 A"/>
    <property type="chains" value="A=1-354"/>
</dbReference>
<dbReference type="PDB" id="8K4O">
    <property type="method" value="EM"/>
    <property type="resolution" value="3.01 A"/>
    <property type="chains" value="C=5-354"/>
</dbReference>
<dbReference type="PDB" id="8K4P">
    <property type="method" value="EM"/>
    <property type="resolution" value="2.81 A"/>
    <property type="chains" value="C=1-354"/>
</dbReference>
<dbReference type="PDB" id="8KFX">
    <property type="method" value="EM"/>
    <property type="resolution" value="2.96 A"/>
    <property type="chains" value="A=1-354"/>
</dbReference>
<dbReference type="PDB" id="8KFY">
    <property type="method" value="EM"/>
    <property type="resolution" value="3.06 A"/>
    <property type="chains" value="A=1-354"/>
</dbReference>
<dbReference type="PDB" id="8KFZ">
    <property type="method" value="EM"/>
    <property type="resolution" value="3.30 A"/>
    <property type="chains" value="A=1-354"/>
</dbReference>
<dbReference type="PDB" id="8P12">
    <property type="method" value="EM"/>
    <property type="resolution" value="3.21 A"/>
    <property type="chains" value="A=1-354"/>
</dbReference>
<dbReference type="PDB" id="8P13">
    <property type="method" value="EM"/>
    <property type="resolution" value="5.20 A"/>
    <property type="chains" value="A=1-354"/>
</dbReference>
<dbReference type="PDB" id="8P15">
    <property type="method" value="EM"/>
    <property type="resolution" value="5.90 A"/>
    <property type="chains" value="A=1-354"/>
</dbReference>
<dbReference type="PDB" id="8PJK">
    <property type="method" value="EM"/>
    <property type="resolution" value="2.40 A"/>
    <property type="chains" value="A=1-354"/>
</dbReference>
<dbReference type="PDB" id="8PKM">
    <property type="method" value="EM"/>
    <property type="resolution" value="2.90 A"/>
    <property type="chains" value="A=1-354"/>
</dbReference>
<dbReference type="PDB" id="8SAI">
    <property type="method" value="EM"/>
    <property type="resolution" value="3.27 A"/>
    <property type="chains" value="D=1-354"/>
</dbReference>
<dbReference type="PDB" id="8SG1">
    <property type="method" value="EM"/>
    <property type="resolution" value="2.94 A"/>
    <property type="chains" value="A=4-354"/>
</dbReference>
<dbReference type="PDB" id="8U1U">
    <property type="method" value="EM"/>
    <property type="resolution" value="3.10 A"/>
    <property type="chains" value="B=1-354"/>
</dbReference>
<dbReference type="PDB" id="8U4N">
    <property type="method" value="EM"/>
    <property type="resolution" value="2.72 A"/>
    <property type="chains" value="A=2-354"/>
</dbReference>
<dbReference type="PDB" id="8U4O">
    <property type="method" value="EM"/>
    <property type="resolution" value="3.29 A"/>
    <property type="chains" value="A=2-354"/>
</dbReference>
<dbReference type="PDB" id="8U4P">
    <property type="method" value="EM"/>
    <property type="resolution" value="3.15 A"/>
    <property type="chains" value="A=2-354"/>
</dbReference>
<dbReference type="PDB" id="8U4Q">
    <property type="method" value="EM"/>
    <property type="resolution" value="3.36 A"/>
    <property type="chains" value="A=2-354"/>
</dbReference>
<dbReference type="PDB" id="8UGY">
    <property type="method" value="EM"/>
    <property type="resolution" value="3.31 A"/>
    <property type="chains" value="A=1-354"/>
</dbReference>
<dbReference type="PDB" id="8UH3">
    <property type="method" value="EM"/>
    <property type="resolution" value="3.31 A"/>
    <property type="chains" value="A=1-354"/>
</dbReference>
<dbReference type="PDB" id="8UTD">
    <property type="method" value="EM"/>
    <property type="resolution" value="3.24 A"/>
    <property type="chains" value="A=1-354"/>
</dbReference>
<dbReference type="PDB" id="8UUJ">
    <property type="method" value="EM"/>
    <property type="resolution" value="2.62 A"/>
    <property type="chains" value="A=1-354"/>
</dbReference>
<dbReference type="PDB" id="8VVE">
    <property type="method" value="EM"/>
    <property type="resolution" value="3.30 A"/>
    <property type="chains" value="B=1-354"/>
</dbReference>
<dbReference type="PDB" id="8VVF">
    <property type="method" value="EM"/>
    <property type="resolution" value="3.00 A"/>
    <property type="chains" value="B=1-354"/>
</dbReference>
<dbReference type="PDB" id="8VVG">
    <property type="method" value="EM"/>
    <property type="resolution" value="3.30 A"/>
    <property type="chains" value="B=1-354"/>
</dbReference>
<dbReference type="PDB" id="8VY7">
    <property type="method" value="EM"/>
    <property type="resolution" value="2.68 A"/>
    <property type="chains" value="A=1-354"/>
</dbReference>
<dbReference type="PDB" id="8W8B">
    <property type="method" value="EM"/>
    <property type="resolution" value="3.00 A"/>
    <property type="chains" value="A=1-354"/>
</dbReference>
<dbReference type="PDB" id="8W8R">
    <property type="method" value="EM"/>
    <property type="resolution" value="3.30 A"/>
    <property type="chains" value="A=1-349"/>
</dbReference>
<dbReference type="PDB" id="8WC3">
    <property type="method" value="EM"/>
    <property type="resolution" value="3.00 A"/>
    <property type="chains" value="A=1-19, A=61-181, A=229-242"/>
</dbReference>
<dbReference type="PDB" id="8WC4">
    <property type="method" value="EM"/>
    <property type="resolution" value="3.10 A"/>
    <property type="chains" value="A=1-19, A=61-181, A=229-242"/>
</dbReference>
<dbReference type="PDB" id="8WC5">
    <property type="method" value="EM"/>
    <property type="resolution" value="3.30 A"/>
    <property type="chains" value="A=1-19, A=61-181, A=229-242"/>
</dbReference>
<dbReference type="PDB" id="8WC6">
    <property type="method" value="EM"/>
    <property type="resolution" value="3.20 A"/>
    <property type="chains" value="A=1-19, A=61-181, A=229-242"/>
</dbReference>
<dbReference type="PDB" id="8WC7">
    <property type="method" value="EM"/>
    <property type="resolution" value="3.10 A"/>
    <property type="chains" value="A=1-19, A=61-181, A=229-242"/>
</dbReference>
<dbReference type="PDB" id="8WC8">
    <property type="method" value="EM"/>
    <property type="resolution" value="2.90 A"/>
    <property type="chains" value="A=4-19, A=61-181, A=229-242"/>
</dbReference>
<dbReference type="PDB" id="8WCA">
    <property type="method" value="EM"/>
    <property type="resolution" value="3.48 A"/>
    <property type="chains" value="C=1-349"/>
</dbReference>
<dbReference type="PDB" id="8WG8">
    <property type="method" value="EM"/>
    <property type="resolution" value="2.71 A"/>
    <property type="chains" value="A=4-19, A=61-181"/>
</dbReference>
<dbReference type="PDB" id="8WOG">
    <property type="method" value="EM"/>
    <property type="resolution" value="2.97 A"/>
    <property type="chains" value="C=2-354"/>
</dbReference>
<dbReference type="PDB" id="8WP1">
    <property type="method" value="EM"/>
    <property type="resolution" value="3.15 A"/>
    <property type="chains" value="C=2-354"/>
</dbReference>
<dbReference type="PDB" id="8WRB">
    <property type="method" value="EM"/>
    <property type="resolution" value="2.91 A"/>
    <property type="chains" value="A=1-354"/>
</dbReference>
<dbReference type="PDB" id="8WSS">
    <property type="method" value="EM"/>
    <property type="resolution" value="3.01 A"/>
    <property type="chains" value="A=1-354"/>
</dbReference>
<dbReference type="PDB" id="8WW2">
    <property type="method" value="EM"/>
    <property type="resolution" value="2.79 A"/>
    <property type="chains" value="A=1-32"/>
</dbReference>
<dbReference type="PDB" id="8WWH">
    <property type="method" value="EM"/>
    <property type="resolution" value="2.84 A"/>
    <property type="chains" value="A=1-354"/>
</dbReference>
<dbReference type="PDB" id="8WWI">
    <property type="method" value="EM"/>
    <property type="resolution" value="3.43 A"/>
    <property type="chains" value="A=1-354"/>
</dbReference>
<dbReference type="PDB" id="8WWJ">
    <property type="method" value="EM"/>
    <property type="resolution" value="3.03 A"/>
    <property type="chains" value="A=1-354"/>
</dbReference>
<dbReference type="PDB" id="8WWK">
    <property type="method" value="EM"/>
    <property type="resolution" value="2.61 A"/>
    <property type="chains" value="A=1-354"/>
</dbReference>
<dbReference type="PDB" id="8WWL">
    <property type="method" value="EM"/>
    <property type="resolution" value="2.78 A"/>
    <property type="chains" value="A=1-354"/>
</dbReference>
<dbReference type="PDB" id="8WWM">
    <property type="method" value="EM"/>
    <property type="resolution" value="2.81 A"/>
    <property type="chains" value="A=1-354"/>
</dbReference>
<dbReference type="PDB" id="8WWN">
    <property type="method" value="EM"/>
    <property type="resolution" value="2.65 A"/>
    <property type="chains" value="A=1-354"/>
</dbReference>
<dbReference type="PDB" id="8X3L">
    <property type="method" value="EM"/>
    <property type="resolution" value="3.13 A"/>
    <property type="chains" value="A=1-354"/>
</dbReference>
<dbReference type="PDB" id="8XBE">
    <property type="method" value="EM"/>
    <property type="resolution" value="3.40 A"/>
    <property type="chains" value="B=1-354"/>
</dbReference>
<dbReference type="PDB" id="8XBH">
    <property type="method" value="EM"/>
    <property type="resolution" value="2.83 A"/>
    <property type="chains" value="A=1-354"/>
</dbReference>
<dbReference type="PDB" id="8XGM">
    <property type="method" value="EM"/>
    <property type="resolution" value="3.29 A"/>
    <property type="chains" value="C=1-354"/>
</dbReference>
<dbReference type="PDB" id="8XGU">
    <property type="method" value="EM"/>
    <property type="resolution" value="3.00 A"/>
    <property type="chains" value="C=4-354"/>
</dbReference>
<dbReference type="PDB" id="8XML">
    <property type="method" value="EM"/>
    <property type="resolution" value="2.58 A"/>
    <property type="chains" value="A=1-354"/>
</dbReference>
<dbReference type="PDB" id="8XOR">
    <property type="method" value="EM"/>
    <property type="resolution" value="3.00 A"/>
    <property type="chains" value="A=1-353"/>
</dbReference>
<dbReference type="PDB" id="8XOS">
    <property type="method" value="EM"/>
    <property type="resolution" value="3.20 A"/>
    <property type="chains" value="A=2-354"/>
</dbReference>
<dbReference type="PDB" id="8XQE">
    <property type="method" value="EM"/>
    <property type="resolution" value="3.48 A"/>
    <property type="chains" value="A=1-354"/>
</dbReference>
<dbReference type="PDB" id="8XQF">
    <property type="method" value="EM"/>
    <property type="resolution" value="3.13 A"/>
    <property type="chains" value="A=1-354"/>
</dbReference>
<dbReference type="PDB" id="8XQN">
    <property type="method" value="EM"/>
    <property type="resolution" value="3.05 A"/>
    <property type="chains" value="A=1-354"/>
</dbReference>
<dbReference type="PDB" id="8XQO">
    <property type="method" value="EM"/>
    <property type="resolution" value="2.77 A"/>
    <property type="chains" value="A=1-354"/>
</dbReference>
<dbReference type="PDB" id="8XQS">
    <property type="method" value="EM"/>
    <property type="resolution" value="3.30 A"/>
    <property type="chains" value="A=1-354"/>
</dbReference>
<dbReference type="PDB" id="8XQT">
    <property type="method" value="EM"/>
    <property type="resolution" value="2.94 A"/>
    <property type="chains" value="A=1-354"/>
</dbReference>
<dbReference type="PDB" id="8XWP">
    <property type="method" value="EM"/>
    <property type="resolution" value="3.21 A"/>
    <property type="chains" value="A=1-354"/>
</dbReference>
<dbReference type="PDB" id="8XWQ">
    <property type="method" value="EM"/>
    <property type="resolution" value="4.60 A"/>
    <property type="chains" value="A=1-354"/>
</dbReference>
<dbReference type="PDB" id="8XXU">
    <property type="method" value="EM"/>
    <property type="resolution" value="2.54 A"/>
    <property type="chains" value="B=1-354"/>
</dbReference>
<dbReference type="PDB" id="8XXV">
    <property type="method" value="EM"/>
    <property type="resolution" value="2.33 A"/>
    <property type="chains" value="B=1-354"/>
</dbReference>
<dbReference type="PDB" id="8XYD">
    <property type="method" value="EM"/>
    <property type="resolution" value="2.90 A"/>
    <property type="chains" value="D=2-354"/>
</dbReference>
<dbReference type="PDB" id="8XZF">
    <property type="method" value="EM"/>
    <property type="resolution" value="3.00 A"/>
    <property type="chains" value="A=1-354"/>
</dbReference>
<dbReference type="PDB" id="8XZG">
    <property type="method" value="EM"/>
    <property type="resolution" value="3.20 A"/>
    <property type="chains" value="A=1-354"/>
</dbReference>
<dbReference type="PDB" id="8XZH">
    <property type="method" value="EM"/>
    <property type="resolution" value="2.60 A"/>
    <property type="chains" value="A=1-354"/>
</dbReference>
<dbReference type="PDB" id="8XZI">
    <property type="method" value="EM"/>
    <property type="resolution" value="2.70 A"/>
    <property type="chains" value="A=1-354"/>
</dbReference>
<dbReference type="PDB" id="8XZJ">
    <property type="method" value="EM"/>
    <property type="resolution" value="3.00 A"/>
    <property type="chains" value="A=1-354"/>
</dbReference>
<dbReference type="PDB" id="8Y01">
    <property type="method" value="EM"/>
    <property type="resolution" value="2.48 A"/>
    <property type="chains" value="A=1-354"/>
</dbReference>
<dbReference type="PDB" id="8Y62">
    <property type="method" value="EM"/>
    <property type="resolution" value="3.20 A"/>
    <property type="chains" value="A=1-354"/>
</dbReference>
<dbReference type="PDB" id="8Y63">
    <property type="method" value="EM"/>
    <property type="resolution" value="3.20 A"/>
    <property type="chains" value="A=1-354"/>
</dbReference>
<dbReference type="PDB" id="8YH0">
    <property type="method" value="EM"/>
    <property type="resolution" value="2.86 A"/>
    <property type="chains" value="A/G=3-354"/>
</dbReference>
<dbReference type="PDB" id="8YH2">
    <property type="method" value="EM"/>
    <property type="resolution" value="3.27 A"/>
    <property type="chains" value="A/G=3-354"/>
</dbReference>
<dbReference type="PDB" id="8YIC">
    <property type="method" value="EM"/>
    <property type="resolution" value="3.47 A"/>
    <property type="chains" value="A=1-354"/>
</dbReference>
<dbReference type="PDB" id="8YKV">
    <property type="method" value="EM"/>
    <property type="resolution" value="2.48 A"/>
    <property type="chains" value="A=1-354"/>
</dbReference>
<dbReference type="PDB" id="8YKW">
    <property type="method" value="EM"/>
    <property type="resolution" value="2.75 A"/>
    <property type="chains" value="A=1-354"/>
</dbReference>
<dbReference type="PDB" id="8YKX">
    <property type="method" value="EM"/>
    <property type="resolution" value="2.69 A"/>
    <property type="chains" value="A=1-354"/>
</dbReference>
<dbReference type="PDB" id="8YN5">
    <property type="method" value="EM"/>
    <property type="resolution" value="2.70 A"/>
    <property type="chains" value="A=1-354"/>
</dbReference>
<dbReference type="PDB" id="8YN6">
    <property type="method" value="EM"/>
    <property type="resolution" value="2.77 A"/>
    <property type="chains" value="A=1-354"/>
</dbReference>
<dbReference type="PDB" id="8YN9">
    <property type="method" value="EM"/>
    <property type="resolution" value="2.30 A"/>
    <property type="chains" value="A=1-354"/>
</dbReference>
<dbReference type="PDB" id="8YNA">
    <property type="method" value="EM"/>
    <property type="resolution" value="2.63 A"/>
    <property type="chains" value="A=1-354"/>
</dbReference>
<dbReference type="PDB" id="8YUT">
    <property type="method" value="EM"/>
    <property type="resolution" value="2.70 A"/>
    <property type="chains" value="A=61-181"/>
</dbReference>
<dbReference type="PDB" id="8YUU">
    <property type="method" value="EM"/>
    <property type="resolution" value="2.70 A"/>
    <property type="chains" value="A=1-354"/>
</dbReference>
<dbReference type="PDB" id="8YUV">
    <property type="method" value="EM"/>
    <property type="resolution" value="3.00 A"/>
    <property type="chains" value="A=1-354"/>
</dbReference>
<dbReference type="PDB" id="8Z7J">
    <property type="method" value="EM"/>
    <property type="resolution" value="3.12 A"/>
    <property type="chains" value="A=1-354"/>
</dbReference>
<dbReference type="PDB" id="8ZBE">
    <property type="method" value="EM"/>
    <property type="resolution" value="3.24 A"/>
    <property type="chains" value="B=1-354"/>
</dbReference>
<dbReference type="PDB" id="8ZCJ">
    <property type="method" value="EM"/>
    <property type="resolution" value="3.09 A"/>
    <property type="chains" value="B=1-354"/>
</dbReference>
<dbReference type="PDB" id="8ZJD">
    <property type="method" value="EM"/>
    <property type="resolution" value="3.06 A"/>
    <property type="chains" value="A=1-28"/>
</dbReference>
<dbReference type="PDB" id="8ZJE">
    <property type="method" value="EM"/>
    <property type="resolution" value="3.07 A"/>
    <property type="chains" value="A=2-28"/>
</dbReference>
<dbReference type="PDB" id="8ZJG">
    <property type="method" value="EM"/>
    <property type="resolution" value="3.18 A"/>
    <property type="chains" value="C=4-354"/>
</dbReference>
<dbReference type="PDB" id="8ZQE">
    <property type="method" value="EM"/>
    <property type="resolution" value="2.90 A"/>
    <property type="chains" value="A=1-354"/>
</dbReference>
<dbReference type="PDB" id="9AST">
    <property type="method" value="EM"/>
    <property type="resolution" value="3.07 A"/>
    <property type="chains" value="A=1-354"/>
</dbReference>
<dbReference type="PDB" id="9AVG">
    <property type="method" value="EM"/>
    <property type="resolution" value="3.60 A"/>
    <property type="chains" value="A=1-53, A=229-242"/>
</dbReference>
<dbReference type="PDB" id="9AYF">
    <property type="method" value="EM"/>
    <property type="resolution" value="3.60 A"/>
    <property type="chains" value="A=1-57, A=181-354"/>
</dbReference>
<dbReference type="PDB" id="9B54">
    <property type="method" value="EM"/>
    <property type="resolution" value="2.86 A"/>
    <property type="chains" value="A=1-354"/>
</dbReference>
<dbReference type="PDB" id="9B65">
    <property type="method" value="EM"/>
    <property type="resolution" value="3.03 A"/>
    <property type="chains" value="A=1-354"/>
</dbReference>
<dbReference type="PDB" id="9BQJ">
    <property type="method" value="EM"/>
    <property type="resolution" value="3.30 A"/>
    <property type="chains" value="A=1-354"/>
</dbReference>
<dbReference type="PDB" id="9D61">
    <property type="method" value="EM"/>
    <property type="resolution" value="3.58 A"/>
    <property type="chains" value="B=1-354"/>
</dbReference>
<dbReference type="PDB" id="9EPP">
    <property type="method" value="EM"/>
    <property type="resolution" value="4.06 A"/>
    <property type="chains" value="A=3-354"/>
</dbReference>
<dbReference type="PDB" id="9EPQ">
    <property type="method" value="EM"/>
    <property type="resolution" value="4.15 A"/>
    <property type="chains" value="A=3-354"/>
</dbReference>
<dbReference type="PDB" id="9EPR">
    <property type="method" value="EM"/>
    <property type="resolution" value="4.90 A"/>
    <property type="chains" value="A=1-354"/>
</dbReference>
<dbReference type="PDB" id="9ERX">
    <property type="method" value="EM"/>
    <property type="resolution" value="2.90 A"/>
    <property type="chains" value="A=2-354"/>
</dbReference>
<dbReference type="PDB" id="9IJ9">
    <property type="method" value="EM"/>
    <property type="resolution" value="2.70 A"/>
    <property type="chains" value="A=1-354"/>
</dbReference>
<dbReference type="PDB" id="9IQT">
    <property type="method" value="EM"/>
    <property type="resolution" value="2.90 A"/>
    <property type="chains" value="A=2-353"/>
</dbReference>
<dbReference type="PDB" id="9IVG">
    <property type="method" value="EM"/>
    <property type="resolution" value="3.00 A"/>
    <property type="chains" value="A=1-19, A=61-181, A=229-242"/>
</dbReference>
<dbReference type="PDB" id="9IVM">
    <property type="method" value="EM"/>
    <property type="resolution" value="3.22 A"/>
    <property type="chains" value="A=4-19, A=61-181, A=229-242"/>
</dbReference>
<dbReference type="PDB" id="9IYB">
    <property type="method" value="EM"/>
    <property type="resolution" value="2.82 A"/>
    <property type="chains" value="B=1-354"/>
</dbReference>
<dbReference type="PDB" id="9IZF">
    <property type="method" value="EM"/>
    <property type="resolution" value="3.14 A"/>
    <property type="chains" value="A=1-354"/>
</dbReference>
<dbReference type="PDB" id="9J1P">
    <property type="method" value="EM"/>
    <property type="resolution" value="2.99 A"/>
    <property type="chains" value="A=4-19, A=61-181, A=229-242"/>
</dbReference>
<dbReference type="PDB" id="9K1C">
    <property type="method" value="EM"/>
    <property type="resolution" value="3.20 A"/>
    <property type="chains" value="A=1-354"/>
</dbReference>
<dbReference type="PDB" id="9K1D">
    <property type="method" value="EM"/>
    <property type="resolution" value="3.34 A"/>
    <property type="chains" value="A=1-354"/>
</dbReference>
<dbReference type="PDB" id="9K26">
    <property type="method" value="EM"/>
    <property type="resolution" value="3.00 A"/>
    <property type="chains" value="C=4-354"/>
</dbReference>
<dbReference type="PDB" id="9L3W">
    <property type="method" value="EM"/>
    <property type="resolution" value="3.50 A"/>
    <property type="chains" value="A=1-354"/>
</dbReference>
<dbReference type="PDB" id="9L3Y">
    <property type="method" value="EM"/>
    <property type="resolution" value="3.60 A"/>
    <property type="chains" value="A=1-354"/>
</dbReference>
<dbReference type="PDBsum" id="1KJY"/>
<dbReference type="PDBsum" id="1Y3A"/>
<dbReference type="PDBsum" id="2G83"/>
<dbReference type="PDBsum" id="2GTP"/>
<dbReference type="PDBsum" id="2IK8"/>
<dbReference type="PDBsum" id="2OM2"/>
<dbReference type="PDBsum" id="2XNS"/>
<dbReference type="PDBsum" id="3ONW"/>
<dbReference type="PDBsum" id="3QE0"/>
<dbReference type="PDBsum" id="3QI2"/>
<dbReference type="PDBsum" id="3UMR"/>
<dbReference type="PDBsum" id="3UMS"/>
<dbReference type="PDBsum" id="4G5Q"/>
<dbReference type="PDBsum" id="5JS7"/>
<dbReference type="PDBsum" id="5JS8"/>
<dbReference type="PDBsum" id="5TDH"/>
<dbReference type="PDBsum" id="6CMO"/>
<dbReference type="PDBsum" id="6CRK"/>
<dbReference type="PDBsum" id="6DDE"/>
<dbReference type="PDBsum" id="6DDF"/>
<dbReference type="PDBsum" id="6KPF"/>
<dbReference type="PDBsum" id="6KPG"/>
<dbReference type="PDBsum" id="6LFM"/>
<dbReference type="PDBsum" id="6LFO"/>
<dbReference type="PDBsum" id="6LML"/>
<dbReference type="PDBsum" id="6N4B"/>
<dbReference type="PDBsum" id="6OMM"/>
<dbReference type="PDBsum" id="6OS9"/>
<dbReference type="PDBsum" id="6OSA"/>
<dbReference type="PDBsum" id="6OT0"/>
<dbReference type="PDBsum" id="6PB0"/>
<dbReference type="PDBsum" id="6PB1"/>
<dbReference type="PDBsum" id="6PT0"/>
<dbReference type="PDBsum" id="6QNO"/>
<dbReference type="PDBsum" id="6VU8"/>
<dbReference type="PDBsum" id="6XBJ"/>
<dbReference type="PDBsum" id="6XBK"/>
<dbReference type="PDBsum" id="6XBL"/>
<dbReference type="PDBsum" id="6XBM"/>
<dbReference type="PDBsum" id="7CMU"/>
<dbReference type="PDBsum" id="7CMV"/>
<dbReference type="PDBsum" id="7DB6"/>
<dbReference type="PDBsum" id="7DW9"/>
<dbReference type="PDBsum" id="7E2X"/>
<dbReference type="PDBsum" id="7E2Y"/>
<dbReference type="PDBsum" id="7E2Z"/>
<dbReference type="PDBsum" id="7E32"/>
<dbReference type="PDBsum" id="7E33"/>
<dbReference type="PDBsum" id="7E9G"/>
<dbReference type="PDBsum" id="7EB2"/>
<dbReference type="PDBsum" id="7EJX"/>
<dbReference type="PDBsum" id="7EO2"/>
<dbReference type="PDBsum" id="7EO4"/>
<dbReference type="PDBsum" id="7EUO"/>
<dbReference type="PDBsum" id="7EVY"/>
<dbReference type="PDBsum" id="7EVZ"/>
<dbReference type="PDBsum" id="7EW0"/>
<dbReference type="PDBsum" id="7EW1"/>
<dbReference type="PDBsum" id="7EW2"/>
<dbReference type="PDBsum" id="7EW3"/>
<dbReference type="PDBsum" id="7EW4"/>
<dbReference type="PDBsum" id="7EW7"/>
<dbReference type="PDBsum" id="7EXD"/>
<dbReference type="PDBsum" id="7EZH"/>
<dbReference type="PDBsum" id="7EZK"/>
<dbReference type="PDBsum" id="7EZM"/>
<dbReference type="PDBsum" id="7F1Q"/>
<dbReference type="PDBsum" id="7F1R"/>
<dbReference type="PDBsum" id="7F1S"/>
<dbReference type="PDBsum" id="7F4D"/>
<dbReference type="PDBsum" id="7F4F"/>
<dbReference type="PDBsum" id="7F4H"/>
<dbReference type="PDBsum" id="7F4I"/>
<dbReference type="PDBsum" id="7JHJ"/>
<dbReference type="PDBsum" id="7JVR"/>
<dbReference type="PDBsum" id="7L0P"/>
<dbReference type="PDBsum" id="7L0Q"/>
<dbReference type="PDBsum" id="7L0R"/>
<dbReference type="PDBsum" id="7L0S"/>
<dbReference type="PDBsum" id="7MTS"/>
<dbReference type="PDBsum" id="7NA7"/>
<dbReference type="PDBsum" id="7NA8"/>
<dbReference type="PDBsum" id="7O7F"/>
<dbReference type="PDBsum" id="7P02"/>
<dbReference type="PDBsum" id="7RKM"/>
<dbReference type="PDBsum" id="7RKN"/>
<dbReference type="PDBsum" id="7RKX"/>
<dbReference type="PDBsum" id="7RKY"/>
<dbReference type="PDBsum" id="7S8M"/>
<dbReference type="PDBsum" id="7S8O"/>
<dbReference type="PDBsum" id="7SBF"/>
<dbReference type="PDBsum" id="7SCG"/>
<dbReference type="PDBsum" id="7SQO"/>
<dbReference type="PDBsum" id="7T2G"/>
<dbReference type="PDBsum" id="7T2H"/>
<dbReference type="PDBsum" id="7T6B"/>
<dbReference type="PDBsum" id="7T6S"/>
<dbReference type="PDBsum" id="7T6T"/>
<dbReference type="PDBsum" id="7T6U"/>
<dbReference type="PDBsum" id="7T6V"/>
<dbReference type="PDBsum" id="7TRK"/>
<dbReference type="PDBsum" id="7TRP"/>
<dbReference type="PDBsum" id="7TRQ"/>
<dbReference type="PDBsum" id="7TRS"/>
<dbReference type="PDBsum" id="7TUZ"/>
<dbReference type="PDBsum" id="7U2K"/>
<dbReference type="PDBsum" id="7U2L"/>
<dbReference type="PDBsum" id="7V68"/>
<dbReference type="PDBsum" id="7V69"/>
<dbReference type="PDBsum" id="7V6A"/>
<dbReference type="PDBsum" id="7V9L"/>
<dbReference type="PDBsum" id="7VAB"/>
<dbReference type="PDBsum" id="7VDH"/>
<dbReference type="PDBsum" id="7VDL"/>
<dbReference type="PDBsum" id="7VDM"/>
<dbReference type="PDBsum" id="7VFX"/>
<dbReference type="PDBsum" id="7VGX"/>
<dbReference type="PDBsum" id="7VGY"/>
<dbReference type="PDBsum" id="7VGZ"/>
<dbReference type="PDBsum" id="7VH0"/>
<dbReference type="PDBsum" id="7VIE"/>
<dbReference type="PDBsum" id="7VIF"/>
<dbReference type="PDBsum" id="7VIG"/>
<dbReference type="PDBsum" id="7VIH"/>
<dbReference type="PDBsum" id="7VKT"/>
<dbReference type="PDBsum" id="7VL8"/>
<dbReference type="PDBsum" id="7VL9"/>
<dbReference type="PDBsum" id="7VLA"/>
<dbReference type="PDBsum" id="7VUG"/>
<dbReference type="PDBsum" id="7VUY"/>
<dbReference type="PDBsum" id="7VUZ"/>
<dbReference type="PDBsum" id="7VV3"/>
<dbReference type="PDBsum" id="7VV5"/>
<dbReference type="PDBsum" id="7W0L"/>
<dbReference type="PDBsum" id="7W0M"/>
<dbReference type="PDBsum" id="7W0N"/>
<dbReference type="PDBsum" id="7W0O"/>
<dbReference type="PDBsum" id="7W0P"/>
<dbReference type="PDBsum" id="7WF7"/>
<dbReference type="PDBsum" id="7WIC"/>
<dbReference type="PDBsum" id="7WIG"/>
<dbReference type="PDBsum" id="7WJ5"/>
<dbReference type="PDBsum" id="7WQ3"/>
<dbReference type="PDBsum" id="7WU4"/>
<dbReference type="PDBsum" id="7WU5"/>
<dbReference type="PDBsum" id="7WU9"/>
<dbReference type="PDBsum" id="7WUI"/>
<dbReference type="PDBsum" id="7WUJ"/>
<dbReference type="PDBsum" id="7WVU"/>
<dbReference type="PDBsum" id="7WYB"/>
<dbReference type="PDBsum" id="7WZ4"/>
<dbReference type="PDBsum" id="7X2V"/>
<dbReference type="PDBsum" id="7X5H"/>
<dbReference type="PDBsum" id="7X9A"/>
<dbReference type="PDBsum" id="7X9B"/>
<dbReference type="PDBsum" id="7X9C"/>
<dbReference type="PDBsum" id="7X9Y"/>
<dbReference type="PDBsum" id="7XA3"/>
<dbReference type="PDBsum" id="7XAT"/>
<dbReference type="PDBsum" id="7XAU"/>
<dbReference type="PDBsum" id="7XAV"/>
<dbReference type="PDBsum" id="7XBW"/>
<dbReference type="PDBsum" id="7XBX"/>
<dbReference type="PDBsum" id="7XK2"/>
<dbReference type="PDBsum" id="7XK8"/>
<dbReference type="PDBsum" id="7XMR"/>
<dbReference type="PDBsum" id="7XMS"/>
<dbReference type="PDBsum" id="7XMT"/>
<dbReference type="PDBsum" id="7XTA"/>
<dbReference type="PDBsum" id="7XXH"/>
<dbReference type="PDBsum" id="7Y12"/>
<dbReference type="PDBsum" id="7Y15"/>
<dbReference type="PDBsum" id="7Y1F"/>
<dbReference type="PDBsum" id="7Y64"/>
<dbReference type="PDBsum" id="7Y65"/>
<dbReference type="PDBsum" id="7Y66"/>
<dbReference type="PDBsum" id="7Y67"/>
<dbReference type="PDBsum" id="7Y89"/>
<dbReference type="PDBsum" id="7YAC"/>
<dbReference type="PDBsum" id="7YAE"/>
<dbReference type="PDBsum" id="7YDJ"/>
<dbReference type="PDBsum" id="7YDP"/>
<dbReference type="PDBsum" id="7YKD"/>
<dbReference type="PDBsum" id="7YON"/>
<dbReference type="PDBsum" id="7YOO"/>
<dbReference type="PDBsum" id="7YU3"/>
<dbReference type="PDBsum" id="7YU5"/>
<dbReference type="PDBsum" id="7YU6"/>
<dbReference type="PDBsum" id="7YU7"/>
<dbReference type="PDBsum" id="7YU8"/>
<dbReference type="PDBsum" id="8DZP"/>
<dbReference type="PDBsum" id="8EF5"/>
<dbReference type="PDBsum" id="8EF6"/>
<dbReference type="PDBsum" id="8EFB"/>
<dbReference type="PDBsum" id="8EFL"/>
<dbReference type="PDBsum" id="8EFO"/>
<dbReference type="PDBsum" id="8EFQ"/>
<dbReference type="PDBsum" id="8F7Q"/>
<dbReference type="PDBsum" id="8F7R"/>
<dbReference type="PDBsum" id="8F7S"/>
<dbReference type="PDBsum" id="8F7W"/>
<dbReference type="PDBsum" id="8F7X"/>
<dbReference type="PDBsum" id="8FEG"/>
<dbReference type="PDBsum" id="8FY8"/>
<dbReference type="PDBsum" id="8FYE"/>
<dbReference type="PDBsum" id="8FYL"/>
<dbReference type="PDBsum" id="8FYT"/>
<dbReference type="PDBsum" id="8FYX"/>
<dbReference type="PDBsum" id="8G05"/>
<dbReference type="PDBsum" id="8G59"/>
<dbReference type="PDBsum" id="8G94"/>
<dbReference type="PDBsum" id="8GAG"/>
<dbReference type="PDBsum" id="8GCM"/>
<dbReference type="PDBsum" id="8GCP"/>
<dbReference type="PDBsum" id="8GDC"/>
<dbReference type="PDBsum" id="8GHV"/>
<dbReference type="PDBsum" id="8GUQ"/>
<dbReference type="PDBsum" id="8GUR"/>
<dbReference type="PDBsum" id="8GUS"/>
<dbReference type="PDBsum" id="8GUT"/>
<dbReference type="PDBsum" id="8H2G"/>
<dbReference type="PDBsum" id="8H4I"/>
<dbReference type="PDBsum" id="8HBD"/>
<dbReference type="PDBsum" id="8HK2"/>
<dbReference type="PDBsum" id="8HK3"/>
<dbReference type="PDBsum" id="8HK5"/>
<dbReference type="PDBsum" id="8HN8"/>
<dbReference type="PDBsum" id="8HNK"/>
<dbReference type="PDBsum" id="8HNL"/>
<dbReference type="PDBsum" id="8HNM"/>
<dbReference type="PDBsum" id="8HOC"/>
<dbReference type="PDBsum" id="8HQE"/>
<dbReference type="PDBsum" id="8HQM"/>
<dbReference type="PDBsum" id="8HQN"/>
<dbReference type="PDBsum" id="8HS3"/>
<dbReference type="PDBsum" id="8HSC"/>
<dbReference type="PDBsum" id="8HVI"/>
<dbReference type="PDBsum" id="8I7V"/>
<dbReference type="PDBsum" id="8I7W"/>
<dbReference type="PDBsum" id="8IA8"/>
<dbReference type="PDBsum" id="8IC0"/>
<dbReference type="PDBsum" id="8ID3"/>
<dbReference type="PDBsum" id="8ID4"/>
<dbReference type="PDBsum" id="8ID6"/>
<dbReference type="PDBsum" id="8ID8"/>
<dbReference type="PDBsum" id="8ID9"/>
<dbReference type="PDBsum" id="8IHB"/>
<dbReference type="PDBsum" id="8IHF"/>
<dbReference type="PDBsum" id="8IHH"/>
<dbReference type="PDBsum" id="8IHI"/>
<dbReference type="PDBsum" id="8IHJ"/>
<dbReference type="PDBsum" id="8IJ3"/>
<dbReference type="PDBsum" id="8IJA"/>
<dbReference type="PDBsum" id="8IJB"/>
<dbReference type="PDBsum" id="8IJD"/>
<dbReference type="PDBsum" id="8IKG"/>
<dbReference type="PDBsum" id="8IKH"/>
<dbReference type="PDBsum" id="8INR"/>
<dbReference type="PDBsum" id="8IOC"/>
<dbReference type="PDBsum" id="8IOD"/>
<dbReference type="PDBsum" id="8IRS"/>
<dbReference type="PDBsum" id="8IRT"/>
<dbReference type="PDBsum" id="8IRV"/>
<dbReference type="PDBsum" id="8IU2"/>
<dbReference type="PDBsum" id="8IW4"/>
<dbReference type="PDBsum" id="8IW7"/>
<dbReference type="PDBsum" id="8IW9"/>
<dbReference type="PDBsum" id="8IY5"/>
<dbReference type="PDBsum" id="8IZ4"/>
<dbReference type="PDBsum" id="8J18"/>
<dbReference type="PDBsum" id="8J19"/>
<dbReference type="PDBsum" id="8J1A"/>
<dbReference type="PDBsum" id="8J20"/>
<dbReference type="PDBsum" id="8J21"/>
<dbReference type="PDBsum" id="8J22"/>
<dbReference type="PDBsum" id="8J23"/>
<dbReference type="PDBsum" id="8J24"/>
<dbReference type="PDBsum" id="8J6I"/>
<dbReference type="PDBsum" id="8J6J"/>
<dbReference type="PDBsum" id="8J6L"/>
<dbReference type="PDBsum" id="8J6P"/>
<dbReference type="PDBsum" id="8J6Q"/>
<dbReference type="PDBsum" id="8J6R"/>
<dbReference type="PDBsum" id="8JD3"/>
<dbReference type="PDBsum" id="8JD5"/>
<dbReference type="PDBsum" id="8JEF"/>
<dbReference type="PDBsum" id="8JEI"/>
<dbReference type="PDBsum" id="8JGB"/>
<dbReference type="PDBsum" id="8JGG"/>
<dbReference type="PDBsum" id="8JHY"/>
<dbReference type="PDBsum" id="8JII"/>
<dbReference type="PDBsum" id="8JIL"/>
<dbReference type="PDBsum" id="8JIM"/>
<dbReference type="PDBsum" id="8JIP"/>
<dbReference type="PDBsum" id="8JIR"/>
<dbReference type="PDBsum" id="8JIS"/>
<dbReference type="PDBsum" id="8JJP"/>
<dbReference type="PDBsum" id="8JLJ"/>
<dbReference type="PDBsum" id="8JLK"/>
<dbReference type="PDBsum" id="8JLR"/>
<dbReference type="PDBsum" id="8JPN"/>
<dbReference type="PDBsum" id="8JR9"/>
<dbReference type="PDBsum" id="8JSO"/>
<dbReference type="PDBsum" id="8JSP"/>
<dbReference type="PDBsum" id="8JT6"/>
<dbReference type="PDBsum" id="8JXT"/>
<dbReference type="PDBsum" id="8JXV"/>
<dbReference type="PDBsum" id="8JXW"/>
<dbReference type="PDBsum" id="8JXX"/>
<dbReference type="PDBsum" id="8JZ7"/>
<dbReference type="PDBsum" id="8K2X"/>
<dbReference type="PDBsum" id="8K3Z"/>
<dbReference type="PDBsum" id="8K4N"/>
<dbReference type="PDBsum" id="8K4O"/>
<dbReference type="PDBsum" id="8K4P"/>
<dbReference type="PDBsum" id="8KFX"/>
<dbReference type="PDBsum" id="8KFY"/>
<dbReference type="PDBsum" id="8KFZ"/>
<dbReference type="PDBsum" id="8P12"/>
<dbReference type="PDBsum" id="8P13"/>
<dbReference type="PDBsum" id="8P15"/>
<dbReference type="PDBsum" id="8PJK"/>
<dbReference type="PDBsum" id="8PKM"/>
<dbReference type="PDBsum" id="8SAI"/>
<dbReference type="PDBsum" id="8SG1"/>
<dbReference type="PDBsum" id="8U1U"/>
<dbReference type="PDBsum" id="8U4N"/>
<dbReference type="PDBsum" id="8U4O"/>
<dbReference type="PDBsum" id="8U4P"/>
<dbReference type="PDBsum" id="8U4Q"/>
<dbReference type="PDBsum" id="8UGY"/>
<dbReference type="PDBsum" id="8UH3"/>
<dbReference type="PDBsum" id="8UTD"/>
<dbReference type="PDBsum" id="8UUJ"/>
<dbReference type="PDBsum" id="8VVE"/>
<dbReference type="PDBsum" id="8VVF"/>
<dbReference type="PDBsum" id="8VVG"/>
<dbReference type="PDBsum" id="8VY7"/>
<dbReference type="PDBsum" id="8W8B"/>
<dbReference type="PDBsum" id="8W8R"/>
<dbReference type="PDBsum" id="8WC3"/>
<dbReference type="PDBsum" id="8WC4"/>
<dbReference type="PDBsum" id="8WC5"/>
<dbReference type="PDBsum" id="8WC6"/>
<dbReference type="PDBsum" id="8WC7"/>
<dbReference type="PDBsum" id="8WC8"/>
<dbReference type="PDBsum" id="8WCA"/>
<dbReference type="PDBsum" id="8WG8"/>
<dbReference type="PDBsum" id="8WOG"/>
<dbReference type="PDBsum" id="8WP1"/>
<dbReference type="PDBsum" id="8WRB"/>
<dbReference type="PDBsum" id="8WSS"/>
<dbReference type="PDBsum" id="8WW2"/>
<dbReference type="PDBsum" id="8WWH"/>
<dbReference type="PDBsum" id="8WWI"/>
<dbReference type="PDBsum" id="8WWJ"/>
<dbReference type="PDBsum" id="8WWK"/>
<dbReference type="PDBsum" id="8WWL"/>
<dbReference type="PDBsum" id="8WWM"/>
<dbReference type="PDBsum" id="8WWN"/>
<dbReference type="PDBsum" id="8X3L"/>
<dbReference type="PDBsum" id="8XBE"/>
<dbReference type="PDBsum" id="8XBH"/>
<dbReference type="PDBsum" id="8XGM"/>
<dbReference type="PDBsum" id="8XGU"/>
<dbReference type="PDBsum" id="8XML"/>
<dbReference type="PDBsum" id="8XOR"/>
<dbReference type="PDBsum" id="8XOS"/>
<dbReference type="PDBsum" id="8XQE"/>
<dbReference type="PDBsum" id="8XQF"/>
<dbReference type="PDBsum" id="8XQN"/>
<dbReference type="PDBsum" id="8XQO"/>
<dbReference type="PDBsum" id="8XQS"/>
<dbReference type="PDBsum" id="8XQT"/>
<dbReference type="PDBsum" id="8XWP"/>
<dbReference type="PDBsum" id="8XWQ"/>
<dbReference type="PDBsum" id="8XXU"/>
<dbReference type="PDBsum" id="8XXV"/>
<dbReference type="PDBsum" id="8XYD"/>
<dbReference type="PDBsum" id="8XZF"/>
<dbReference type="PDBsum" id="8XZG"/>
<dbReference type="PDBsum" id="8XZH"/>
<dbReference type="PDBsum" id="8XZI"/>
<dbReference type="PDBsum" id="8XZJ"/>
<dbReference type="PDBsum" id="8Y01"/>
<dbReference type="PDBsum" id="8Y62"/>
<dbReference type="PDBsum" id="8Y63"/>
<dbReference type="PDBsum" id="8YH0"/>
<dbReference type="PDBsum" id="8YH2"/>
<dbReference type="PDBsum" id="8YIC"/>
<dbReference type="PDBsum" id="8YKV"/>
<dbReference type="PDBsum" id="8YKW"/>
<dbReference type="PDBsum" id="8YKX"/>
<dbReference type="PDBsum" id="8YN5"/>
<dbReference type="PDBsum" id="8YN6"/>
<dbReference type="PDBsum" id="8YN9"/>
<dbReference type="PDBsum" id="8YNA"/>
<dbReference type="PDBsum" id="8YUT"/>
<dbReference type="PDBsum" id="8YUU"/>
<dbReference type="PDBsum" id="8YUV"/>
<dbReference type="PDBsum" id="8Z7J"/>
<dbReference type="PDBsum" id="8ZBE"/>
<dbReference type="PDBsum" id="8ZCJ"/>
<dbReference type="PDBsum" id="8ZJD"/>
<dbReference type="PDBsum" id="8ZJE"/>
<dbReference type="PDBsum" id="8ZJG"/>
<dbReference type="PDBsum" id="8ZQE"/>
<dbReference type="PDBsum" id="9AST"/>
<dbReference type="PDBsum" id="9AVG"/>
<dbReference type="PDBsum" id="9AYF"/>
<dbReference type="PDBsum" id="9B54"/>
<dbReference type="PDBsum" id="9B65"/>
<dbReference type="PDBsum" id="9BQJ"/>
<dbReference type="PDBsum" id="9D61"/>
<dbReference type="PDBsum" id="9EPP"/>
<dbReference type="PDBsum" id="9EPQ"/>
<dbReference type="PDBsum" id="9EPR"/>
<dbReference type="PDBsum" id="9ERX"/>
<dbReference type="PDBsum" id="9IJ9"/>
<dbReference type="PDBsum" id="9IQT"/>
<dbReference type="PDBsum" id="9IVG"/>
<dbReference type="PDBsum" id="9IVM"/>
<dbReference type="PDBsum" id="9IYB"/>
<dbReference type="PDBsum" id="9IZF"/>
<dbReference type="PDBsum" id="9J1P"/>
<dbReference type="PDBsum" id="9K1C"/>
<dbReference type="PDBsum" id="9K1D"/>
<dbReference type="PDBsum" id="9K26"/>
<dbReference type="PDBsum" id="9L3W"/>
<dbReference type="PDBsum" id="9L3Y"/>
<dbReference type="EMDB" id="EMD-0339"/>
<dbReference type="EMDB" id="EMD-0744"/>
<dbReference type="EMDB" id="EMD-0745"/>
<dbReference type="EMDB" id="EMD-0877"/>
<dbReference type="EMDB" id="EMD-0879"/>
<dbReference type="EMDB" id="EMD-0918"/>
<dbReference type="EMDB" id="EMD-12746"/>
<dbReference type="EMDB" id="EMD-17343"/>
<dbReference type="EMDB" id="EMD-17344"/>
<dbReference type="EMDB" id="EMD-17345"/>
<dbReference type="EMDB" id="EMD-17712"/>
<dbReference type="EMDB" id="EMD-17747"/>
<dbReference type="EMDB" id="EMD-19882"/>
<dbReference type="EMDB" id="EMD-19883"/>
<dbReference type="EMDB" id="EMD-19884"/>
<dbReference type="EMDB" id="EMD-19929"/>
<dbReference type="EMDB" id="EMD-20126"/>
<dbReference type="EMDB" id="EMD-20180"/>
<dbReference type="EMDB" id="EMD-20181"/>
<dbReference type="EMDB" id="EMD-20190"/>
<dbReference type="EMDB" id="EMD-20470"/>
<dbReference type="EMDB" id="EMD-21388"/>
<dbReference type="EMDB" id="EMD-22117"/>
<dbReference type="EMDB" id="EMD-22118"/>
<dbReference type="EMDB" id="EMD-22119"/>
<dbReference type="EMDB" id="EMD-22120"/>
<dbReference type="EMDB" id="EMD-22338"/>
<dbReference type="EMDB" id="EMD-22511"/>
<dbReference type="EMDB" id="EMD-23099"/>
<dbReference type="EMDB" id="EMD-23100"/>
<dbReference type="EMDB" id="EMD-23101"/>
<dbReference type="EMDB" id="EMD-23102"/>
<dbReference type="EMDB" id="EMD-23996"/>
<dbReference type="EMDB" id="EMD-24267"/>
<dbReference type="EMDB" id="EMD-24268"/>
<dbReference type="EMDB" id="EMD-24500"/>
<dbReference type="EMDB" id="EMD-24501"/>
<dbReference type="EMDB" id="EMD-24506"/>
<dbReference type="EMDB" id="EMD-24507"/>
<dbReference type="EMDB" id="EMD-24897"/>
<dbReference type="EMDB" id="EMD-24899"/>
<dbReference type="EMDB" id="EMD-24978"/>
<dbReference type="EMDB" id="EMD-25034"/>
<dbReference type="EMDB" id="EMD-25389"/>
<dbReference type="EMDB" id="EMD-25612"/>
<dbReference type="EMDB" id="EMD-25613"/>
<dbReference type="EMDB" id="EMD-25726"/>
<dbReference type="EMDB" id="EMD-25727"/>
<dbReference type="EMDB" id="EMD-25728"/>
<dbReference type="EMDB" id="EMD-25729"/>
<dbReference type="EMDB" id="EMD-26099"/>
<dbReference type="EMDB" id="EMD-26100"/>
<dbReference type="EMDB" id="EMD-26101"/>
<dbReference type="EMDB" id="EMD-26102"/>
<dbReference type="EMDB" id="EMD-26104"/>
<dbReference type="EMDB" id="EMD-26136"/>
<dbReference type="EMDB" id="EMD-26313"/>
<dbReference type="EMDB" id="EMD-26314"/>
<dbReference type="EMDB" id="EMD-27804"/>
<dbReference type="EMDB" id="EMD-28066"/>
<dbReference type="EMDB" id="EMD-28069"/>
<dbReference type="EMDB" id="EMD-28077"/>
<dbReference type="EMDB" id="EMD-28085"/>
<dbReference type="EMDB" id="EMD-28086"/>
<dbReference type="EMDB" id="EMD-28088"/>
<dbReference type="EMDB" id="EMD-28907"/>
<dbReference type="EMDB" id="EMD-28908"/>
<dbReference type="EMDB" id="EMD-28909"/>
<dbReference type="EMDB" id="EMD-28911"/>
<dbReference type="EMDB" id="EMD-28912"/>
<dbReference type="EMDB" id="EMD-29026"/>
<dbReference type="EMDB" id="EMD-29560"/>
<dbReference type="EMDB" id="EMD-29571"/>
<dbReference type="EMDB" id="EMD-29585"/>
<dbReference type="EMDB" id="EMD-29597"/>
<dbReference type="EMDB" id="EMD-29599"/>
<dbReference type="EMDB" id="EMD-29645"/>
<dbReference type="EMDB" id="EMD-29861"/>
<dbReference type="EMDB" id="EMD-29898"/>
<dbReference type="EMDB" id="EMD-29935"/>
<dbReference type="EMDB" id="EMD-29940"/>
<dbReference type="EMDB" id="EMD-29946"/>
<dbReference type="EMDB" id="EMD-30410"/>
<dbReference type="EMDB" id="EMD-30411"/>
<dbReference type="EMDB" id="EMD-30627"/>
<dbReference type="EMDB" id="EMD-30971"/>
<dbReference type="EMDB" id="EMD-30972"/>
<dbReference type="EMDB" id="EMD-30973"/>
<dbReference type="EMDB" id="EMD-30974"/>
<dbReference type="EMDB" id="EMD-30975"/>
<dbReference type="EMDB" id="EMD-31031"/>
<dbReference type="EMDB" id="EMD-31049"/>
<dbReference type="EMDB" id="EMD-31164"/>
<dbReference type="EMDB" id="EMD-31225"/>
<dbReference type="EMDB" id="EMD-31226"/>
<dbReference type="EMDB" id="EMD-31323"/>
<dbReference type="EMDB" id="EMD-31341"/>
<dbReference type="EMDB" id="EMD-31342"/>
<dbReference type="EMDB" id="EMD-31343"/>
<dbReference type="EMDB" id="EMD-31344"/>
<dbReference type="EMDB" id="EMD-31345"/>
<dbReference type="EMDB" id="EMD-31346"/>
<dbReference type="EMDB" id="EMD-31347"/>
<dbReference type="EMDB" id="EMD-31349"/>
<dbReference type="EMDB" id="EMD-31371"/>
<dbReference type="EMDB" id="EMD-31387"/>
<dbReference type="EMDB" id="EMD-31422"/>
<dbReference type="EMDB" id="EMD-31423"/>
<dbReference type="EMDB" id="EMD-31424"/>
<dbReference type="EMDB" id="EMD-31448"/>
<dbReference type="EMDB" id="EMD-31449"/>
<dbReference type="EMDB" id="EMD-31452"/>
<dbReference type="EMDB" id="EMD-31453"/>
<dbReference type="EMDB" id="EMD-31738"/>
<dbReference type="EMDB" id="EMD-31739"/>
<dbReference type="EMDB" id="EMD-31740"/>
<dbReference type="EMDB" id="EMD-31918"/>
<dbReference type="EMDB" id="EMD-31922"/>
<dbReference type="EMDB" id="EMD-31923"/>
<dbReference type="EMDB" id="EMD-31962"/>
<dbReference type="EMDB" id="EMD-31979"/>
<dbReference type="EMDB" id="EMD-31980"/>
<dbReference type="EMDB" id="EMD-31981"/>
<dbReference type="EMDB" id="EMD-31982"/>
<dbReference type="EMDB" id="EMD-32006"/>
<dbReference type="EMDB" id="EMD-32007"/>
<dbReference type="EMDB" id="EMD-32008"/>
<dbReference type="EMDB" id="EMD-32009"/>
<dbReference type="EMDB" id="EMD-32018"/>
<dbReference type="EMDB" id="EMD-32020"/>
<dbReference type="EMDB" id="EMD-32021"/>
<dbReference type="EMDB" id="EMD-32022"/>
<dbReference type="EMDB" id="EMD-32127"/>
<dbReference type="EMDB" id="EMD-32131"/>
<dbReference type="EMDB" id="EMD-32132"/>
<dbReference type="EMDB" id="EMD-32136"/>
<dbReference type="EMDB" id="EMD-32138"/>
<dbReference type="EMDB" id="EMD-32243"/>
<dbReference type="EMDB" id="EMD-32244"/>
<dbReference type="EMDB" id="EMD-32245"/>
<dbReference type="EMDB" id="EMD-32246"/>
<dbReference type="EMDB" id="EMD-32247"/>
<dbReference type="EMDB" id="EMD-32461"/>
<dbReference type="EMDB" id="EMD-32528"/>
<dbReference type="EMDB" id="EMD-32529"/>
<dbReference type="EMDB" id="EMD-32543"/>
<dbReference type="EMDB" id="EMD-32698"/>
<dbReference type="EMDB" id="EMD-32819"/>
<dbReference type="EMDB" id="EMD-32820"/>
<dbReference type="EMDB" id="EMD-32824"/>
<dbReference type="EMDB" id="EMD-32858"/>
<dbReference type="EMDB" id="EMD-32890"/>
<dbReference type="EMDB" id="EMD-32904"/>
<dbReference type="EMDB" id="EMD-32905"/>
<dbReference type="EMDB" id="EMD-32932"/>
<dbReference type="EMDB" id="EMD-32972"/>
<dbReference type="EMDB" id="EMD-33014"/>
<dbReference type="EMDB" id="EMD-33069"/>
<dbReference type="EMDB" id="EMD-33070"/>
<dbReference type="EMDB" id="EMD-33071"/>
<dbReference type="EMDB" id="EMD-33085"/>
<dbReference type="EMDB" id="EMD-33086"/>
<dbReference type="EMDB" id="EMD-33098"/>
<dbReference type="EMDB" id="EMD-33099"/>
<dbReference type="EMDB" id="EMD-33100"/>
<dbReference type="EMDB" id="EMD-33107"/>
<dbReference type="EMDB" id="EMD-33108"/>
<dbReference type="EMDB" id="EMD-33241"/>
<dbReference type="EMDB" id="EMD-33247"/>
<dbReference type="EMDB" id="EMD-33302"/>
<dbReference type="EMDB" id="EMD-33303"/>
<dbReference type="EMDB" id="EMD-33304"/>
<dbReference type="EMDB" id="EMD-33444"/>
<dbReference type="EMDB" id="EMD-33554"/>
<dbReference type="EMDB" id="EMD-33557"/>
<dbReference type="EMDB" id="EMD-33562"/>
<dbReference type="EMDB" id="EMD-33633"/>
<dbReference type="EMDB" id="EMD-33634"/>
<dbReference type="EMDB" id="EMD-33635"/>
<dbReference type="EMDB" id="EMD-33636"/>
<dbReference type="EMDB" id="EMD-33682"/>
<dbReference type="EMDB" id="EMD-33708"/>
<dbReference type="EMDB" id="EMD-33710"/>
<dbReference type="EMDB" id="EMD-33749"/>
<dbReference type="EMDB" id="EMD-33891"/>
<dbReference type="EMDB" id="EMD-33984"/>
<dbReference type="EMDB" id="EMD-33985"/>
<dbReference type="EMDB" id="EMD-34097"/>
<dbReference type="EMDB" id="EMD-34099"/>
<dbReference type="EMDB" id="EMD-34100"/>
<dbReference type="EMDB" id="EMD-34101"/>
<dbReference type="EMDB" id="EMD-34102"/>
<dbReference type="EMDB" id="EMD-34276"/>
<dbReference type="EMDB" id="EMD-34277"/>
<dbReference type="EMDB" id="EMD-34278"/>
<dbReference type="EMDB" id="EMD-34279"/>
<dbReference type="EMDB" id="EMD-34437"/>
<dbReference type="EMDB" id="EMD-34619"/>
<dbReference type="EMDB" id="EMD-34842"/>
<dbReference type="EMDB" id="EMD-34843"/>
<dbReference type="EMDB" id="EMD-34846"/>
<dbReference type="EMDB" id="EMD-34908"/>
<dbReference type="EMDB" id="EMD-34914"/>
<dbReference type="EMDB" id="EMD-34915"/>
<dbReference type="EMDB" id="EMD-34916"/>
<dbReference type="EMDB" id="EMD-34925"/>
<dbReference type="EMDB" id="EMD-34948"/>
<dbReference type="EMDB" id="EMD-34950"/>
<dbReference type="EMDB" id="EMD-34951"/>
<dbReference type="EMDB" id="EMD-34984"/>
<dbReference type="EMDB" id="EMD-34993"/>
<dbReference type="EMDB" id="EMD-35044"/>
<dbReference type="EMDB" id="EMD-35234"/>
<dbReference type="EMDB" id="EMD-35235"/>
<dbReference type="EMDB" id="EMD-35298"/>
<dbReference type="EMDB" id="EMD-35351"/>
<dbReference type="EMDB" id="EMD-35356"/>
<dbReference type="EMDB" id="EMD-35357"/>
<dbReference type="EMDB" id="EMD-35358"/>
<dbReference type="EMDB" id="EMD-35359"/>
<dbReference type="EMDB" id="EMD-35360"/>
<dbReference type="EMDB" id="EMD-35442"/>
<dbReference type="EMDB" id="EMD-35443"/>
<dbReference type="EMDB" id="EMD-35444"/>
<dbReference type="EMDB" id="EMD-35445"/>
<dbReference type="EMDB" id="EMD-35446"/>
<dbReference type="EMDB" id="EMD-35463"/>
<dbReference type="EMDB" id="EMD-35483"/>
<dbReference type="EMDB" id="EMD-35484"/>
<dbReference type="EMDB" id="EMD-35485"/>
<dbReference type="EMDB" id="EMD-35511"/>
<dbReference type="EMDB" id="EMD-35512"/>
<dbReference type="EMDB" id="EMD-35684"/>
<dbReference type="EMDB" id="EMD-35685"/>
<dbReference type="EMDB" id="EMD-35714"/>
<dbReference type="EMDB" id="EMD-35814"/>
<dbReference type="EMDB" id="EMD-35833"/>
<dbReference type="EMDB" id="EMD-35913"/>
<dbReference type="EMDB" id="EMD-35914"/>
<dbReference type="EMDB" id="EMD-35915"/>
<dbReference type="EMDB" id="EMD-35940"/>
<dbReference type="EMDB" id="EMD-35941"/>
<dbReference type="EMDB" id="EMD-35942"/>
<dbReference type="EMDB" id="EMD-35943"/>
<dbReference type="EMDB" id="EMD-35944"/>
<dbReference type="EMDB" id="EMD-36005"/>
<dbReference type="EMDB" id="EMD-36006"/>
<dbReference type="EMDB" id="EMD-36007"/>
<dbReference type="EMDB" id="EMD-36010"/>
<dbReference type="EMDB" id="EMD-36011"/>
<dbReference type="EMDB" id="EMD-36012"/>
<dbReference type="EMDB" id="EMD-36174"/>
<dbReference type="EMDB" id="EMD-36176"/>
<dbReference type="EMDB" id="EMD-36186"/>
<dbReference type="EMDB" id="EMD-36189"/>
<dbReference type="EMDB" id="EMD-36229"/>
<dbReference type="EMDB" id="EMD-36233"/>
<dbReference type="EMDB" id="EMD-36300"/>
<dbReference type="EMDB" id="EMD-36312"/>
<dbReference type="EMDB" id="EMD-36317"/>
<dbReference type="EMDB" id="EMD-36318"/>
<dbReference type="EMDB" id="EMD-36364"/>
<dbReference type="EMDB" id="EMD-36484"/>
<dbReference type="EMDB" id="EMD-36626"/>
<dbReference type="EMDB" id="EMD-36634"/>
<dbReference type="EMDB" id="EMD-36712"/>
<dbReference type="EMDB" id="EMD-36714"/>
<dbReference type="EMDB" id="EMD-36715"/>
<dbReference type="EMDB" id="EMD-36716"/>
<dbReference type="EMDB" id="EMD-36736"/>
<dbReference type="EMDB" id="EMD-36842"/>
<dbReference type="EMDB" id="EMD-36869"/>
<dbReference type="EMDB" id="EMD-36887"/>
<dbReference type="EMDB" id="EMD-36889"/>
<dbReference type="EMDB" id="EMD-37207"/>
<dbReference type="EMDB" id="EMD-37208"/>
<dbReference type="EMDB" id="EMD-37209"/>
<dbReference type="EMDB" id="EMD-37351"/>
<dbReference type="EMDB" id="EMD-37357"/>
<dbReference type="EMDB" id="EMD-37686"/>
<dbReference type="EMDB" id="EMD-37707"/>
<dbReference type="EMDB" id="EMD-37771"/>
<dbReference type="EMDB" id="EMD-37823"/>
<dbReference type="EMDB" id="EMD-37888"/>
<dbReference type="EMDB" id="EMD-37889"/>
<dbReference type="EMDB" id="EMD-37890"/>
<dbReference type="EMDB" id="EMD-37891"/>
<dbReference type="EMDB" id="EMD-37892"/>
<dbReference type="EMDB" id="EMD-37893"/>
<dbReference type="EMDB" id="EMD-37894"/>
<dbReference type="EMDB" id="EMD-38039"/>
<dbReference type="EMDB" id="EMD-38215"/>
<dbReference type="EMDB" id="EMD-38218"/>
<dbReference type="EMDB" id="EMD-38328"/>
<dbReference type="EMDB" id="EMD-38332"/>
<dbReference type="EMDB" id="EMD-38481"/>
<dbReference type="EMDB" id="EMD-38539"/>
<dbReference type="EMDB" id="EMD-38582"/>
<dbReference type="EMDB" id="EMD-38583"/>
<dbReference type="EMDB" id="EMD-38587"/>
<dbReference type="EMDB" id="EMD-38588"/>
<dbReference type="EMDB" id="EMD-38740"/>
<dbReference type="EMDB" id="EMD-38741"/>
<dbReference type="EMDB" id="EMD-38761"/>
<dbReference type="EMDB" id="EMD-38762"/>
<dbReference type="EMDB" id="EMD-38769"/>
<dbReference type="EMDB" id="EMD-38794"/>
<dbReference type="EMDB" id="EMD-38795"/>
<dbReference type="EMDB" id="EMD-38796"/>
<dbReference type="EMDB" id="EMD-38797"/>
<dbReference type="EMDB" id="EMD-38798"/>
<dbReference type="EMDB" id="EMD-38800"/>
<dbReference type="EMDB" id="EMD-38964"/>
<dbReference type="EMDB" id="EMD-38965"/>
<dbReference type="EMDB" id="EMD-39278"/>
<dbReference type="EMDB" id="EMD-39279"/>
<dbReference type="EMDB" id="EMD-39313"/>
<dbReference type="EMDB" id="EMD-39373"/>
<dbReference type="EMDB" id="EMD-39374"/>
<dbReference type="EMDB" id="EMD-39375"/>
<dbReference type="EMDB" id="EMD-39415"/>
<dbReference type="EMDB" id="EMD-39416"/>
<dbReference type="EMDB" id="EMD-39419"/>
<dbReference type="EMDB" id="EMD-39420"/>
<dbReference type="EMDB" id="EMD-39583"/>
<dbReference type="EMDB" id="EMD-39584"/>
<dbReference type="EMDB" id="EMD-39816"/>
<dbReference type="EMDB" id="EMD-39901"/>
<dbReference type="EMDB" id="EMD-39931"/>
<dbReference type="EMDB" id="EMD-40052"/>
<dbReference type="EMDB" id="EMD-40270"/>
<dbReference type="EMDB" id="EMD-40450"/>
<dbReference type="EMDB" id="EMD-41829"/>
<dbReference type="EMDB" id="EMD-41888"/>
<dbReference type="EMDB" id="EMD-41889"/>
<dbReference type="EMDB" id="EMD-41890"/>
<dbReference type="EMDB" id="EMD-41891"/>
<dbReference type="EMDB" id="EMD-42241"/>
<dbReference type="EMDB" id="EMD-42245"/>
<dbReference type="EMDB" id="EMD-42538"/>
<dbReference type="EMDB" id="EMD-42587"/>
<dbReference type="EMDB" id="EMD-43556"/>
<dbReference type="EMDB" id="EMD-43557"/>
<dbReference type="EMDB" id="EMD-43558"/>
<dbReference type="EMDB" id="EMD-43647"/>
<dbReference type="EMDB" id="EMD-43825"/>
<dbReference type="EMDB" id="EMD-43990"/>
<dbReference type="EMDB" id="EMD-44199"/>
<dbReference type="EMDB" id="EMD-44247"/>
<dbReference type="EMDB" id="EMD-44812"/>
<dbReference type="EMDB" id="EMD-4598"/>
<dbReference type="EMDB" id="EMD-46585"/>
<dbReference type="EMDB" id="EMD-60144"/>
<dbReference type="EMDB" id="EMD-60384"/>
<dbReference type="EMDB" id="EMD-60626"/>
<dbReference type="EMDB" id="EMD-60795"/>
<dbReference type="EMDB" id="EMD-60994"/>
<dbReference type="EMDB" id="EMD-61031"/>
<dbReference type="EMDB" id="EMD-61971"/>
<dbReference type="EMDB" id="EMD-61972"/>
<dbReference type="EMDB" id="EMD-61991"/>
<dbReference type="EMDB" id="EMD-62793"/>
<dbReference type="EMDB" id="EMD-62798"/>
<dbReference type="EMDB" id="EMD-7517"/>
<dbReference type="EMDB" id="EMD-7868"/>
<dbReference type="EMDB" id="EMD-7869"/>
<dbReference type="SMR" id="P63096"/>
<dbReference type="BioGRID" id="109032">
    <property type="interactions" value="159"/>
</dbReference>
<dbReference type="ComplexPortal" id="CPX-8432">
    <property type="entry name" value="GPR88-Gi1 signaling complex"/>
</dbReference>
<dbReference type="CORUM" id="P63096"/>
<dbReference type="ELM" id="P63096"/>
<dbReference type="FunCoup" id="P63096">
    <property type="interactions" value="3092"/>
</dbReference>
<dbReference type="IntAct" id="P63096">
    <property type="interactions" value="76"/>
</dbReference>
<dbReference type="MINT" id="P63096"/>
<dbReference type="STRING" id="9606.ENSP00000497260"/>
<dbReference type="BindingDB" id="P63096"/>
<dbReference type="ChEMBL" id="CHEMBL4741"/>
<dbReference type="DrugBank" id="DB04315">
    <property type="generic name" value="Guanosine-5'-Diphosphate"/>
</dbReference>
<dbReference type="DrugBank" id="DB04444">
    <property type="generic name" value="Tetrafluoroaluminate Ion"/>
</dbReference>
<dbReference type="GlyGen" id="P63096">
    <property type="glycosylation" value="2 sites, 1 N-linked glycan (1 site), 1 O-linked glycan (1 site)"/>
</dbReference>
<dbReference type="iPTMnet" id="P63096"/>
<dbReference type="PhosphoSitePlus" id="P63096"/>
<dbReference type="SwissPalm" id="P63096"/>
<dbReference type="BioMuta" id="GNAI1"/>
<dbReference type="DMDM" id="52000964"/>
<dbReference type="CPTAC" id="CPTAC-1243"/>
<dbReference type="CPTAC" id="CPTAC-1244"/>
<dbReference type="jPOST" id="P63096"/>
<dbReference type="MassIVE" id="P63096"/>
<dbReference type="PaxDb" id="9606-ENSP00000343027"/>
<dbReference type="PeptideAtlas" id="P63096"/>
<dbReference type="PRIDE" id="P63096"/>
<dbReference type="ProteomicsDB" id="57475">
    <molecule id="P63096-1"/>
</dbReference>
<dbReference type="ProteomicsDB" id="5853"/>
<dbReference type="Pumba" id="P63096"/>
<dbReference type="ABCD" id="P63096">
    <property type="antibodies" value="2 sequenced antibodies"/>
</dbReference>
<dbReference type="Antibodypedia" id="15099">
    <property type="antibodies" value="305 antibodies from 36 providers"/>
</dbReference>
<dbReference type="DNASU" id="2770"/>
<dbReference type="Ensembl" id="ENST00000351004.8">
    <molecule id="P63096-1"/>
    <property type="protein sequence ID" value="ENSP00000343027.3"/>
    <property type="gene ID" value="ENSG00000127955.17"/>
</dbReference>
<dbReference type="Ensembl" id="ENST00000442586.2">
    <molecule id="P63096-1"/>
    <property type="protein sequence ID" value="ENSP00000391439.2"/>
    <property type="gene ID" value="ENSG00000127955.17"/>
</dbReference>
<dbReference type="Ensembl" id="ENST00000457358.7">
    <molecule id="P63096-2"/>
    <property type="protein sequence ID" value="ENSP00000410572.2"/>
    <property type="gene ID" value="ENSG00000127955.17"/>
</dbReference>
<dbReference type="Ensembl" id="ENST00000648098.1">
    <molecule id="P63096-1"/>
    <property type="protein sequence ID" value="ENSP00000497717.1"/>
    <property type="gene ID" value="ENSG00000127955.17"/>
</dbReference>
<dbReference type="Ensembl" id="ENST00000648306.1">
    <molecule id="P63096-1"/>
    <property type="protein sequence ID" value="ENSP00000497773.1"/>
    <property type="gene ID" value="ENSG00000127955.17"/>
</dbReference>
<dbReference type="Ensembl" id="ENST00000648412.1">
    <molecule id="P63096-1"/>
    <property type="protein sequence ID" value="ENSP00000497051.1"/>
    <property type="gene ID" value="ENSG00000127955.17"/>
</dbReference>
<dbReference type="Ensembl" id="ENST00000648476.1">
    <molecule id="P63096-1"/>
    <property type="protein sequence ID" value="ENSP00000497179.1"/>
    <property type="gene ID" value="ENSG00000127955.17"/>
</dbReference>
<dbReference type="Ensembl" id="ENST00000648663.1">
    <molecule id="P63096-1"/>
    <property type="protein sequence ID" value="ENSP00000497379.1"/>
    <property type="gene ID" value="ENSG00000127955.17"/>
</dbReference>
<dbReference type="Ensembl" id="ENST00000648832.1">
    <molecule id="P63096-1"/>
    <property type="protein sequence ID" value="ENSP00000497765.1"/>
    <property type="gene ID" value="ENSG00000127955.17"/>
</dbReference>
<dbReference type="Ensembl" id="ENST00000648877.1">
    <molecule id="P63096-1"/>
    <property type="protein sequence ID" value="ENSP00000497760.1"/>
    <property type="gene ID" value="ENSG00000127955.17"/>
</dbReference>
<dbReference type="Ensembl" id="ENST00000648953.1">
    <molecule id="P63096-1"/>
    <property type="protein sequence ID" value="ENSP00000496800.1"/>
    <property type="gene ID" value="ENSG00000127955.17"/>
</dbReference>
<dbReference type="Ensembl" id="ENST00000649225.1">
    <molecule id="P63096-1"/>
    <property type="protein sequence ID" value="ENSP00000496829.1"/>
    <property type="gene ID" value="ENSG00000127955.17"/>
</dbReference>
<dbReference type="Ensembl" id="ENST00000649267.1">
    <molecule id="P63096-1"/>
    <property type="protein sequence ID" value="ENSP00000497315.1"/>
    <property type="gene ID" value="ENSG00000127955.17"/>
</dbReference>
<dbReference type="Ensembl" id="ENST00000649487.1">
    <molecule id="P63096-1"/>
    <property type="protein sequence ID" value="ENSP00000498091.1"/>
    <property type="gene ID" value="ENSG00000127955.17"/>
</dbReference>
<dbReference type="Ensembl" id="ENST00000649796.2">
    <molecule id="P63096-1"/>
    <property type="protein sequence ID" value="ENSP00000497260.1"/>
    <property type="gene ID" value="ENSG00000127955.17"/>
</dbReference>
<dbReference type="Ensembl" id="ENST00000649855.1">
    <molecule id="P63096-1"/>
    <property type="protein sequence ID" value="ENSP00000497754.1"/>
    <property type="gene ID" value="ENSG00000127955.17"/>
</dbReference>
<dbReference type="GeneID" id="2770"/>
<dbReference type="KEGG" id="hsa:2770"/>
<dbReference type="MANE-Select" id="ENST00000649796.2">
    <property type="protein sequence ID" value="ENSP00000497260.1"/>
    <property type="RefSeq nucleotide sequence ID" value="NM_002069.6"/>
    <property type="RefSeq protein sequence ID" value="NP_002060.4"/>
</dbReference>
<dbReference type="UCSC" id="uc003uhb.2">
    <molecule id="P63096-1"/>
    <property type="organism name" value="human"/>
</dbReference>
<dbReference type="AGR" id="HGNC:4384"/>
<dbReference type="CTD" id="2770"/>
<dbReference type="DisGeNET" id="2770"/>
<dbReference type="GeneCards" id="GNAI1"/>
<dbReference type="GeneReviews" id="GNAI1"/>
<dbReference type="HGNC" id="HGNC:4384">
    <property type="gene designation" value="GNAI1"/>
</dbReference>
<dbReference type="HPA" id="ENSG00000127955">
    <property type="expression patterns" value="Tissue enhanced (brain)"/>
</dbReference>
<dbReference type="MalaCards" id="GNAI1"/>
<dbReference type="MIM" id="139310">
    <property type="type" value="gene"/>
</dbReference>
<dbReference type="MIM" id="619854">
    <property type="type" value="phenotype"/>
</dbReference>
<dbReference type="neXtProt" id="NX_P63096"/>
<dbReference type="OpenTargets" id="ENSG00000127955"/>
<dbReference type="PharmGKB" id="PA172"/>
<dbReference type="VEuPathDB" id="HostDB:ENSG00000127955"/>
<dbReference type="eggNOG" id="KOG0082">
    <property type="taxonomic scope" value="Eukaryota"/>
</dbReference>
<dbReference type="GeneTree" id="ENSGT00940000153567"/>
<dbReference type="HOGENOM" id="CLU_014184_6_0_1"/>
<dbReference type="InParanoid" id="P63096"/>
<dbReference type="OMA" id="CSELEMF"/>
<dbReference type="OrthoDB" id="5817230at2759"/>
<dbReference type="PAN-GO" id="P63096">
    <property type="GO annotations" value="5 GO annotations based on evolutionary models"/>
</dbReference>
<dbReference type="PhylomeDB" id="P63096"/>
<dbReference type="TreeFam" id="TF300673"/>
<dbReference type="PathwayCommons" id="P63096"/>
<dbReference type="Reactome" id="R-HSA-170670">
    <property type="pathway name" value="Adenylate cyclase inhibitory pathway"/>
</dbReference>
<dbReference type="Reactome" id="R-HSA-392170">
    <property type="pathway name" value="ADP signalling through P2Y purinoceptor 12"/>
</dbReference>
<dbReference type="Reactome" id="R-HSA-400042">
    <property type="pathway name" value="Adrenaline,noradrenaline inhibits insulin secretion"/>
</dbReference>
<dbReference type="Reactome" id="R-HSA-418555">
    <property type="pathway name" value="G alpha (s) signalling events"/>
</dbReference>
<dbReference type="Reactome" id="R-HSA-418594">
    <property type="pathway name" value="G alpha (i) signalling events"/>
</dbReference>
<dbReference type="Reactome" id="R-HSA-418597">
    <property type="pathway name" value="G alpha (z) signalling events"/>
</dbReference>
<dbReference type="Reactome" id="R-HSA-422356">
    <property type="pathway name" value="Regulation of insulin secretion"/>
</dbReference>
<dbReference type="Reactome" id="R-HSA-9009391">
    <property type="pathway name" value="Extra-nuclear estrogen signaling"/>
</dbReference>
<dbReference type="Reactome" id="R-HSA-9634597">
    <property type="pathway name" value="GPER1 signaling"/>
</dbReference>
<dbReference type="Reactome" id="R-HSA-9660821">
    <property type="pathway name" value="ADORA2B mediated anti-inflammatory cytokines production"/>
</dbReference>
<dbReference type="SignaLink" id="P63096"/>
<dbReference type="SIGNOR" id="P63096"/>
<dbReference type="BioGRID-ORCS" id="2770">
    <property type="hits" value="10 hits in 1152 CRISPR screens"/>
</dbReference>
<dbReference type="CD-CODE" id="8C2F96ED">
    <property type="entry name" value="Centrosome"/>
</dbReference>
<dbReference type="CD-CODE" id="FB4E32DD">
    <property type="entry name" value="Presynaptic clusters and postsynaptic densities"/>
</dbReference>
<dbReference type="ChiTaRS" id="GNAI1">
    <property type="organism name" value="human"/>
</dbReference>
<dbReference type="EvolutionaryTrace" id="P63096"/>
<dbReference type="GeneWiki" id="GNAI1"/>
<dbReference type="GenomeRNAi" id="2770"/>
<dbReference type="Pharos" id="P63096">
    <property type="development level" value="Tbio"/>
</dbReference>
<dbReference type="PRO" id="PR:P63096"/>
<dbReference type="Proteomes" id="UP000005640">
    <property type="component" value="Chromosome 7"/>
</dbReference>
<dbReference type="RNAct" id="P63096">
    <property type="molecule type" value="protein"/>
</dbReference>
<dbReference type="Bgee" id="ENSG00000127955">
    <property type="expression patterns" value="Expressed in corpus callosum and 200 other cell types or tissues"/>
</dbReference>
<dbReference type="ExpressionAtlas" id="P63096">
    <property type="expression patterns" value="baseline and differential"/>
</dbReference>
<dbReference type="GO" id="GO:0005938">
    <property type="term" value="C:cell cortex"/>
    <property type="evidence" value="ECO:0000314"/>
    <property type="project" value="UniProtKB"/>
</dbReference>
<dbReference type="GO" id="GO:0034451">
    <property type="term" value="C:centriolar satellite"/>
    <property type="evidence" value="ECO:0000314"/>
    <property type="project" value="HPA"/>
</dbReference>
<dbReference type="GO" id="GO:0005813">
    <property type="term" value="C:centrosome"/>
    <property type="evidence" value="ECO:0000314"/>
    <property type="project" value="HPA"/>
</dbReference>
<dbReference type="GO" id="GO:0036064">
    <property type="term" value="C:ciliary basal body"/>
    <property type="evidence" value="ECO:0000314"/>
    <property type="project" value="HPA"/>
</dbReference>
<dbReference type="GO" id="GO:0005737">
    <property type="term" value="C:cytoplasm"/>
    <property type="evidence" value="ECO:0000314"/>
    <property type="project" value="UniProtKB"/>
</dbReference>
<dbReference type="GO" id="GO:0005829">
    <property type="term" value="C:cytosol"/>
    <property type="evidence" value="ECO:0000314"/>
    <property type="project" value="HPA"/>
</dbReference>
<dbReference type="GO" id="GO:0070062">
    <property type="term" value="C:extracellular exosome"/>
    <property type="evidence" value="ECO:0007005"/>
    <property type="project" value="UniProtKB"/>
</dbReference>
<dbReference type="GO" id="GO:0005794">
    <property type="term" value="C:Golgi apparatus"/>
    <property type="evidence" value="ECO:0000314"/>
    <property type="project" value="HPA"/>
</dbReference>
<dbReference type="GO" id="GO:0005834">
    <property type="term" value="C:heterotrimeric G-protein complex"/>
    <property type="evidence" value="ECO:0000314"/>
    <property type="project" value="UniProtKB"/>
</dbReference>
<dbReference type="GO" id="GO:0005765">
    <property type="term" value="C:lysosomal membrane"/>
    <property type="evidence" value="ECO:0007005"/>
    <property type="project" value="UniProtKB"/>
</dbReference>
<dbReference type="GO" id="GO:0030496">
    <property type="term" value="C:midbody"/>
    <property type="evidence" value="ECO:0000314"/>
    <property type="project" value="UniProtKB"/>
</dbReference>
<dbReference type="GO" id="GO:0005730">
    <property type="term" value="C:nucleolus"/>
    <property type="evidence" value="ECO:0000314"/>
    <property type="project" value="HPA"/>
</dbReference>
<dbReference type="GO" id="GO:0005654">
    <property type="term" value="C:nucleoplasm"/>
    <property type="evidence" value="ECO:0000314"/>
    <property type="project" value="HPA"/>
</dbReference>
<dbReference type="GO" id="GO:0005886">
    <property type="term" value="C:plasma membrane"/>
    <property type="evidence" value="ECO:0000314"/>
    <property type="project" value="UniProtKB"/>
</dbReference>
<dbReference type="GO" id="GO:0010855">
    <property type="term" value="F:adenylate cyclase inhibitor activity"/>
    <property type="evidence" value="ECO:0007669"/>
    <property type="project" value="Ensembl"/>
</dbReference>
<dbReference type="GO" id="GO:0010854">
    <property type="term" value="F:adenylate cyclase regulator activity"/>
    <property type="evidence" value="ECO:0000314"/>
    <property type="project" value="UniProt"/>
</dbReference>
<dbReference type="GO" id="GO:0031749">
    <property type="term" value="F:D2 dopamine receptor binding"/>
    <property type="evidence" value="ECO:0000353"/>
    <property type="project" value="ARUK-UCL"/>
</dbReference>
<dbReference type="GO" id="GO:0003925">
    <property type="term" value="F:G protein activity"/>
    <property type="evidence" value="ECO:0000314"/>
    <property type="project" value="UniProtKB"/>
</dbReference>
<dbReference type="GO" id="GO:0001664">
    <property type="term" value="F:G protein-coupled receptor binding"/>
    <property type="evidence" value="ECO:0000250"/>
    <property type="project" value="UniProtKB"/>
</dbReference>
<dbReference type="GO" id="GO:0031821">
    <property type="term" value="F:G protein-coupled serotonin receptor binding"/>
    <property type="evidence" value="ECO:0000318"/>
    <property type="project" value="GO_Central"/>
</dbReference>
<dbReference type="GO" id="GO:0031683">
    <property type="term" value="F:G-protein beta/gamma-subunit complex binding"/>
    <property type="evidence" value="ECO:0000318"/>
    <property type="project" value="GO_Central"/>
</dbReference>
<dbReference type="GO" id="GO:0019003">
    <property type="term" value="F:GDP binding"/>
    <property type="evidence" value="ECO:0000250"/>
    <property type="project" value="UniProtKB"/>
</dbReference>
<dbReference type="GO" id="GO:0005525">
    <property type="term" value="F:GTP binding"/>
    <property type="evidence" value="ECO:0000314"/>
    <property type="project" value="UniProtKB"/>
</dbReference>
<dbReference type="GO" id="GO:0003924">
    <property type="term" value="F:GTPase activity"/>
    <property type="evidence" value="ECO:0000314"/>
    <property type="project" value="UniProt"/>
</dbReference>
<dbReference type="GO" id="GO:0000287">
    <property type="term" value="F:magnesium ion binding"/>
    <property type="evidence" value="ECO:0000250"/>
    <property type="project" value="UniProtKB"/>
</dbReference>
<dbReference type="GO" id="GO:0007193">
    <property type="term" value="P:adenylate cyclase-inhibiting G protein-coupled receptor signaling pathway"/>
    <property type="evidence" value="ECO:0000314"/>
    <property type="project" value="UniProt"/>
</dbReference>
<dbReference type="GO" id="GO:0007198">
    <property type="term" value="P:adenylate cyclase-inhibiting serotonin receptor signaling pathway"/>
    <property type="evidence" value="ECO:0000314"/>
    <property type="project" value="UniProtKB"/>
</dbReference>
<dbReference type="GO" id="GO:0007188">
    <property type="term" value="P:adenylate cyclase-modulating G protein-coupled receptor signaling pathway"/>
    <property type="evidence" value="ECO:0000250"/>
    <property type="project" value="UniProtKB"/>
</dbReference>
<dbReference type="GO" id="GO:0051301">
    <property type="term" value="P:cell division"/>
    <property type="evidence" value="ECO:0000315"/>
    <property type="project" value="UniProtKB"/>
</dbReference>
<dbReference type="GO" id="GO:1904322">
    <property type="term" value="P:cellular response to forskolin"/>
    <property type="evidence" value="ECO:0000250"/>
    <property type="project" value="UniProtKB"/>
</dbReference>
<dbReference type="GO" id="GO:0007186">
    <property type="term" value="P:G protein-coupled receptor signaling pathway"/>
    <property type="evidence" value="ECO:0000250"/>
    <property type="project" value="UniProtKB"/>
</dbReference>
<dbReference type="GO" id="GO:0046676">
    <property type="term" value="P:negative regulation of insulin secretion"/>
    <property type="evidence" value="ECO:0007669"/>
    <property type="project" value="Ensembl"/>
</dbReference>
<dbReference type="GO" id="GO:0045542">
    <property type="term" value="P:positive regulation of cholesterol biosynthetic process"/>
    <property type="evidence" value="ECO:0000314"/>
    <property type="project" value="UniProt"/>
</dbReference>
<dbReference type="GO" id="GO:1904778">
    <property type="term" value="P:positive regulation of protein localization to cell cortex"/>
    <property type="evidence" value="ECO:0000315"/>
    <property type="project" value="UniProtKB"/>
</dbReference>
<dbReference type="GO" id="GO:0060236">
    <property type="term" value="P:regulation of mitotic spindle organization"/>
    <property type="evidence" value="ECO:0000315"/>
    <property type="project" value="UniProtKB"/>
</dbReference>
<dbReference type="GO" id="GO:0043434">
    <property type="term" value="P:response to peptide hormone"/>
    <property type="evidence" value="ECO:0000250"/>
    <property type="project" value="BHF-UCL"/>
</dbReference>
<dbReference type="GO" id="GO:0034695">
    <property type="term" value="P:response to prostaglandin E"/>
    <property type="evidence" value="ECO:0000314"/>
    <property type="project" value="UniProt"/>
</dbReference>
<dbReference type="GO" id="GO:0072678">
    <property type="term" value="P:T cell migration"/>
    <property type="evidence" value="ECO:0000314"/>
    <property type="project" value="UniProt"/>
</dbReference>
<dbReference type="CDD" id="cd00066">
    <property type="entry name" value="G-alpha"/>
    <property type="match status" value="1"/>
</dbReference>
<dbReference type="FunFam" id="1.10.400.10:FF:000001">
    <property type="entry name" value="Guanine nucleotide-binding protein G(I) subunit alpha"/>
    <property type="match status" value="1"/>
</dbReference>
<dbReference type="FunFam" id="3.40.50.300:FF:002487">
    <property type="entry name" value="Guanine nucleotide-binding protein G(i) subunit alpha-1"/>
    <property type="match status" value="1"/>
</dbReference>
<dbReference type="FunFam" id="3.40.50.300:FF:003559">
    <property type="entry name" value="Guanine nucleotide-binding protein G(i) subunit alpha-1"/>
    <property type="match status" value="1"/>
</dbReference>
<dbReference type="Gene3D" id="1.10.400.10">
    <property type="entry name" value="GI Alpha 1, domain 2-like"/>
    <property type="match status" value="1"/>
</dbReference>
<dbReference type="Gene3D" id="3.40.50.300">
    <property type="entry name" value="P-loop containing nucleotide triphosphate hydrolases"/>
    <property type="match status" value="1"/>
</dbReference>
<dbReference type="IDEAL" id="IID00608"/>
<dbReference type="InterPro" id="IPR001408">
    <property type="entry name" value="Gprotein_alpha_I"/>
</dbReference>
<dbReference type="InterPro" id="IPR001019">
    <property type="entry name" value="Gprotein_alpha_su"/>
</dbReference>
<dbReference type="InterPro" id="IPR011025">
    <property type="entry name" value="GproteinA_insert"/>
</dbReference>
<dbReference type="InterPro" id="IPR027417">
    <property type="entry name" value="P-loop_NTPase"/>
</dbReference>
<dbReference type="PANTHER" id="PTHR10218">
    <property type="entry name" value="GTP-BINDING PROTEIN ALPHA SUBUNIT"/>
    <property type="match status" value="1"/>
</dbReference>
<dbReference type="PANTHER" id="PTHR10218:SF359">
    <property type="entry name" value="GUANINE NUCLEOTIDE-BINDING PROTEIN G(I) SUBUNIT ALPHA-1"/>
    <property type="match status" value="1"/>
</dbReference>
<dbReference type="Pfam" id="PF00503">
    <property type="entry name" value="G-alpha"/>
    <property type="match status" value="1"/>
</dbReference>
<dbReference type="PRINTS" id="PR00318">
    <property type="entry name" value="GPROTEINA"/>
</dbReference>
<dbReference type="PRINTS" id="PR00441">
    <property type="entry name" value="GPROTEINAI"/>
</dbReference>
<dbReference type="SMART" id="SM00275">
    <property type="entry name" value="G_alpha"/>
    <property type="match status" value="1"/>
</dbReference>
<dbReference type="SUPFAM" id="SSF52540">
    <property type="entry name" value="P-loop containing nucleoside triphosphate hydrolases"/>
    <property type="match status" value="1"/>
</dbReference>
<dbReference type="SUPFAM" id="SSF47895">
    <property type="entry name" value="Transducin (alpha subunit), insertion domain"/>
    <property type="match status" value="1"/>
</dbReference>
<dbReference type="PROSITE" id="PS51882">
    <property type="entry name" value="G_ALPHA"/>
    <property type="match status" value="1"/>
</dbReference>